<proteinExistence type="evidence at protein level"/>
<organism>
    <name type="scientific">Homo sapiens</name>
    <name type="common">Human</name>
    <dbReference type="NCBI Taxonomy" id="9606"/>
    <lineage>
        <taxon>Eukaryota</taxon>
        <taxon>Metazoa</taxon>
        <taxon>Chordata</taxon>
        <taxon>Craniata</taxon>
        <taxon>Vertebrata</taxon>
        <taxon>Euteleostomi</taxon>
        <taxon>Mammalia</taxon>
        <taxon>Eutheria</taxon>
        <taxon>Euarchontoglires</taxon>
        <taxon>Primates</taxon>
        <taxon>Haplorrhini</taxon>
        <taxon>Catarrhini</taxon>
        <taxon>Hominidae</taxon>
        <taxon>Homo</taxon>
    </lineage>
</organism>
<evidence type="ECO:0000250" key="1">
    <source>
        <dbReference type="UniProtKB" id="P63212"/>
    </source>
</evidence>
<evidence type="ECO:0000269" key="2">
    <source>
    </source>
</evidence>
<evidence type="ECO:0000269" key="3">
    <source>
    </source>
</evidence>
<evidence type="ECO:0000269" key="4">
    <source>
    </source>
</evidence>
<evidence type="ECO:0000269" key="5">
    <source>
    </source>
</evidence>
<evidence type="ECO:0000269" key="6">
    <source>
    </source>
</evidence>
<evidence type="ECO:0000269" key="7">
    <source>
    </source>
</evidence>
<evidence type="ECO:0000269" key="8">
    <source>
    </source>
</evidence>
<evidence type="ECO:0000269" key="9">
    <source>
    </source>
</evidence>
<evidence type="ECO:0000269" key="10">
    <source>
    </source>
</evidence>
<evidence type="ECO:0000269" key="11">
    <source>
    </source>
</evidence>
<evidence type="ECO:0000269" key="12">
    <source>
    </source>
</evidence>
<evidence type="ECO:0000269" key="13">
    <source>
    </source>
</evidence>
<evidence type="ECO:0000269" key="14">
    <source>
    </source>
</evidence>
<evidence type="ECO:0000269" key="15">
    <source>
    </source>
</evidence>
<evidence type="ECO:0000269" key="16">
    <source>
    </source>
</evidence>
<evidence type="ECO:0000269" key="17">
    <source>
    </source>
</evidence>
<evidence type="ECO:0000269" key="18">
    <source>
    </source>
</evidence>
<evidence type="ECO:0000269" key="19">
    <source>
    </source>
</evidence>
<evidence type="ECO:0000269" key="20">
    <source>
    </source>
</evidence>
<evidence type="ECO:0000305" key="21"/>
<evidence type="ECO:0000312" key="22">
    <source>
        <dbReference type="PDB" id="8JSP"/>
    </source>
</evidence>
<evidence type="ECO:0007744" key="23">
    <source>
        <dbReference type="PDB" id="6G79"/>
    </source>
</evidence>
<evidence type="ECO:0007744" key="24">
    <source>
        <dbReference type="PDB" id="7DFL"/>
    </source>
</evidence>
<evidence type="ECO:0007744" key="25">
    <source>
        <dbReference type="PDB" id="7E2X"/>
    </source>
</evidence>
<evidence type="ECO:0007744" key="26">
    <source>
        <dbReference type="PDB" id="7E2Y"/>
    </source>
</evidence>
<evidence type="ECO:0007744" key="27">
    <source>
        <dbReference type="PDB" id="7E2Z"/>
    </source>
</evidence>
<evidence type="ECO:0007744" key="28">
    <source>
        <dbReference type="PDB" id="7E32"/>
    </source>
</evidence>
<evidence type="ECO:0007744" key="29">
    <source>
        <dbReference type="PDB" id="7E33"/>
    </source>
</evidence>
<evidence type="ECO:0007744" key="30">
    <source>
        <dbReference type="PDB" id="7EJX"/>
    </source>
</evidence>
<evidence type="ECO:0007744" key="31">
    <source>
        <dbReference type="PDB" id="7EPT"/>
    </source>
</evidence>
<evidence type="ECO:0007744" key="32">
    <source>
        <dbReference type="PDB" id="7EXD"/>
    </source>
</evidence>
<evidence type="ECO:0007744" key="33">
    <source>
        <dbReference type="PDB" id="7RAN"/>
    </source>
</evidence>
<evidence type="ECO:0007744" key="34">
    <source>
        <dbReference type="PDB" id="7RKX"/>
    </source>
</evidence>
<evidence type="ECO:0007744" key="35">
    <source>
        <dbReference type="PDB" id="7RKY"/>
    </source>
</evidence>
<evidence type="ECO:0007744" key="36">
    <source>
        <dbReference type="PDB" id="7SF7"/>
    </source>
</evidence>
<evidence type="ECO:0007744" key="37">
    <source>
        <dbReference type="PDB" id="7SF8"/>
    </source>
</evidence>
<evidence type="ECO:0007744" key="38">
    <source>
        <dbReference type="PDB" id="7SRR"/>
    </source>
</evidence>
<evidence type="ECO:0007744" key="39">
    <source>
        <dbReference type="PDB" id="7UM5"/>
    </source>
</evidence>
<evidence type="ECO:0007744" key="40">
    <source>
        <dbReference type="PDB" id="7UM6"/>
    </source>
</evidence>
<evidence type="ECO:0007744" key="41">
    <source>
        <dbReference type="PDB" id="7UM7"/>
    </source>
</evidence>
<evidence type="ECO:0007744" key="42">
    <source>
        <dbReference type="PDB" id="7WU2"/>
    </source>
</evidence>
<evidence type="ECO:0007744" key="43">
    <source>
        <dbReference type="PDB" id="7WU3"/>
    </source>
</evidence>
<evidence type="ECO:0007744" key="44">
    <source>
        <dbReference type="PDB" id="7WUI"/>
    </source>
</evidence>
<evidence type="ECO:0007744" key="45">
    <source>
        <dbReference type="PDB" id="7WUQ"/>
    </source>
</evidence>
<evidence type="ECO:0007744" key="46">
    <source>
        <dbReference type="PDB" id="7WZ4"/>
    </source>
</evidence>
<evidence type="ECO:0007744" key="47">
    <source>
        <dbReference type="PDB" id="7X5H"/>
    </source>
</evidence>
<evidence type="ECO:0007744" key="48">
    <source>
        <dbReference type="PDB" id="7XKD"/>
    </source>
</evidence>
<evidence type="ECO:0007744" key="49">
    <source>
        <dbReference type="PDB" id="7XKF"/>
    </source>
</evidence>
<evidence type="ECO:0007744" key="50">
    <source>
        <dbReference type="PDB" id="7XT8"/>
    </source>
</evidence>
<evidence type="ECO:0007744" key="51">
    <source>
        <dbReference type="PDB" id="7XT9"/>
    </source>
</evidence>
<evidence type="ECO:0007744" key="52">
    <source>
        <dbReference type="PDB" id="7YS6"/>
    </source>
</evidence>
<evidence type="ECO:0007744" key="53">
    <source>
        <dbReference type="PDB" id="8JLN"/>
    </source>
</evidence>
<evidence type="ECO:0007744" key="54">
    <source>
        <dbReference type="PDB" id="8JLO"/>
    </source>
</evidence>
<evidence type="ECO:0007744" key="55">
    <source>
        <dbReference type="PDB" id="8JLP"/>
    </source>
</evidence>
<evidence type="ECO:0007744" key="56">
    <source>
        <dbReference type="PDB" id="8JLQ"/>
    </source>
</evidence>
<evidence type="ECO:0007744" key="57">
    <source>
        <dbReference type="PDB" id="8JLR"/>
    </source>
</evidence>
<evidence type="ECO:0007744" key="58">
    <source>
        <dbReference type="PDB" id="8JLZ"/>
    </source>
</evidence>
<evidence type="ECO:0007744" key="59">
    <source>
        <dbReference type="PDB" id="8JT6"/>
    </source>
</evidence>
<evidence type="ECO:0007744" key="60">
    <source>
        <dbReference type="PDB" id="8UHB"/>
    </source>
</evidence>
<evidence type="ECO:0007744" key="61">
    <source>
        <dbReference type="PDB" id="8VY7"/>
    </source>
</evidence>
<evidence type="ECO:0007744" key="62">
    <source>
        <dbReference type="PDB" id="8VY9"/>
    </source>
</evidence>
<evidence type="ECO:0007744" key="63">
    <source>
        <dbReference type="PDB" id="8W87"/>
    </source>
</evidence>
<evidence type="ECO:0007744" key="64">
    <source>
        <dbReference type="PDB" id="8W88"/>
    </source>
</evidence>
<evidence type="ECO:0007744" key="65">
    <source>
        <dbReference type="PDB" id="8W89"/>
    </source>
</evidence>
<evidence type="ECO:0007744" key="66">
    <source>
        <dbReference type="PDB" id="8W8B"/>
    </source>
</evidence>
<evidence type="ECO:0007744" key="67">
    <source>
        <dbReference type="PDB" id="8WC8"/>
    </source>
</evidence>
<evidence type="ECO:0007744" key="68">
    <source>
        <dbReference type="PDB" id="8WCA"/>
    </source>
</evidence>
<evidence type="ECO:0007744" key="69">
    <source>
        <dbReference type="PDB" id="8XQL"/>
    </source>
</evidence>
<evidence type="ECO:0007744" key="70">
    <source>
        <dbReference type="PDB" id="8XQN"/>
    </source>
</evidence>
<evidence type="ECO:0007744" key="71">
    <source>
        <dbReference type="PDB" id="8XQO"/>
    </source>
</evidence>
<evidence type="ECO:0007744" key="72">
    <source>
        <dbReference type="PDB" id="8XQP"/>
    </source>
</evidence>
<evidence type="ECO:0007744" key="73">
    <source>
        <dbReference type="PDB" id="8XQR"/>
    </source>
</evidence>
<evidence type="ECO:0007744" key="74">
    <source>
        <dbReference type="PDB" id="8XQS"/>
    </source>
</evidence>
<evidence type="ECO:0007744" key="75">
    <source>
        <dbReference type="PDB" id="8XQT"/>
    </source>
</evidence>
<evidence type="ECO:0007744" key="76">
    <source>
        <dbReference type="PDB" id="8YKY"/>
    </source>
</evidence>
<evidence type="ECO:0007744" key="77">
    <source>
    </source>
</evidence>
<evidence type="ECO:0007744" key="78">
    <source>
    </source>
</evidence>
<evidence type="ECO:0007829" key="79">
    <source>
        <dbReference type="PDB" id="4KFM"/>
    </source>
</evidence>
<evidence type="ECO:0007829" key="80">
    <source>
        <dbReference type="PDB" id="6CRK"/>
    </source>
</evidence>
<evidence type="ECO:0007829" key="81">
    <source>
        <dbReference type="PDB" id="8EJK"/>
    </source>
</evidence>
<evidence type="ECO:0007829" key="82">
    <source>
        <dbReference type="PDB" id="8F0K"/>
    </source>
</evidence>
<sequence length="71" mass="7850">MASNNTASIAQARKLVEQLKMEANIDRIKVSKAAADLMAYCEAHAKEDPLLTPVPASENPFREKKFFCAIL</sequence>
<gene>
    <name type="primary">GNG2</name>
</gene>
<accession>P59768</accession>
<accession>Q5JPE2</accession>
<accession>Q6P9A9</accession>
<dbReference type="EMBL" id="AF493870">
    <property type="protein sequence ID" value="AAM12584.1"/>
    <property type="molecule type" value="mRNA"/>
</dbReference>
<dbReference type="EMBL" id="AL832878">
    <property type="protein sequence ID" value="CAI46198.1"/>
    <property type="molecule type" value="mRNA"/>
</dbReference>
<dbReference type="EMBL" id="CH471078">
    <property type="protein sequence ID" value="EAW65663.1"/>
    <property type="molecule type" value="Genomic_DNA"/>
</dbReference>
<dbReference type="EMBL" id="BC020774">
    <property type="protein sequence ID" value="AAH20774.1"/>
    <property type="molecule type" value="mRNA"/>
</dbReference>
<dbReference type="EMBL" id="BC060856">
    <property type="protein sequence ID" value="AAH60856.1"/>
    <property type="molecule type" value="mRNA"/>
</dbReference>
<dbReference type="CCDS" id="CCDS32082.1"/>
<dbReference type="PIR" id="JC7290">
    <property type="entry name" value="GNG2"/>
</dbReference>
<dbReference type="RefSeq" id="NP_001230702.1">
    <property type="nucleotide sequence ID" value="NM_001243773.2"/>
</dbReference>
<dbReference type="RefSeq" id="NP_001230703.1">
    <property type="nucleotide sequence ID" value="NM_001243774.2"/>
</dbReference>
<dbReference type="RefSeq" id="NP_001376636.1">
    <property type="nucleotide sequence ID" value="NM_001389707.1"/>
</dbReference>
<dbReference type="RefSeq" id="NP_001376637.1">
    <property type="nucleotide sequence ID" value="NM_001389708.1"/>
</dbReference>
<dbReference type="RefSeq" id="NP_001376638.1">
    <property type="nucleotide sequence ID" value="NM_001389709.1"/>
</dbReference>
<dbReference type="RefSeq" id="NP_001376639.1">
    <property type="nucleotide sequence ID" value="NM_001389710.1"/>
</dbReference>
<dbReference type="RefSeq" id="NP_444292.1">
    <property type="nucleotide sequence ID" value="NM_053064.5"/>
</dbReference>
<dbReference type="RefSeq" id="XP_006720236.1">
    <property type="nucleotide sequence ID" value="XM_006720173.2"/>
</dbReference>
<dbReference type="RefSeq" id="XP_011535148.1">
    <property type="nucleotide sequence ID" value="XM_011536846.2"/>
</dbReference>
<dbReference type="RefSeq" id="XP_016876865.1">
    <property type="nucleotide sequence ID" value="XM_017021376.1"/>
</dbReference>
<dbReference type="RefSeq" id="XP_016876866.1">
    <property type="nucleotide sequence ID" value="XM_017021377.2"/>
</dbReference>
<dbReference type="RefSeq" id="XP_024305401.1">
    <property type="nucleotide sequence ID" value="XM_024449633.2"/>
</dbReference>
<dbReference type="RefSeq" id="XP_024305402.1">
    <property type="nucleotide sequence ID" value="XM_024449634.2"/>
</dbReference>
<dbReference type="RefSeq" id="XP_047287442.1">
    <property type="nucleotide sequence ID" value="XM_047431486.1"/>
</dbReference>
<dbReference type="RefSeq" id="XP_047287443.1">
    <property type="nucleotide sequence ID" value="XM_047431487.1"/>
</dbReference>
<dbReference type="RefSeq" id="XP_047287444.1">
    <property type="nucleotide sequence ID" value="XM_047431488.1"/>
</dbReference>
<dbReference type="RefSeq" id="XP_047287446.1">
    <property type="nucleotide sequence ID" value="XM_047431490.1"/>
</dbReference>
<dbReference type="RefSeq" id="XP_054232206.1">
    <property type="nucleotide sequence ID" value="XM_054376231.1"/>
</dbReference>
<dbReference type="RefSeq" id="XP_054232207.1">
    <property type="nucleotide sequence ID" value="XM_054376232.1"/>
</dbReference>
<dbReference type="RefSeq" id="XP_054232208.1">
    <property type="nucleotide sequence ID" value="XM_054376233.1"/>
</dbReference>
<dbReference type="RefSeq" id="XP_054232209.1">
    <property type="nucleotide sequence ID" value="XM_054376234.1"/>
</dbReference>
<dbReference type="RefSeq" id="XP_054232210.1">
    <property type="nucleotide sequence ID" value="XM_054376235.1"/>
</dbReference>
<dbReference type="RefSeq" id="XP_054232211.1">
    <property type="nucleotide sequence ID" value="XM_054376236.1"/>
</dbReference>
<dbReference type="RefSeq" id="XP_054232212.1">
    <property type="nucleotide sequence ID" value="XM_054376237.1"/>
</dbReference>
<dbReference type="PDB" id="4KFM">
    <property type="method" value="X-ray"/>
    <property type="resolution" value="3.45 A"/>
    <property type="chains" value="G=1-68"/>
</dbReference>
<dbReference type="PDB" id="5HE0">
    <property type="method" value="X-ray"/>
    <property type="resolution" value="2.56 A"/>
    <property type="chains" value="G=1-71"/>
</dbReference>
<dbReference type="PDB" id="5HE1">
    <property type="method" value="X-ray"/>
    <property type="resolution" value="3.15 A"/>
    <property type="chains" value="G=1-71"/>
</dbReference>
<dbReference type="PDB" id="5HE2">
    <property type="method" value="X-ray"/>
    <property type="resolution" value="2.79 A"/>
    <property type="chains" value="G=1-71"/>
</dbReference>
<dbReference type="PDB" id="5HE3">
    <property type="method" value="X-ray"/>
    <property type="resolution" value="2.74 A"/>
    <property type="chains" value="G=1-71"/>
</dbReference>
<dbReference type="PDB" id="5UKK">
    <property type="method" value="X-ray"/>
    <property type="resolution" value="2.60 A"/>
    <property type="chains" value="G=8-64"/>
</dbReference>
<dbReference type="PDB" id="5UKL">
    <property type="method" value="X-ray"/>
    <property type="resolution" value="2.15 A"/>
    <property type="chains" value="G=8-69"/>
</dbReference>
<dbReference type="PDB" id="5UKM">
    <property type="method" value="X-ray"/>
    <property type="resolution" value="3.03 A"/>
    <property type="chains" value="G=1-71"/>
</dbReference>
<dbReference type="PDB" id="5UZ7">
    <property type="method" value="EM"/>
    <property type="resolution" value="4.10 A"/>
    <property type="chains" value="G=1-68"/>
</dbReference>
<dbReference type="PDB" id="6B3J">
    <property type="method" value="EM"/>
    <property type="resolution" value="3.30 A"/>
    <property type="chains" value="G=1-71"/>
</dbReference>
<dbReference type="PDB" id="6CRK">
    <property type="method" value="X-ray"/>
    <property type="resolution" value="2.00 A"/>
    <property type="chains" value="G=1-71"/>
</dbReference>
<dbReference type="PDB" id="6D9H">
    <property type="method" value="EM"/>
    <property type="resolution" value="3.60 A"/>
    <property type="chains" value="G=1-71"/>
</dbReference>
<dbReference type="PDB" id="6DDE">
    <property type="method" value="EM"/>
    <property type="resolution" value="3.50 A"/>
    <property type="chains" value="C=1-71"/>
</dbReference>
<dbReference type="PDB" id="6DDF">
    <property type="method" value="EM"/>
    <property type="resolution" value="3.50 A"/>
    <property type="chains" value="C=1-71"/>
</dbReference>
<dbReference type="PDB" id="6E3Y">
    <property type="method" value="EM"/>
    <property type="resolution" value="3.30 A"/>
    <property type="chains" value="G=1-71"/>
</dbReference>
<dbReference type="PDB" id="6EG8">
    <property type="method" value="X-ray"/>
    <property type="resolution" value="2.80 A"/>
    <property type="chains" value="C/E/G/H=1-71"/>
</dbReference>
<dbReference type="PDB" id="6G79">
    <property type="method" value="EM"/>
    <property type="resolution" value="3.78 A"/>
    <property type="chains" value="G=1-71"/>
</dbReference>
<dbReference type="PDB" id="6GDG">
    <property type="method" value="EM"/>
    <property type="resolution" value="4.11 A"/>
    <property type="chains" value="C=1-71"/>
</dbReference>
<dbReference type="PDB" id="6K41">
    <property type="method" value="EM"/>
    <property type="resolution" value="2.90 A"/>
    <property type="chains" value="G=1-71"/>
</dbReference>
<dbReference type="PDB" id="6K42">
    <property type="method" value="EM"/>
    <property type="resolution" value="4.10 A"/>
    <property type="chains" value="G=1-71"/>
</dbReference>
<dbReference type="PDB" id="6KPF">
    <property type="method" value="EM"/>
    <property type="resolution" value="2.90 A"/>
    <property type="chains" value="C=1-71"/>
</dbReference>
<dbReference type="PDB" id="6KPG">
    <property type="method" value="EM"/>
    <property type="resolution" value="3.00 A"/>
    <property type="chains" value="C=1-71"/>
</dbReference>
<dbReference type="PDB" id="6LFM">
    <property type="method" value="EM"/>
    <property type="resolution" value="3.50 A"/>
    <property type="chains" value="C=1-71"/>
</dbReference>
<dbReference type="PDB" id="6LFO">
    <property type="method" value="EM"/>
    <property type="resolution" value="3.40 A"/>
    <property type="chains" value="C=1-71"/>
</dbReference>
<dbReference type="PDB" id="6LI3">
    <property type="method" value="EM"/>
    <property type="resolution" value="3.32 A"/>
    <property type="chains" value="G=1-71"/>
</dbReference>
<dbReference type="PDB" id="6LMK">
    <property type="method" value="EM"/>
    <property type="resolution" value="3.70 A"/>
    <property type="chains" value="C=1-71"/>
</dbReference>
<dbReference type="PDB" id="6LML">
    <property type="method" value="EM"/>
    <property type="resolution" value="3.90 A"/>
    <property type="chains" value="C=1-71"/>
</dbReference>
<dbReference type="PDB" id="6M1H">
    <property type="method" value="EM"/>
    <property type="resolution" value="3.60 A"/>
    <property type="chains" value="D=1-71"/>
</dbReference>
<dbReference type="PDB" id="6M1I">
    <property type="method" value="EM"/>
    <property type="resolution" value="3.50 A"/>
    <property type="chains" value="D=1-71"/>
</dbReference>
<dbReference type="PDB" id="6M8S">
    <property type="method" value="X-ray"/>
    <property type="resolution" value="3.71 A"/>
    <property type="chains" value="E/F/I/J/L=1-71"/>
</dbReference>
<dbReference type="PDB" id="6N4B">
    <property type="method" value="EM"/>
    <property type="resolution" value="3.00 A"/>
    <property type="chains" value="C=1-71"/>
</dbReference>
<dbReference type="PDB" id="6NI3">
    <property type="method" value="EM"/>
    <property type="resolution" value="3.80 A"/>
    <property type="chains" value="G=1-71"/>
</dbReference>
<dbReference type="PDB" id="6NIY">
    <property type="method" value="EM"/>
    <property type="resolution" value="3.34 A"/>
    <property type="chains" value="G=1-71"/>
</dbReference>
<dbReference type="PDB" id="6OIJ">
    <property type="method" value="EM"/>
    <property type="resolution" value="3.30 A"/>
    <property type="chains" value="G=1-71"/>
</dbReference>
<dbReference type="PDB" id="6OIK">
    <property type="method" value="EM"/>
    <property type="resolution" value="3.60 A"/>
    <property type="chains" value="G=1-71"/>
</dbReference>
<dbReference type="PDB" id="6OMM">
    <property type="method" value="EM"/>
    <property type="resolution" value="3.17 A"/>
    <property type="chains" value="C=2-68"/>
</dbReference>
<dbReference type="PDB" id="6ORV">
    <property type="method" value="EM"/>
    <property type="resolution" value="3.00 A"/>
    <property type="chains" value="GP=1-71"/>
</dbReference>
<dbReference type="PDB" id="6OS9">
    <property type="method" value="EM"/>
    <property type="resolution" value="3.00 A"/>
    <property type="chains" value="C=1-71"/>
</dbReference>
<dbReference type="PDB" id="6OSA">
    <property type="method" value="EM"/>
    <property type="resolution" value="3.00 A"/>
    <property type="chains" value="C=1-71"/>
</dbReference>
<dbReference type="PDB" id="6OT0">
    <property type="method" value="EM"/>
    <property type="resolution" value="3.90 A"/>
    <property type="chains" value="G=1-71"/>
</dbReference>
<dbReference type="PDB" id="6P9X">
    <property type="method" value="EM"/>
    <property type="resolution" value="2.91 A"/>
    <property type="chains" value="G=1-71"/>
</dbReference>
<dbReference type="PDB" id="6P9Y">
    <property type="method" value="EM"/>
    <property type="resolution" value="3.01 A"/>
    <property type="chains" value="G=1-71"/>
</dbReference>
<dbReference type="PDB" id="6PB0">
    <property type="method" value="EM"/>
    <property type="resolution" value="3.00 A"/>
    <property type="chains" value="G=1-71"/>
</dbReference>
<dbReference type="PDB" id="6PB1">
    <property type="method" value="EM"/>
    <property type="resolution" value="2.80 A"/>
    <property type="chains" value="G=1-71"/>
</dbReference>
<dbReference type="PDB" id="6PT0">
    <property type="method" value="EM"/>
    <property type="resolution" value="3.20 A"/>
    <property type="chains" value="C=1-68"/>
</dbReference>
<dbReference type="PDB" id="6UUN">
    <property type="method" value="EM"/>
    <property type="resolution" value="3.00 A"/>
    <property type="chains" value="G=1-71"/>
</dbReference>
<dbReference type="PDB" id="6UUS">
    <property type="method" value="EM"/>
    <property type="resolution" value="2.40 A"/>
    <property type="chains" value="G=1-71"/>
</dbReference>
<dbReference type="PDB" id="6UVA">
    <property type="method" value="EM"/>
    <property type="resolution" value="2.30 A"/>
    <property type="chains" value="G=1-71"/>
</dbReference>
<dbReference type="PDB" id="6VCB">
    <property type="method" value="EM"/>
    <property type="resolution" value="3.30 A"/>
    <property type="chains" value="G=1-71"/>
</dbReference>
<dbReference type="PDB" id="6VMS">
    <property type="method" value="EM"/>
    <property type="resolution" value="3.80 A"/>
    <property type="chains" value="C=2-71"/>
</dbReference>
<dbReference type="PDB" id="6VN7">
    <property type="method" value="EM"/>
    <property type="resolution" value="3.20 A"/>
    <property type="chains" value="G=1-71"/>
</dbReference>
<dbReference type="PDB" id="6WHA">
    <property type="method" value="EM"/>
    <property type="resolution" value="3.36 A"/>
    <property type="chains" value="D=1-71"/>
</dbReference>
<dbReference type="PDB" id="6WHC">
    <property type="method" value="EM"/>
    <property type="resolution" value="3.40 A"/>
    <property type="chains" value="C=1-71"/>
</dbReference>
<dbReference type="PDB" id="6WI9">
    <property type="method" value="EM"/>
    <property type="resolution" value="4.30 A"/>
    <property type="chains" value="G=1-71"/>
</dbReference>
<dbReference type="PDB" id="6WPW">
    <property type="method" value="EM"/>
    <property type="resolution" value="3.10 A"/>
    <property type="chains" value="G=1-71"/>
</dbReference>
<dbReference type="PDB" id="6WWZ">
    <property type="method" value="EM"/>
    <property type="resolution" value="3.34 A"/>
    <property type="chains" value="Y=1-68"/>
</dbReference>
<dbReference type="PDB" id="6WZG">
    <property type="method" value="EM"/>
    <property type="resolution" value="2.30 A"/>
    <property type="chains" value="G=1-71"/>
</dbReference>
<dbReference type="PDB" id="6X18">
    <property type="method" value="EM"/>
    <property type="resolution" value="2.10 A"/>
    <property type="chains" value="G=5-62"/>
</dbReference>
<dbReference type="PDB" id="6X19">
    <property type="method" value="EM"/>
    <property type="resolution" value="2.10 A"/>
    <property type="chains" value="G=5-62"/>
</dbReference>
<dbReference type="PDB" id="6X1A">
    <property type="method" value="EM"/>
    <property type="resolution" value="2.50 A"/>
    <property type="chains" value="G=5-62"/>
</dbReference>
<dbReference type="PDB" id="6XBJ">
    <property type="method" value="EM"/>
    <property type="resolution" value="3.88 A"/>
    <property type="chains" value="G=1-71"/>
</dbReference>
<dbReference type="PDB" id="6XBK">
    <property type="method" value="EM"/>
    <property type="resolution" value="3.24 A"/>
    <property type="chains" value="G=1-71"/>
</dbReference>
<dbReference type="PDB" id="6XBL">
    <property type="method" value="EM"/>
    <property type="resolution" value="3.90 A"/>
    <property type="chains" value="G=1-71"/>
</dbReference>
<dbReference type="PDB" id="6XBM">
    <property type="method" value="EM"/>
    <property type="resolution" value="3.15 A"/>
    <property type="chains" value="G=1-71"/>
</dbReference>
<dbReference type="PDB" id="6XOX">
    <property type="method" value="EM"/>
    <property type="resolution" value="3.10 A"/>
    <property type="chains" value="G=1-71"/>
</dbReference>
<dbReference type="PDB" id="7AUE">
    <property type="method" value="EM"/>
    <property type="resolution" value="2.97 A"/>
    <property type="chains" value="G=1-71"/>
</dbReference>
<dbReference type="PDB" id="7BB6">
    <property type="method" value="EM"/>
    <property type="resolution" value="4.20 A"/>
    <property type="chains" value="F=1-71"/>
</dbReference>
<dbReference type="PDB" id="7BB7">
    <property type="method" value="EM"/>
    <property type="resolution" value="4.40 A"/>
    <property type="chains" value="F=1-71"/>
</dbReference>
<dbReference type="PDB" id="7C2E">
    <property type="method" value="EM"/>
    <property type="resolution" value="4.20 A"/>
    <property type="chains" value="G=1-71"/>
</dbReference>
<dbReference type="PDB" id="7CFM">
    <property type="method" value="EM"/>
    <property type="resolution" value="3.00 A"/>
    <property type="chains" value="G=5-62"/>
</dbReference>
<dbReference type="PDB" id="7CFN">
    <property type="method" value="EM"/>
    <property type="resolution" value="3.00 A"/>
    <property type="chains" value="G=5-62"/>
</dbReference>
<dbReference type="PDB" id="7CKW">
    <property type="method" value="EM"/>
    <property type="resolution" value="3.22 A"/>
    <property type="chains" value="G=1-71"/>
</dbReference>
<dbReference type="PDB" id="7CKX">
    <property type="method" value="EM"/>
    <property type="resolution" value="3.54 A"/>
    <property type="chains" value="G=1-71"/>
</dbReference>
<dbReference type="PDB" id="7CKY">
    <property type="method" value="EM"/>
    <property type="resolution" value="3.20 A"/>
    <property type="chains" value="G=1-71"/>
</dbReference>
<dbReference type="PDB" id="7CKZ">
    <property type="method" value="EM"/>
    <property type="resolution" value="3.10 A"/>
    <property type="chains" value="G=1-71"/>
</dbReference>
<dbReference type="PDB" id="7CMU">
    <property type="method" value="EM"/>
    <property type="resolution" value="3.00 A"/>
    <property type="chains" value="C=1-71"/>
</dbReference>
<dbReference type="PDB" id="7CMV">
    <property type="method" value="EM"/>
    <property type="resolution" value="2.70 A"/>
    <property type="chains" value="C=1-71"/>
</dbReference>
<dbReference type="PDB" id="7CRH">
    <property type="method" value="EM"/>
    <property type="resolution" value="3.30 A"/>
    <property type="chains" value="G=1-71"/>
</dbReference>
<dbReference type="PDB" id="7CX2">
    <property type="method" value="EM"/>
    <property type="resolution" value="2.80 A"/>
    <property type="chains" value="G=1-71"/>
</dbReference>
<dbReference type="PDB" id="7CX3">
    <property type="method" value="EM"/>
    <property type="resolution" value="2.80 A"/>
    <property type="chains" value="G=1-71"/>
</dbReference>
<dbReference type="PDB" id="7CX4">
    <property type="method" value="EM"/>
    <property type="resolution" value="2.90 A"/>
    <property type="chains" value="G=1-71"/>
</dbReference>
<dbReference type="PDB" id="7D76">
    <property type="method" value="EM"/>
    <property type="resolution" value="3.10 A"/>
    <property type="chains" value="G=1-71"/>
</dbReference>
<dbReference type="PDB" id="7D77">
    <property type="method" value="EM"/>
    <property type="resolution" value="2.90 A"/>
    <property type="chains" value="G=1-71"/>
</dbReference>
<dbReference type="PDB" id="7D7M">
    <property type="method" value="EM"/>
    <property type="resolution" value="3.30 A"/>
    <property type="chains" value="C=1-71"/>
</dbReference>
<dbReference type="PDB" id="7DFL">
    <property type="method" value="EM"/>
    <property type="resolution" value="3.30 A"/>
    <property type="chains" value="G=5-62"/>
</dbReference>
<dbReference type="PDB" id="7E14">
    <property type="method" value="EM"/>
    <property type="resolution" value="2.90 A"/>
    <property type="chains" value="G=1-71"/>
</dbReference>
<dbReference type="PDB" id="7E2X">
    <property type="method" value="EM"/>
    <property type="resolution" value="3.00 A"/>
    <property type="chains" value="G=1-71"/>
</dbReference>
<dbReference type="PDB" id="7E2Y">
    <property type="method" value="EM"/>
    <property type="resolution" value="3.00 A"/>
    <property type="chains" value="G=1-71"/>
</dbReference>
<dbReference type="PDB" id="7E2Z">
    <property type="method" value="EM"/>
    <property type="resolution" value="3.10 A"/>
    <property type="chains" value="G=1-71"/>
</dbReference>
<dbReference type="PDB" id="7E32">
    <property type="method" value="EM"/>
    <property type="resolution" value="2.90 A"/>
    <property type="chains" value="G=1-71"/>
</dbReference>
<dbReference type="PDB" id="7E33">
    <property type="method" value="EM"/>
    <property type="resolution" value="2.90 A"/>
    <property type="chains" value="G=1-71"/>
</dbReference>
<dbReference type="PDB" id="7E9G">
    <property type="method" value="EM"/>
    <property type="resolution" value="3.50 A"/>
    <property type="chains" value="C=1-71"/>
</dbReference>
<dbReference type="PDB" id="7E9H">
    <property type="method" value="EM"/>
    <property type="resolution" value="4.00 A"/>
    <property type="chains" value="C=1-71"/>
</dbReference>
<dbReference type="PDB" id="7EB2">
    <property type="method" value="EM"/>
    <property type="resolution" value="3.50 A"/>
    <property type="chains" value="Y=1-71"/>
</dbReference>
<dbReference type="PDB" id="7EJ0">
    <property type="method" value="EM"/>
    <property type="resolution" value="3.20 A"/>
    <property type="chains" value="G=1-71"/>
</dbReference>
<dbReference type="PDB" id="7EJ8">
    <property type="method" value="EM"/>
    <property type="resolution" value="3.00 A"/>
    <property type="chains" value="G=1-71"/>
</dbReference>
<dbReference type="PDB" id="7EJA">
    <property type="method" value="EM"/>
    <property type="resolution" value="3.60 A"/>
    <property type="chains" value="G=1-71"/>
</dbReference>
<dbReference type="PDB" id="7EJK">
    <property type="method" value="EM"/>
    <property type="resolution" value="3.40 A"/>
    <property type="chains" value="G=1-71"/>
</dbReference>
<dbReference type="PDB" id="7EJX">
    <property type="method" value="EM"/>
    <property type="resolution" value="2.40 A"/>
    <property type="chains" value="G=1-71"/>
</dbReference>
<dbReference type="PDB" id="7EO2">
    <property type="method" value="EM"/>
    <property type="resolution" value="2.89 A"/>
    <property type="chains" value="D=1-71"/>
</dbReference>
<dbReference type="PDB" id="7EO4">
    <property type="method" value="EM"/>
    <property type="resolution" value="2.86 A"/>
    <property type="chains" value="D=1-71"/>
</dbReference>
<dbReference type="PDB" id="7EPT">
    <property type="method" value="EM"/>
    <property type="resolution" value="3.00 A"/>
    <property type="chains" value="G=1-71"/>
</dbReference>
<dbReference type="PDB" id="7EUO">
    <property type="method" value="EM"/>
    <property type="resolution" value="2.90 A"/>
    <property type="chains" value="G=1-71"/>
</dbReference>
<dbReference type="PDB" id="7EVY">
    <property type="method" value="EM"/>
    <property type="resolution" value="2.98 A"/>
    <property type="chains" value="C=1-71"/>
</dbReference>
<dbReference type="PDB" id="7EVZ">
    <property type="method" value="EM"/>
    <property type="resolution" value="3.07 A"/>
    <property type="chains" value="C=1-71"/>
</dbReference>
<dbReference type="PDB" id="7EW0">
    <property type="method" value="EM"/>
    <property type="resolution" value="3.42 A"/>
    <property type="chains" value="C=1-71"/>
</dbReference>
<dbReference type="PDB" id="7EW1">
    <property type="method" value="EM"/>
    <property type="resolution" value="3.40 A"/>
    <property type="chains" value="C=1-71"/>
</dbReference>
<dbReference type="PDB" id="7EW2">
    <property type="method" value="EM"/>
    <property type="resolution" value="3.10 A"/>
    <property type="chains" value="C=1-71"/>
</dbReference>
<dbReference type="PDB" id="7EW3">
    <property type="method" value="EM"/>
    <property type="resolution" value="3.10 A"/>
    <property type="chains" value="C=1-71"/>
</dbReference>
<dbReference type="PDB" id="7EW4">
    <property type="method" value="EM"/>
    <property type="resolution" value="3.20 A"/>
    <property type="chains" value="C=1-71"/>
</dbReference>
<dbReference type="PDB" id="7EW7">
    <property type="method" value="EM"/>
    <property type="resolution" value="3.27 A"/>
    <property type="chains" value="C=1-71"/>
</dbReference>
<dbReference type="PDB" id="7EXD">
    <property type="method" value="EM"/>
    <property type="resolution" value="3.40 A"/>
    <property type="chains" value="G=1-71"/>
</dbReference>
<dbReference type="PDB" id="7EZH">
    <property type="method" value="EM"/>
    <property type="resolution" value="3.20 A"/>
    <property type="chains" value="G=1-71"/>
</dbReference>
<dbReference type="PDB" id="7EZK">
    <property type="method" value="EM"/>
    <property type="resolution" value="3.10 A"/>
    <property type="chains" value="G=1-71"/>
</dbReference>
<dbReference type="PDB" id="7EZM">
    <property type="method" value="EM"/>
    <property type="resolution" value="2.90 A"/>
    <property type="chains" value="G=1-71"/>
</dbReference>
<dbReference type="PDB" id="7F0T">
    <property type="method" value="EM"/>
    <property type="resolution" value="3.10 A"/>
    <property type="chains" value="D=1-71"/>
</dbReference>
<dbReference type="PDB" id="7F1O">
    <property type="method" value="EM"/>
    <property type="resolution" value="3.13 A"/>
    <property type="chains" value="D=1-71"/>
</dbReference>
<dbReference type="PDB" id="7F1Q">
    <property type="method" value="EM"/>
    <property type="resolution" value="2.90 A"/>
    <property type="chains" value="C=1-71"/>
</dbReference>
<dbReference type="PDB" id="7F1R">
    <property type="method" value="EM"/>
    <property type="resolution" value="3.00 A"/>
    <property type="chains" value="C=1-71"/>
</dbReference>
<dbReference type="PDB" id="7F1S">
    <property type="method" value="EM"/>
    <property type="resolution" value="2.80 A"/>
    <property type="chains" value="C=1-71"/>
</dbReference>
<dbReference type="PDB" id="7F1Z">
    <property type="method" value="EM"/>
    <property type="resolution" value="3.46 A"/>
    <property type="chains" value="D=1-71"/>
</dbReference>
<dbReference type="PDB" id="7F23">
    <property type="method" value="EM"/>
    <property type="resolution" value="3.58 A"/>
    <property type="chains" value="D=1-71"/>
</dbReference>
<dbReference type="PDB" id="7F24">
    <property type="method" value="EM"/>
    <property type="resolution" value="4.16 A"/>
    <property type="chains" value="D=1-71"/>
</dbReference>
<dbReference type="PDB" id="7F4D">
    <property type="method" value="EM"/>
    <property type="resolution" value="3.00 A"/>
    <property type="chains" value="G=1-71"/>
</dbReference>
<dbReference type="PDB" id="7F4F">
    <property type="method" value="EM"/>
    <property type="resolution" value="2.90 A"/>
    <property type="chains" value="G=1-71"/>
</dbReference>
<dbReference type="PDB" id="7F4H">
    <property type="method" value="EM"/>
    <property type="resolution" value="2.70 A"/>
    <property type="chains" value="G=1-71"/>
</dbReference>
<dbReference type="PDB" id="7F4I">
    <property type="method" value="EM"/>
    <property type="resolution" value="3.10 A"/>
    <property type="chains" value="G=1-71"/>
</dbReference>
<dbReference type="PDB" id="7F53">
    <property type="method" value="EM"/>
    <property type="resolution" value="3.00 A"/>
    <property type="chains" value="G=1-71"/>
</dbReference>
<dbReference type="PDB" id="7F54">
    <property type="method" value="EM"/>
    <property type="resolution" value="3.00 A"/>
    <property type="chains" value="G=1-71"/>
</dbReference>
<dbReference type="PDB" id="7F55">
    <property type="method" value="EM"/>
    <property type="resolution" value="3.10 A"/>
    <property type="chains" value="G=1-71"/>
</dbReference>
<dbReference type="PDB" id="7F58">
    <property type="method" value="EM"/>
    <property type="resolution" value="3.10 A"/>
    <property type="chains" value="G=1-71"/>
</dbReference>
<dbReference type="PDB" id="7F6G">
    <property type="method" value="EM"/>
    <property type="resolution" value="2.90 A"/>
    <property type="chains" value="D=2-71"/>
</dbReference>
<dbReference type="PDB" id="7F6H">
    <property type="method" value="EM"/>
    <property type="resolution" value="2.90 A"/>
    <property type="chains" value="D=2-71"/>
</dbReference>
<dbReference type="PDB" id="7F6I">
    <property type="method" value="EM"/>
    <property type="resolution" value="2.80 A"/>
    <property type="chains" value="D=2-71"/>
</dbReference>
<dbReference type="PDB" id="7F8V">
    <property type="method" value="EM"/>
    <property type="resolution" value="3.30 A"/>
    <property type="chains" value="C=1-71"/>
</dbReference>
<dbReference type="PDB" id="7F8W">
    <property type="method" value="EM"/>
    <property type="resolution" value="3.10 A"/>
    <property type="chains" value="C=1-71"/>
</dbReference>
<dbReference type="PDB" id="7F9Y">
    <property type="method" value="EM"/>
    <property type="resolution" value="2.90 A"/>
    <property type="chains" value="G=1-71"/>
</dbReference>
<dbReference type="PDB" id="7F9Z">
    <property type="method" value="EM"/>
    <property type="resolution" value="3.20 A"/>
    <property type="chains" value="G=1-71"/>
</dbReference>
<dbReference type="PDB" id="7JHJ">
    <property type="method" value="EM"/>
    <property type="resolution" value="3.20 A"/>
    <property type="chains" value="C=2-68"/>
</dbReference>
<dbReference type="PDB" id="7JOZ">
    <property type="method" value="X-ray"/>
    <property type="resolution" value="3.80 A"/>
    <property type="chains" value="G=1-71"/>
</dbReference>
<dbReference type="PDB" id="7JV5">
    <property type="method" value="EM"/>
    <property type="resolution" value="3.00 A"/>
    <property type="chains" value="G=2-68"/>
</dbReference>
<dbReference type="PDB" id="7JVP">
    <property type="method" value="EM"/>
    <property type="resolution" value="2.90 A"/>
    <property type="chains" value="G=2-68"/>
</dbReference>
<dbReference type="PDB" id="7JVQ">
    <property type="method" value="EM"/>
    <property type="resolution" value="3.00 A"/>
    <property type="chains" value="G=2-68"/>
</dbReference>
<dbReference type="PDB" id="7JVR">
    <property type="method" value="EM"/>
    <property type="resolution" value="2.80 A"/>
    <property type="chains" value="C=1-71"/>
</dbReference>
<dbReference type="PDB" id="7K7L">
    <property type="method" value="X-ray"/>
    <property type="resolution" value="2.54 A"/>
    <property type="chains" value="G=6-64"/>
</dbReference>
<dbReference type="PDB" id="7K7Z">
    <property type="method" value="X-ray"/>
    <property type="resolution" value="2.61 A"/>
    <property type="chains" value="G=6-64"/>
</dbReference>
<dbReference type="PDB" id="7KH0">
    <property type="method" value="EM"/>
    <property type="resolution" value="2.80 A"/>
    <property type="chains" value="G=2-68"/>
</dbReference>
<dbReference type="PDB" id="7KI0">
    <property type="method" value="EM"/>
    <property type="resolution" value="2.50 A"/>
    <property type="chains" value="G=5-62"/>
</dbReference>
<dbReference type="PDB" id="7KI1">
    <property type="method" value="EM"/>
    <property type="resolution" value="2.50 A"/>
    <property type="chains" value="G=5-62"/>
</dbReference>
<dbReference type="PDB" id="7L1U">
    <property type="method" value="EM"/>
    <property type="resolution" value="3.20 A"/>
    <property type="chains" value="C=1-71"/>
</dbReference>
<dbReference type="PDB" id="7L1V">
    <property type="method" value="EM"/>
    <property type="resolution" value="3.00 A"/>
    <property type="chains" value="C=1-71"/>
</dbReference>
<dbReference type="PDB" id="7LCI">
    <property type="method" value="EM"/>
    <property type="resolution" value="2.90 A"/>
    <property type="chains" value="G=5-62"/>
</dbReference>
<dbReference type="PDB" id="7LD3">
    <property type="method" value="EM"/>
    <property type="resolution" value="3.20 A"/>
    <property type="chains" value="G=1-71"/>
</dbReference>
<dbReference type="PDB" id="7LD4">
    <property type="method" value="EM"/>
    <property type="resolution" value="3.30 A"/>
    <property type="chains" value="G=1-71"/>
</dbReference>
<dbReference type="PDB" id="7LLL">
    <property type="method" value="EM"/>
    <property type="resolution" value="3.70 A"/>
    <property type="chains" value="G=5-62"/>
</dbReference>
<dbReference type="PDB" id="7LLY">
    <property type="method" value="EM"/>
    <property type="resolution" value="3.30 A"/>
    <property type="chains" value="G=5-62"/>
</dbReference>
<dbReference type="PDB" id="7MBX">
    <property type="method" value="EM"/>
    <property type="resolution" value="1.95 A"/>
    <property type="chains" value="G=1-71"/>
</dbReference>
<dbReference type="PDB" id="7MBY">
    <property type="method" value="EM"/>
    <property type="resolution" value="2.44 A"/>
    <property type="chains" value="G=1-71"/>
</dbReference>
<dbReference type="PDB" id="7MTS">
    <property type="method" value="EM"/>
    <property type="resolution" value="3.20 A"/>
    <property type="chains" value="E=1-71"/>
</dbReference>
<dbReference type="PDB" id="7NA7">
    <property type="method" value="EM"/>
    <property type="resolution" value="2.70 A"/>
    <property type="chains" value="G=1-71"/>
</dbReference>
<dbReference type="PDB" id="7NA8">
    <property type="method" value="EM"/>
    <property type="resolution" value="2.70 A"/>
    <property type="chains" value="G=1-71"/>
</dbReference>
<dbReference type="PDB" id="7P00">
    <property type="method" value="EM"/>
    <property type="resolution" value="2.71 A"/>
    <property type="chains" value="G=1-71"/>
</dbReference>
<dbReference type="PDB" id="7P02">
    <property type="method" value="EM"/>
    <property type="resolution" value="2.87 A"/>
    <property type="chains" value="G=1-71"/>
</dbReference>
<dbReference type="PDB" id="7QVM">
    <property type="method" value="EM"/>
    <property type="resolution" value="3.25 A"/>
    <property type="chains" value="G=1-71"/>
</dbReference>
<dbReference type="PDB" id="7RA3">
    <property type="method" value="EM"/>
    <property type="resolution" value="3.24 A"/>
    <property type="chains" value="G=1-71"/>
</dbReference>
<dbReference type="PDB" id="7RAN">
    <property type="method" value="EM"/>
    <property type="resolution" value="3.45 A"/>
    <property type="chains" value="D=1-71"/>
</dbReference>
<dbReference type="PDB" id="7RBT">
    <property type="method" value="EM"/>
    <property type="resolution" value="3.08 A"/>
    <property type="chains" value="G=1-71"/>
</dbReference>
<dbReference type="PDB" id="7RG9">
    <property type="method" value="EM"/>
    <property type="resolution" value="3.20 A"/>
    <property type="chains" value="G=1-71"/>
</dbReference>
<dbReference type="PDB" id="7RGP">
    <property type="method" value="EM"/>
    <property type="resolution" value="2.90 A"/>
    <property type="chains" value="G=1-71"/>
</dbReference>
<dbReference type="PDB" id="7RKF">
    <property type="method" value="EM"/>
    <property type="resolution" value="4.00 A"/>
    <property type="chains" value="C=2-68"/>
</dbReference>
<dbReference type="PDB" id="7RKM">
    <property type="method" value="EM"/>
    <property type="resolution" value="3.50 A"/>
    <property type="chains" value="C=2-68"/>
</dbReference>
<dbReference type="PDB" id="7RKN">
    <property type="method" value="EM"/>
    <property type="resolution" value="3.60 A"/>
    <property type="chains" value="C=2-68"/>
</dbReference>
<dbReference type="PDB" id="7RKX">
    <property type="method" value="EM"/>
    <property type="resolution" value="3.10 A"/>
    <property type="chains" value="C=2-68"/>
</dbReference>
<dbReference type="PDB" id="7RKY">
    <property type="method" value="EM"/>
    <property type="resolution" value="3.80 A"/>
    <property type="chains" value="C=2-68"/>
</dbReference>
<dbReference type="PDB" id="7RMG">
    <property type="method" value="EM"/>
    <property type="resolution" value="3.00 A"/>
    <property type="chains" value="G=1-68"/>
</dbReference>
<dbReference type="PDB" id="7RMH">
    <property type="method" value="EM"/>
    <property type="resolution" value="3.10 A"/>
    <property type="chains" value="G=1-68"/>
</dbReference>
<dbReference type="PDB" id="7RMI">
    <property type="method" value="EM"/>
    <property type="resolution" value="3.20 A"/>
    <property type="chains" value="G=1-68"/>
</dbReference>
<dbReference type="PDB" id="7RTB">
    <property type="method" value="EM"/>
    <property type="resolution" value="2.14 A"/>
    <property type="chains" value="G=5-62"/>
</dbReference>
<dbReference type="PDB" id="7RYC">
    <property type="method" value="EM"/>
    <property type="resolution" value="2.90 A"/>
    <property type="chains" value="D=1-71"/>
</dbReference>
<dbReference type="PDB" id="7S1M">
    <property type="method" value="EM"/>
    <property type="resolution" value="2.41 A"/>
    <property type="chains" value="G=5-62"/>
</dbReference>
<dbReference type="PDB" id="7S3I">
    <property type="method" value="EM"/>
    <property type="resolution" value="2.51 A"/>
    <property type="chains" value="G=5-62"/>
</dbReference>
<dbReference type="PDB" id="7S8L">
    <property type="method" value="EM"/>
    <property type="resolution" value="2.45 A"/>
    <property type="chains" value="D=1-71"/>
</dbReference>
<dbReference type="PDB" id="7S8M">
    <property type="method" value="EM"/>
    <property type="resolution" value="2.54 A"/>
    <property type="chains" value="D=1-71"/>
</dbReference>
<dbReference type="PDB" id="7S8N">
    <property type="method" value="EM"/>
    <property type="resolution" value="2.90 A"/>
    <property type="chains" value="D=1-71"/>
</dbReference>
<dbReference type="PDB" id="7S8O">
    <property type="method" value="EM"/>
    <property type="resolution" value="2.58 A"/>
    <property type="chains" value="D=1-71"/>
</dbReference>
<dbReference type="PDB" id="7S8P">
    <property type="method" value="EM"/>
    <property type="resolution" value="2.60 A"/>
    <property type="chains" value="D=1-71"/>
</dbReference>
<dbReference type="PDB" id="7SBF">
    <property type="method" value="EM"/>
    <property type="resolution" value="2.90 A"/>
    <property type="chains" value="C=1-71"/>
</dbReference>
<dbReference type="PDB" id="7SCG">
    <property type="method" value="EM"/>
    <property type="resolution" value="3.00 A"/>
    <property type="chains" value="C=1-71"/>
</dbReference>
<dbReference type="PDB" id="7SF7">
    <property type="method" value="EM"/>
    <property type="resolution" value="2.90 A"/>
    <property type="chains" value="D=1-71"/>
</dbReference>
<dbReference type="PDB" id="7SF8">
    <property type="method" value="EM"/>
    <property type="resolution" value="2.70 A"/>
    <property type="chains" value="D=1-71"/>
</dbReference>
<dbReference type="PDB" id="7SR8">
    <property type="method" value="EM"/>
    <property type="resolution" value="3.30 A"/>
    <property type="chains" value="G=2-71"/>
</dbReference>
<dbReference type="PDB" id="7SRR">
    <property type="method" value="EM"/>
    <property type="resolution" value="2.90 A"/>
    <property type="chains" value="D=1-71"/>
</dbReference>
<dbReference type="PDB" id="7T10">
    <property type="method" value="EM"/>
    <property type="resolution" value="2.50 A"/>
    <property type="chains" value="C=1-71"/>
</dbReference>
<dbReference type="PDB" id="7T11">
    <property type="method" value="EM"/>
    <property type="resolution" value="2.70 A"/>
    <property type="chains" value="C=1-71"/>
</dbReference>
<dbReference type="PDB" id="7T2G">
    <property type="method" value="EM"/>
    <property type="resolution" value="2.50 A"/>
    <property type="chains" value="C=1-71"/>
</dbReference>
<dbReference type="PDB" id="7T2H">
    <property type="method" value="EM"/>
    <property type="resolution" value="3.20 A"/>
    <property type="chains" value="C=1-71"/>
</dbReference>
<dbReference type="PDB" id="7T6B">
    <property type="method" value="EM"/>
    <property type="resolution" value="3.19 A"/>
    <property type="chains" value="D=1-71"/>
</dbReference>
<dbReference type="PDB" id="7T8X">
    <property type="method" value="EM"/>
    <property type="resolution" value="3.21 A"/>
    <property type="chains" value="D=1-71"/>
</dbReference>
<dbReference type="PDB" id="7T90">
    <property type="method" value="EM"/>
    <property type="resolution" value="3.32 A"/>
    <property type="chains" value="D=1-71"/>
</dbReference>
<dbReference type="PDB" id="7T94">
    <property type="method" value="EM"/>
    <property type="resolution" value="3.16 A"/>
    <property type="chains" value="D=1-71"/>
</dbReference>
<dbReference type="PDB" id="7T96">
    <property type="method" value="EM"/>
    <property type="resolution" value="3.22 A"/>
    <property type="chains" value="D=1-71"/>
</dbReference>
<dbReference type="PDB" id="7T9I">
    <property type="method" value="EM"/>
    <property type="resolution" value="2.90 A"/>
    <property type="chains" value="Z=1-71"/>
</dbReference>
<dbReference type="PDB" id="7T9N">
    <property type="method" value="EM"/>
    <property type="resolution" value="2.90 A"/>
    <property type="chains" value="Z=1-71"/>
</dbReference>
<dbReference type="PDB" id="7TMW">
    <property type="method" value="EM"/>
    <property type="resolution" value="3.20 A"/>
    <property type="chains" value="C=1-71"/>
</dbReference>
<dbReference type="PDB" id="7TRK">
    <property type="method" value="EM"/>
    <property type="resolution" value="2.80 A"/>
    <property type="chains" value="G=2-71"/>
</dbReference>
<dbReference type="PDB" id="7TRP">
    <property type="method" value="EM"/>
    <property type="resolution" value="2.40 A"/>
    <property type="chains" value="G=2-71"/>
</dbReference>
<dbReference type="PDB" id="7TRQ">
    <property type="method" value="EM"/>
    <property type="resolution" value="2.50 A"/>
    <property type="chains" value="G=2-71"/>
</dbReference>
<dbReference type="PDB" id="7TRS">
    <property type="method" value="EM"/>
    <property type="resolution" value="2.80 A"/>
    <property type="chains" value="G=2-71"/>
</dbReference>
<dbReference type="PDB" id="7TUZ">
    <property type="method" value="EM"/>
    <property type="resolution" value="3.12 A"/>
    <property type="chains" value="C=1-71"/>
</dbReference>
<dbReference type="PDB" id="7TYF">
    <property type="method" value="EM"/>
    <property type="resolution" value="2.20 A"/>
    <property type="chains" value="G=1-71"/>
</dbReference>
<dbReference type="PDB" id="7TYH">
    <property type="method" value="EM"/>
    <property type="resolution" value="3.30 A"/>
    <property type="chains" value="G=1-71"/>
</dbReference>
<dbReference type="PDB" id="7TYI">
    <property type="method" value="EM"/>
    <property type="resolution" value="3.30 A"/>
    <property type="chains" value="G=1-71"/>
</dbReference>
<dbReference type="PDB" id="7TYL">
    <property type="method" value="EM"/>
    <property type="resolution" value="3.30 A"/>
    <property type="chains" value="G=1-71"/>
</dbReference>
<dbReference type="PDB" id="7TYN">
    <property type="method" value="EM"/>
    <property type="resolution" value="2.60 A"/>
    <property type="chains" value="G=1-71"/>
</dbReference>
<dbReference type="PDB" id="7TYO">
    <property type="method" value="EM"/>
    <property type="resolution" value="2.70 A"/>
    <property type="chains" value="G=1-71"/>
</dbReference>
<dbReference type="PDB" id="7TYW">
    <property type="method" value="EM"/>
    <property type="resolution" value="3.00 A"/>
    <property type="chains" value="G=1-71"/>
</dbReference>
<dbReference type="PDB" id="7TYX">
    <property type="method" value="EM"/>
    <property type="resolution" value="2.55 A"/>
    <property type="chains" value="G=1-71"/>
</dbReference>
<dbReference type="PDB" id="7TYY">
    <property type="method" value="EM"/>
    <property type="resolution" value="3.00 A"/>
    <property type="chains" value="G=1-71"/>
</dbReference>
<dbReference type="PDB" id="7TZF">
    <property type="method" value="EM"/>
    <property type="resolution" value="2.40 A"/>
    <property type="chains" value="G=1-71"/>
</dbReference>
<dbReference type="PDB" id="7U2K">
    <property type="method" value="EM"/>
    <property type="resolution" value="3.30 A"/>
    <property type="chains" value="C=1-71"/>
</dbReference>
<dbReference type="PDB" id="7U2L">
    <property type="method" value="EM"/>
    <property type="resolution" value="3.20 A"/>
    <property type="chains" value="C=1-71"/>
</dbReference>
<dbReference type="PDB" id="7UM5">
    <property type="method" value="EM"/>
    <property type="resolution" value="2.73 A"/>
    <property type="chains" value="D=1-71"/>
</dbReference>
<dbReference type="PDB" id="7UM6">
    <property type="method" value="EM"/>
    <property type="resolution" value="2.79 A"/>
    <property type="chains" value="D=1-71"/>
</dbReference>
<dbReference type="PDB" id="7UM7">
    <property type="method" value="EM"/>
    <property type="resolution" value="2.75 A"/>
    <property type="chains" value="D=1-71"/>
</dbReference>
<dbReference type="PDB" id="7UTZ">
    <property type="method" value="EM"/>
    <property type="resolution" value="2.40 A"/>
    <property type="chains" value="Z=1-71"/>
</dbReference>
<dbReference type="PDB" id="7V68">
    <property type="method" value="EM"/>
    <property type="resolution" value="3.40 A"/>
    <property type="chains" value="C=1-71"/>
</dbReference>
<dbReference type="PDB" id="7V69">
    <property type="method" value="EM"/>
    <property type="resolution" value="3.40 A"/>
    <property type="chains" value="C=1-71"/>
</dbReference>
<dbReference type="PDB" id="7V6A">
    <property type="method" value="EM"/>
    <property type="resolution" value="3.60 A"/>
    <property type="chains" value="C=1-71"/>
</dbReference>
<dbReference type="PDB" id="7VDH">
    <property type="method" value="EM"/>
    <property type="resolution" value="2.90 A"/>
    <property type="chains" value="G=5-62"/>
</dbReference>
<dbReference type="PDB" id="7VDL">
    <property type="method" value="EM"/>
    <property type="resolution" value="3.22 A"/>
    <property type="chains" value="C=5-62"/>
</dbReference>
<dbReference type="PDB" id="7VDM">
    <property type="method" value="EM"/>
    <property type="resolution" value="2.98 A"/>
    <property type="chains" value="G=5-62"/>
</dbReference>
<dbReference type="PDB" id="7VFX">
    <property type="method" value="EM"/>
    <property type="resolution" value="2.80 A"/>
    <property type="chains" value="G=1-71"/>
</dbReference>
<dbReference type="PDB" id="7VGX">
    <property type="method" value="EM"/>
    <property type="resolution" value="3.20 A"/>
    <property type="chains" value="G=1-71"/>
</dbReference>
<dbReference type="PDB" id="7VIE">
    <property type="method" value="EM"/>
    <property type="resolution" value="2.86 A"/>
    <property type="chains" value="C=1-71"/>
</dbReference>
<dbReference type="PDB" id="7VIF">
    <property type="method" value="EM"/>
    <property type="resolution" value="2.83 A"/>
    <property type="chains" value="C=1-71"/>
</dbReference>
<dbReference type="PDB" id="7VIG">
    <property type="method" value="EM"/>
    <property type="resolution" value="2.89 A"/>
    <property type="chains" value="C=1-71"/>
</dbReference>
<dbReference type="PDB" id="7VIH">
    <property type="method" value="EM"/>
    <property type="resolution" value="2.98 A"/>
    <property type="chains" value="C=1-71"/>
</dbReference>
<dbReference type="PDB" id="7VKT">
    <property type="method" value="EM"/>
    <property type="resolution" value="2.90 A"/>
    <property type="chains" value="D=1-71"/>
</dbReference>
<dbReference type="PDB" id="7VL8">
    <property type="method" value="EM"/>
    <property type="resolution" value="2.90 A"/>
    <property type="chains" value="G=1-71"/>
</dbReference>
<dbReference type="PDB" id="7VL9">
    <property type="method" value="EM"/>
    <property type="resolution" value="2.60 A"/>
    <property type="chains" value="G=1-71"/>
</dbReference>
<dbReference type="PDB" id="7VLA">
    <property type="method" value="EM"/>
    <property type="resolution" value="2.70 A"/>
    <property type="chains" value="G=1-71"/>
</dbReference>
<dbReference type="PDB" id="7VUG">
    <property type="method" value="EM"/>
    <property type="resolution" value="3.20 A"/>
    <property type="chains" value="C=1-71"/>
</dbReference>
<dbReference type="PDB" id="7VUH">
    <property type="method" value="EM"/>
    <property type="resolution" value="3.22 A"/>
    <property type="chains" value="G=1-71"/>
</dbReference>
<dbReference type="PDB" id="7VUI">
    <property type="method" value="EM"/>
    <property type="resolution" value="3.30 A"/>
    <property type="chains" value="G=1-71"/>
</dbReference>
<dbReference type="PDB" id="7VUJ">
    <property type="method" value="EM"/>
    <property type="resolution" value="3.80 A"/>
    <property type="chains" value="G=1-71"/>
</dbReference>
<dbReference type="PDB" id="7VUY">
    <property type="method" value="EM"/>
    <property type="resolution" value="2.84 A"/>
    <property type="chains" value="G=5-62"/>
</dbReference>
<dbReference type="PDB" id="7VUZ">
    <property type="method" value="EM"/>
    <property type="resolution" value="2.89 A"/>
    <property type="chains" value="G=5-62"/>
</dbReference>
<dbReference type="PDB" id="7VV3">
    <property type="method" value="EM"/>
    <property type="resolution" value="2.97 A"/>
    <property type="chains" value="G=5-62"/>
</dbReference>
<dbReference type="PDB" id="7VV5">
    <property type="method" value="EM"/>
    <property type="resolution" value="2.76 A"/>
    <property type="chains" value="G=5-62"/>
</dbReference>
<dbReference type="PDB" id="7W0L">
    <property type="method" value="EM"/>
    <property type="resolution" value="3.57 A"/>
    <property type="chains" value="C=1-71"/>
</dbReference>
<dbReference type="PDB" id="7W0M">
    <property type="method" value="EM"/>
    <property type="resolution" value="3.71 A"/>
    <property type="chains" value="C=1-71"/>
</dbReference>
<dbReference type="PDB" id="7W0N">
    <property type="method" value="EM"/>
    <property type="resolution" value="4.21 A"/>
    <property type="chains" value="C=1-71"/>
</dbReference>
<dbReference type="PDB" id="7W0O">
    <property type="method" value="EM"/>
    <property type="resolution" value="3.78 A"/>
    <property type="chains" value="C=1-71"/>
</dbReference>
<dbReference type="PDB" id="7W0P">
    <property type="method" value="EM"/>
    <property type="resolution" value="3.16 A"/>
    <property type="chains" value="C=1-71"/>
</dbReference>
<dbReference type="PDB" id="7W2Z">
    <property type="method" value="EM"/>
    <property type="resolution" value="2.80 A"/>
    <property type="chains" value="G=1-71"/>
</dbReference>
<dbReference type="PDB" id="7W3Z">
    <property type="method" value="EM"/>
    <property type="resolution" value="3.00 A"/>
    <property type="chains" value="D=2-71"/>
</dbReference>
<dbReference type="PDB" id="7W40">
    <property type="method" value="EM"/>
    <property type="resolution" value="3.00 A"/>
    <property type="chains" value="D=2-71"/>
</dbReference>
<dbReference type="PDB" id="7W53">
    <property type="method" value="EM"/>
    <property type="resolution" value="3.20 A"/>
    <property type="chains" value="G=2-71"/>
</dbReference>
<dbReference type="PDB" id="7W55">
    <property type="method" value="EM"/>
    <property type="resolution" value="2.80 A"/>
    <property type="chains" value="G=2-71"/>
</dbReference>
<dbReference type="PDB" id="7W56">
    <property type="method" value="EM"/>
    <property type="resolution" value="2.90 A"/>
    <property type="chains" value="G=2-71"/>
</dbReference>
<dbReference type="PDB" id="7W57">
    <property type="method" value="EM"/>
    <property type="resolution" value="3.20 A"/>
    <property type="chains" value="G=2-71"/>
</dbReference>
<dbReference type="PDB" id="7W6P">
    <property type="method" value="EM"/>
    <property type="resolution" value="3.47 A"/>
    <property type="chains" value="G=1-71"/>
</dbReference>
<dbReference type="PDB" id="7W7E">
    <property type="method" value="EM"/>
    <property type="resolution" value="3.40 A"/>
    <property type="chains" value="G=1-71"/>
</dbReference>
<dbReference type="PDB" id="7WCM">
    <property type="method" value="EM"/>
    <property type="resolution" value="2.33 A"/>
    <property type="chains" value="C=1-71"/>
</dbReference>
<dbReference type="PDB" id="7WCN">
    <property type="method" value="EM"/>
    <property type="resolution" value="2.87 A"/>
    <property type="chains" value="C=1-71"/>
</dbReference>
<dbReference type="PDB" id="7WF7">
    <property type="method" value="EM"/>
    <property type="resolution" value="3.40 A"/>
    <property type="chains" value="D=1-71"/>
</dbReference>
<dbReference type="PDB" id="7WJ5">
    <property type="method" value="EM"/>
    <property type="resolution" value="3.72 A"/>
    <property type="chains" value="C=1-71"/>
</dbReference>
<dbReference type="PDB" id="7WKD">
    <property type="method" value="EM"/>
    <property type="resolution" value="3.01 A"/>
    <property type="chains" value="G=1-71"/>
</dbReference>
<dbReference type="PDB" id="7WU2">
    <property type="method" value="EM"/>
    <property type="resolution" value="2.80 A"/>
    <property type="chains" value="C=1-71"/>
</dbReference>
<dbReference type="PDB" id="7WU3">
    <property type="method" value="EM"/>
    <property type="resolution" value="3.10 A"/>
    <property type="chains" value="C=1-71"/>
</dbReference>
<dbReference type="PDB" id="7WU4">
    <property type="method" value="EM"/>
    <property type="resolution" value="3.40 A"/>
    <property type="chains" value="C=1-71"/>
</dbReference>
<dbReference type="PDB" id="7WU5">
    <property type="method" value="EM"/>
    <property type="resolution" value="3.00 A"/>
    <property type="chains" value="C=1-71"/>
</dbReference>
<dbReference type="PDB" id="7WU9">
    <property type="method" value="EM"/>
    <property type="resolution" value="3.38 A"/>
    <property type="chains" value="G=1-71"/>
</dbReference>
<dbReference type="PDB" id="7WUI">
    <property type="method" value="EM"/>
    <property type="resolution" value="3.10 A"/>
    <property type="chains" value="G=5-62"/>
</dbReference>
<dbReference type="PDB" id="7WUJ">
    <property type="method" value="EM"/>
    <property type="resolution" value="3.30 A"/>
    <property type="chains" value="Y=1-71"/>
</dbReference>
<dbReference type="PDB" id="7WUQ">
    <property type="method" value="EM"/>
    <property type="resolution" value="2.90 A"/>
    <property type="chains" value="G=1-71"/>
</dbReference>
<dbReference type="PDB" id="7WV9">
    <property type="method" value="EM"/>
    <property type="resolution" value="3.36 A"/>
    <property type="chains" value="C=1-71"/>
</dbReference>
<dbReference type="PDB" id="7WVU">
    <property type="method" value="EM"/>
    <property type="resolution" value="3.30 A"/>
    <property type="chains" value="C=1-71"/>
</dbReference>
<dbReference type="PDB" id="7WVV">
    <property type="method" value="EM"/>
    <property type="resolution" value="2.90 A"/>
    <property type="chains" value="C=1-71"/>
</dbReference>
<dbReference type="PDB" id="7WVW">
    <property type="method" value="EM"/>
    <property type="resolution" value="3.10 A"/>
    <property type="chains" value="C=1-71"/>
</dbReference>
<dbReference type="PDB" id="7WVX">
    <property type="method" value="EM"/>
    <property type="resolution" value="2.80 A"/>
    <property type="chains" value="C=1-71"/>
</dbReference>
<dbReference type="PDB" id="7WVY">
    <property type="method" value="EM"/>
    <property type="resolution" value="3.00 A"/>
    <property type="chains" value="C=1-71"/>
</dbReference>
<dbReference type="PDB" id="7WXU">
    <property type="method" value="EM"/>
    <property type="resolution" value="2.85 A"/>
    <property type="chains" value="G=1-71"/>
</dbReference>
<dbReference type="PDB" id="7WXW">
    <property type="method" value="EM"/>
    <property type="resolution" value="2.84 A"/>
    <property type="chains" value="C=1-71"/>
</dbReference>
<dbReference type="PDB" id="7WY0">
    <property type="method" value="EM"/>
    <property type="resolution" value="2.83 A"/>
    <property type="chains" value="D=1-71"/>
</dbReference>
<dbReference type="PDB" id="7WY5">
    <property type="method" value="EM"/>
    <property type="resolution" value="2.83 A"/>
    <property type="chains" value="G=1-71"/>
</dbReference>
<dbReference type="PDB" id="7WY8">
    <property type="method" value="EM"/>
    <property type="resolution" value="2.83 A"/>
    <property type="chains" value="C=1-71"/>
</dbReference>
<dbReference type="PDB" id="7WYB">
    <property type="method" value="EM"/>
    <property type="resolution" value="2.97 A"/>
    <property type="chains" value="D=1-71"/>
</dbReference>
<dbReference type="PDB" id="7WZ4">
    <property type="method" value="EM"/>
    <property type="resolution" value="3.00 A"/>
    <property type="chains" value="G=1-71"/>
</dbReference>
<dbReference type="PDB" id="7WZ7">
    <property type="method" value="EM"/>
    <property type="resolution" value="2.83 A"/>
    <property type="chains" value="E=1-71"/>
</dbReference>
<dbReference type="PDB" id="7X10">
    <property type="method" value="EM"/>
    <property type="resolution" value="2.93 A"/>
    <property type="chains" value="G=1-71"/>
</dbReference>
<dbReference type="PDB" id="7X2C">
    <property type="method" value="EM"/>
    <property type="resolution" value="3.20 A"/>
    <property type="chains" value="D=1-71"/>
</dbReference>
<dbReference type="PDB" id="7X2D">
    <property type="method" value="EM"/>
    <property type="resolution" value="3.30 A"/>
    <property type="chains" value="D=1-71"/>
</dbReference>
<dbReference type="PDB" id="7X2F">
    <property type="method" value="EM"/>
    <property type="resolution" value="3.00 A"/>
    <property type="chains" value="D=1-71"/>
</dbReference>
<dbReference type="PDB" id="7X2V">
    <property type="method" value="EM"/>
    <property type="resolution" value="3.09 A"/>
    <property type="chains" value="D=1-71"/>
</dbReference>
<dbReference type="PDB" id="7X5H">
    <property type="method" value="EM"/>
    <property type="resolution" value="3.10 A"/>
    <property type="chains" value="C=2-71"/>
</dbReference>
<dbReference type="PDB" id="7X8R">
    <property type="method" value="EM"/>
    <property type="resolution" value="2.61 A"/>
    <property type="chains" value="G=2-71"/>
</dbReference>
<dbReference type="PDB" id="7X8S">
    <property type="method" value="EM"/>
    <property type="resolution" value="3.09 A"/>
    <property type="chains" value="G=2-71"/>
</dbReference>
<dbReference type="PDB" id="7X9A">
    <property type="method" value="EM"/>
    <property type="resolution" value="3.20 A"/>
    <property type="chains" value="C=1-71"/>
</dbReference>
<dbReference type="PDB" id="7X9B">
    <property type="method" value="EM"/>
    <property type="resolution" value="3.40 A"/>
    <property type="chains" value="C=1-71"/>
</dbReference>
<dbReference type="PDB" id="7X9C">
    <property type="method" value="EM"/>
    <property type="resolution" value="3.00 A"/>
    <property type="chains" value="C=1-71"/>
</dbReference>
<dbReference type="PDB" id="7X9Y">
    <property type="method" value="EM"/>
    <property type="resolution" value="3.10 A"/>
    <property type="chains" value="G=1-71"/>
</dbReference>
<dbReference type="PDB" id="7XA3">
    <property type="method" value="EM"/>
    <property type="resolution" value="2.90 A"/>
    <property type="chains" value="C=1-71"/>
</dbReference>
<dbReference type="PDB" id="7XBD">
    <property type="method" value="EM"/>
    <property type="resolution" value="3.11 A"/>
    <property type="chains" value="D=1-71"/>
</dbReference>
<dbReference type="PDB" id="7XBW">
    <property type="method" value="EM"/>
    <property type="resolution" value="2.80 A"/>
    <property type="chains" value="E=1-71"/>
</dbReference>
<dbReference type="PDB" id="7XBX">
    <property type="method" value="EM"/>
    <property type="resolution" value="3.40 A"/>
    <property type="chains" value="E=1-71"/>
</dbReference>
<dbReference type="PDB" id="7XJJ">
    <property type="method" value="EM"/>
    <property type="resolution" value="3.30 A"/>
    <property type="chains" value="G=1-71"/>
</dbReference>
<dbReference type="PDB" id="7XJK">
    <property type="method" value="EM"/>
    <property type="resolution" value="3.30 A"/>
    <property type="chains" value="D=1-71"/>
</dbReference>
<dbReference type="PDB" id="7XJL">
    <property type="method" value="EM"/>
    <property type="resolution" value="3.50 A"/>
    <property type="chains" value="D=1-71"/>
</dbReference>
<dbReference type="PDB" id="7XK2">
    <property type="method" value="EM"/>
    <property type="resolution" value="3.10 A"/>
    <property type="chains" value="C=1-71"/>
</dbReference>
<dbReference type="PDB" id="7XK8">
    <property type="method" value="EM"/>
    <property type="resolution" value="3.30 A"/>
    <property type="chains" value="C=1-71"/>
</dbReference>
<dbReference type="PDB" id="7XKD">
    <property type="method" value="EM"/>
    <property type="resolution" value="2.40 A"/>
    <property type="chains" value="G=5-62"/>
</dbReference>
<dbReference type="PDB" id="7XKE">
    <property type="method" value="EM"/>
    <property type="resolution" value="2.90 A"/>
    <property type="chains" value="G=5-62"/>
</dbReference>
<dbReference type="PDB" id="7XKF">
    <property type="method" value="EM"/>
    <property type="resolution" value="2.40 A"/>
    <property type="chains" value="G=5-62"/>
</dbReference>
<dbReference type="PDB" id="7XMR">
    <property type="method" value="EM"/>
    <property type="resolution" value="3.10 A"/>
    <property type="chains" value="C=1-71"/>
</dbReference>
<dbReference type="PDB" id="7XMS">
    <property type="method" value="EM"/>
    <property type="resolution" value="2.90 A"/>
    <property type="chains" value="C=1-71"/>
</dbReference>
<dbReference type="PDB" id="7XMT">
    <property type="method" value="EM"/>
    <property type="resolution" value="2.80 A"/>
    <property type="chains" value="C=1-71"/>
</dbReference>
<dbReference type="PDB" id="7XOU">
    <property type="method" value="EM"/>
    <property type="resolution" value="3.20 A"/>
    <property type="chains" value="G=1-71"/>
</dbReference>
<dbReference type="PDB" id="7XOV">
    <property type="method" value="EM"/>
    <property type="resolution" value="3.00 A"/>
    <property type="chains" value="G=1-71"/>
</dbReference>
<dbReference type="PDB" id="7XOW">
    <property type="method" value="EM"/>
    <property type="resolution" value="3.10 A"/>
    <property type="chains" value="C=2-71"/>
</dbReference>
<dbReference type="PDB" id="7XP4">
    <property type="method" value="EM"/>
    <property type="resolution" value="3.01 A"/>
    <property type="chains" value="G=1-71"/>
</dbReference>
<dbReference type="PDB" id="7XP5">
    <property type="method" value="EM"/>
    <property type="resolution" value="3.08 A"/>
    <property type="chains" value="G=1-71"/>
</dbReference>
<dbReference type="PDB" id="7XP6">
    <property type="method" value="EM"/>
    <property type="resolution" value="3.01 A"/>
    <property type="chains" value="G=1-71"/>
</dbReference>
<dbReference type="PDB" id="7XT8">
    <property type="method" value="EM"/>
    <property type="resolution" value="3.10 A"/>
    <property type="chains" value="G=1-71"/>
</dbReference>
<dbReference type="PDB" id="7XT9">
    <property type="method" value="EM"/>
    <property type="resolution" value="3.20 A"/>
    <property type="chains" value="G=1-71"/>
</dbReference>
<dbReference type="PDB" id="7XTA">
    <property type="method" value="EM"/>
    <property type="resolution" value="3.20 A"/>
    <property type="chains" value="G=1-71"/>
</dbReference>
<dbReference type="PDB" id="7XTB">
    <property type="method" value="EM"/>
    <property type="resolution" value="3.30 A"/>
    <property type="chains" value="G=1-71"/>
</dbReference>
<dbReference type="PDB" id="7XTC">
    <property type="method" value="EM"/>
    <property type="resolution" value="3.20 A"/>
    <property type="chains" value="G=1-71"/>
</dbReference>
<dbReference type="PDB" id="7XTQ">
    <property type="method" value="EM"/>
    <property type="resolution" value="3.20 A"/>
    <property type="chains" value="G=5-62"/>
</dbReference>
<dbReference type="PDB" id="7XV3">
    <property type="method" value="EM"/>
    <property type="resolution" value="2.76 A"/>
    <property type="chains" value="G=1-71"/>
</dbReference>
<dbReference type="PDB" id="7XW5">
    <property type="method" value="EM"/>
    <property type="resolution" value="2.96 A"/>
    <property type="chains" value="G=1-71"/>
</dbReference>
<dbReference type="PDB" id="7XW6">
    <property type="method" value="EM"/>
    <property type="resolution" value="2.78 A"/>
    <property type="chains" value="G=1-71"/>
</dbReference>
<dbReference type="PDB" id="7XXH">
    <property type="method" value="EM"/>
    <property type="resolution" value="2.90 A"/>
    <property type="chains" value="G=1-71"/>
</dbReference>
<dbReference type="PDB" id="7XXI">
    <property type="method" value="EM"/>
    <property type="resolution" value="3.00 A"/>
    <property type="chains" value="G=1-71"/>
</dbReference>
<dbReference type="PDB" id="7XY6">
    <property type="method" value="EM"/>
    <property type="resolution" value="2.99 A"/>
    <property type="chains" value="G=1-67"/>
</dbReference>
<dbReference type="PDB" id="7XY7">
    <property type="method" value="EM"/>
    <property type="resolution" value="3.26 A"/>
    <property type="chains" value="G=1-67"/>
</dbReference>
<dbReference type="PDB" id="7XZ5">
    <property type="method" value="EM"/>
    <property type="resolution" value="3.10 A"/>
    <property type="chains" value="G=1-71"/>
</dbReference>
<dbReference type="PDB" id="7XZ6">
    <property type="method" value="EM"/>
    <property type="resolution" value="2.80 A"/>
    <property type="chains" value="G=1-71"/>
</dbReference>
<dbReference type="PDB" id="7Y1F">
    <property type="method" value="EM"/>
    <property type="resolution" value="3.30 A"/>
    <property type="chains" value="C=1-68"/>
</dbReference>
<dbReference type="PDB" id="7Y24">
    <property type="method" value="EM"/>
    <property type="resolution" value="3.25 A"/>
    <property type="chains" value="G=7-62"/>
</dbReference>
<dbReference type="PDB" id="7Y26">
    <property type="method" value="EM"/>
    <property type="resolution" value="3.30 A"/>
    <property type="chains" value="F=1-71"/>
</dbReference>
<dbReference type="PDB" id="7Y27">
    <property type="method" value="EM"/>
    <property type="resolution" value="3.48 A"/>
    <property type="chains" value="F=1-71"/>
</dbReference>
<dbReference type="PDB" id="7Y3G">
    <property type="method" value="EM"/>
    <property type="resolution" value="2.77 A"/>
    <property type="chains" value="G=1-71"/>
</dbReference>
<dbReference type="PDB" id="7Y64">
    <property type="method" value="EM"/>
    <property type="resolution" value="2.90 A"/>
    <property type="chains" value="C=1-71"/>
</dbReference>
<dbReference type="PDB" id="7Y65">
    <property type="method" value="EM"/>
    <property type="resolution" value="3.20 A"/>
    <property type="chains" value="C=1-71"/>
</dbReference>
<dbReference type="PDB" id="7Y66">
    <property type="method" value="EM"/>
    <property type="resolution" value="2.90 A"/>
    <property type="chains" value="C=1-71"/>
</dbReference>
<dbReference type="PDB" id="7Y67">
    <property type="method" value="EM"/>
    <property type="resolution" value="2.80 A"/>
    <property type="chains" value="C=1-71"/>
</dbReference>
<dbReference type="PDB" id="7Y89">
    <property type="method" value="EM"/>
    <property type="resolution" value="3.02 A"/>
    <property type="chains" value="G=8-63"/>
</dbReference>
<dbReference type="PDB" id="7YAC">
    <property type="method" value="EM"/>
    <property type="resolution" value="3.24 A"/>
    <property type="chains" value="C=1-71"/>
</dbReference>
<dbReference type="PDB" id="7YAE">
    <property type="method" value="EM"/>
    <property type="resolution" value="3.37 A"/>
    <property type="chains" value="C=1-71"/>
</dbReference>
<dbReference type="PDB" id="7YDH">
    <property type="method" value="EM"/>
    <property type="resolution" value="3.10 A"/>
    <property type="chains" value="G=1-71"/>
</dbReference>
<dbReference type="PDB" id="7YDJ">
    <property type="method" value="EM"/>
    <property type="resolution" value="3.03 A"/>
    <property type="chains" value="G=1-71"/>
</dbReference>
<dbReference type="PDB" id="7YDM">
    <property type="method" value="EM"/>
    <property type="resolution" value="2.89 A"/>
    <property type="chains" value="G=1-71"/>
</dbReference>
<dbReference type="PDB" id="7YDP">
    <property type="method" value="EM"/>
    <property type="resolution" value="3.10 A"/>
    <property type="chains" value="C=1-71"/>
</dbReference>
<dbReference type="PDB" id="7YFC">
    <property type="method" value="EM"/>
    <property type="resolution" value="3.00 A"/>
    <property type="chains" value="G=1-71"/>
</dbReference>
<dbReference type="PDB" id="7YFD">
    <property type="method" value="EM"/>
    <property type="resolution" value="3.10 A"/>
    <property type="chains" value="G=1-71"/>
</dbReference>
<dbReference type="PDB" id="7YKD">
    <property type="method" value="EM"/>
    <property type="resolution" value="2.81 A"/>
    <property type="chains" value="G=1-71"/>
</dbReference>
<dbReference type="PDB" id="7YON">
    <property type="method" value="EM"/>
    <property type="resolution" value="2.95 A"/>
    <property type="chains" value="G=1-71"/>
</dbReference>
<dbReference type="PDB" id="7YOO">
    <property type="method" value="EM"/>
    <property type="resolution" value="3.11 A"/>
    <property type="chains" value="G=1-71"/>
</dbReference>
<dbReference type="PDB" id="7YP7">
    <property type="method" value="EM"/>
    <property type="resolution" value="3.10 A"/>
    <property type="chains" value="G=1-71"/>
</dbReference>
<dbReference type="PDB" id="7YS6">
    <property type="method" value="EM"/>
    <property type="resolution" value="3.00 A"/>
    <property type="chains" value="D=1-71"/>
</dbReference>
<dbReference type="PDB" id="8DDW">
    <property type="method" value="EM"/>
    <property type="resolution" value="4.70 A"/>
    <property type="chains" value="J=2-71"/>
</dbReference>
<dbReference type="PDB" id="8DDX">
    <property type="method" value="EM"/>
    <property type="resolution" value="3.80 A"/>
    <property type="chains" value="J=2-71"/>
</dbReference>
<dbReference type="PDB" id="8DPF">
    <property type="method" value="EM"/>
    <property type="resolution" value="2.84 A"/>
    <property type="chains" value="D=1-71"/>
</dbReference>
<dbReference type="PDB" id="8DPG">
    <property type="method" value="EM"/>
    <property type="resolution" value="3.60 A"/>
    <property type="chains" value="D=1-71"/>
</dbReference>
<dbReference type="PDB" id="8DPH">
    <property type="method" value="EM"/>
    <property type="resolution" value="3.20 A"/>
    <property type="chains" value="D=1-71"/>
</dbReference>
<dbReference type="PDB" id="8DPI">
    <property type="method" value="EM"/>
    <property type="resolution" value="3.40 A"/>
    <property type="chains" value="D=1-71"/>
</dbReference>
<dbReference type="PDB" id="8DWC">
    <property type="method" value="EM"/>
    <property type="resolution" value="2.87 A"/>
    <property type="chains" value="D=1-71"/>
</dbReference>
<dbReference type="PDB" id="8DWG">
    <property type="method" value="EM"/>
    <property type="resolution" value="2.71 A"/>
    <property type="chains" value="D=1-71"/>
</dbReference>
<dbReference type="PDB" id="8DWH">
    <property type="method" value="EM"/>
    <property type="resolution" value="3.25 A"/>
    <property type="chains" value="D=1-71"/>
</dbReference>
<dbReference type="PDB" id="8DZP">
    <property type="method" value="EM"/>
    <property type="resolution" value="2.71 A"/>
    <property type="chains" value="D=1-71"/>
</dbReference>
<dbReference type="PDB" id="8DZQ">
    <property type="method" value="EM"/>
    <property type="resolution" value="2.82 A"/>
    <property type="chains" value="D=1-71"/>
</dbReference>
<dbReference type="PDB" id="8DZR">
    <property type="method" value="EM"/>
    <property type="resolution" value="2.61 A"/>
    <property type="chains" value="D=1-71"/>
</dbReference>
<dbReference type="PDB" id="8DZS">
    <property type="method" value="EM"/>
    <property type="resolution" value="2.65 A"/>
    <property type="chains" value="D=1-71"/>
</dbReference>
<dbReference type="PDB" id="8E3X">
    <property type="method" value="EM"/>
    <property type="resolution" value="2.30 A"/>
    <property type="chains" value="G=1-71"/>
</dbReference>
<dbReference type="PDB" id="8E3Y">
    <property type="method" value="EM"/>
    <property type="resolution" value="2.30 A"/>
    <property type="chains" value="G=1-71"/>
</dbReference>
<dbReference type="PDB" id="8E3Z">
    <property type="method" value="EM"/>
    <property type="resolution" value="2.70 A"/>
    <property type="chains" value="G=1-71"/>
</dbReference>
<dbReference type="PDB" id="8E9W">
    <property type="method" value="EM"/>
    <property type="resolution" value="2.69 A"/>
    <property type="chains" value="D=1-71"/>
</dbReference>
<dbReference type="PDB" id="8E9X">
    <property type="method" value="EM"/>
    <property type="resolution" value="2.70 A"/>
    <property type="chains" value="D=1-71"/>
</dbReference>
<dbReference type="PDB" id="8E9Y">
    <property type="method" value="EM"/>
    <property type="resolution" value="2.79 A"/>
    <property type="chains" value="D=1-71"/>
</dbReference>
<dbReference type="PDB" id="8E9Z">
    <property type="method" value="EM"/>
    <property type="resolution" value="2.69 A"/>
    <property type="chains" value="D=1-71"/>
</dbReference>
<dbReference type="PDB" id="8EFL">
    <property type="method" value="EM"/>
    <property type="resolution" value="3.20 A"/>
    <property type="chains" value="C=1-68"/>
</dbReference>
<dbReference type="PDB" id="8EIT">
    <property type="method" value="EM"/>
    <property type="resolution" value="2.80 A"/>
    <property type="chains" value="C=2-71"/>
</dbReference>
<dbReference type="PDB" id="8EJC">
    <property type="method" value="EM"/>
    <property type="resolution" value="3.00 A"/>
    <property type="chains" value="C=2-71"/>
</dbReference>
<dbReference type="PDB" id="8EJK">
    <property type="method" value="EM"/>
    <property type="resolution" value="3.40 A"/>
    <property type="chains" value="C=2-71"/>
</dbReference>
<dbReference type="PDB" id="8EMW">
    <property type="method" value="EM"/>
    <property type="resolution" value="3.50 A"/>
    <property type="chains" value="D/G=1-68"/>
</dbReference>
<dbReference type="PDB" id="8EMX">
    <property type="method" value="EM"/>
    <property type="resolution" value="3.30 A"/>
    <property type="chains" value="D/G=1-68"/>
</dbReference>
<dbReference type="PDB" id="8F0J">
    <property type="method" value="EM"/>
    <property type="resolution" value="2.00 A"/>
    <property type="chains" value="G=1-71"/>
</dbReference>
<dbReference type="PDB" id="8F0K">
    <property type="method" value="EM"/>
    <property type="resolution" value="1.90 A"/>
    <property type="chains" value="G=1-71"/>
</dbReference>
<dbReference type="PDB" id="8F2A">
    <property type="method" value="EM"/>
    <property type="resolution" value="2.20 A"/>
    <property type="chains" value="G=1-71"/>
</dbReference>
<dbReference type="PDB" id="8F2B">
    <property type="method" value="EM"/>
    <property type="resolution" value="2.00 A"/>
    <property type="chains" value="G=1-71"/>
</dbReference>
<dbReference type="PDB" id="8F76">
    <property type="method" value="EM"/>
    <property type="resolution" value="3.10 A"/>
    <property type="chains" value="Z=1-71"/>
</dbReference>
<dbReference type="PDB" id="8FEG">
    <property type="method" value="EM"/>
    <property type="resolution" value="2.54 A"/>
    <property type="chains" value="E=1-71"/>
</dbReference>
<dbReference type="PDB" id="8FLQ">
    <property type="method" value="EM"/>
    <property type="resolution" value="2.55 A"/>
    <property type="chains" value="G=5-62"/>
</dbReference>
<dbReference type="PDB" id="8FLR">
    <property type="method" value="EM"/>
    <property type="resolution" value="2.94 A"/>
    <property type="chains" value="G=5-62"/>
</dbReference>
<dbReference type="PDB" id="8FLS">
    <property type="method" value="EM"/>
    <property type="resolution" value="3.09 A"/>
    <property type="chains" value="G=5-62"/>
</dbReference>
<dbReference type="PDB" id="8FLT">
    <property type="method" value="EM"/>
    <property type="resolution" value="3.03 A"/>
    <property type="chains" value="G=5-62"/>
</dbReference>
<dbReference type="PDB" id="8FLU">
    <property type="method" value="EM"/>
    <property type="resolution" value="2.76 A"/>
    <property type="chains" value="G=5-62"/>
</dbReference>
<dbReference type="PDB" id="8FMZ">
    <property type="method" value="EM"/>
    <property type="resolution" value="2.59 A"/>
    <property type="chains" value="D=1-71"/>
</dbReference>
<dbReference type="PDB" id="8FN0">
    <property type="method" value="EM"/>
    <property type="resolution" value="2.89 A"/>
    <property type="chains" value="D=1-71"/>
</dbReference>
<dbReference type="PDB" id="8FN1">
    <property type="method" value="EM"/>
    <property type="resolution" value="2.88 A"/>
    <property type="chains" value="D=1-71"/>
</dbReference>
<dbReference type="PDB" id="8FU6">
    <property type="method" value="EM"/>
    <property type="resolution" value="2.90 A"/>
    <property type="chains" value="G=1-71"/>
</dbReference>
<dbReference type="PDB" id="8FX5">
    <property type="method" value="EM"/>
    <property type="resolution" value="2.45 A"/>
    <property type="chains" value="G=2-71"/>
</dbReference>
<dbReference type="PDB" id="8FY8">
    <property type="method" value="EM"/>
    <property type="resolution" value="2.79 A"/>
    <property type="chains" value="G=1-71"/>
</dbReference>
<dbReference type="PDB" id="8FYE">
    <property type="method" value="EM"/>
    <property type="resolution" value="2.85 A"/>
    <property type="chains" value="G=1-71"/>
</dbReference>
<dbReference type="PDB" id="8FYL">
    <property type="method" value="EM"/>
    <property type="resolution" value="2.94 A"/>
    <property type="chains" value="G=1-71"/>
</dbReference>
<dbReference type="PDB" id="8FYT">
    <property type="method" value="EM"/>
    <property type="resolution" value="2.64 A"/>
    <property type="chains" value="G=1-71"/>
</dbReference>
<dbReference type="PDB" id="8FYX">
    <property type="method" value="EM"/>
    <property type="resolution" value="2.62 A"/>
    <property type="chains" value="G=1-71"/>
</dbReference>
<dbReference type="PDB" id="8G05">
    <property type="method" value="EM"/>
    <property type="resolution" value="3.00 A"/>
    <property type="chains" value="G=1-71"/>
</dbReference>
<dbReference type="PDB" id="8G2Y">
    <property type="method" value="EM"/>
    <property type="resolution" value="3.44 A"/>
    <property type="chains" value="G=1-71"/>
</dbReference>
<dbReference type="PDB" id="8G59">
    <property type="method" value="EM"/>
    <property type="resolution" value="2.64 A"/>
    <property type="chains" value="Y=1-71"/>
</dbReference>
<dbReference type="PDB" id="8G94">
    <property type="method" value="EM"/>
    <property type="resolution" value="3.15 A"/>
    <property type="chains" value="D=1-71"/>
</dbReference>
<dbReference type="PDB" id="8GAG">
    <property type="method" value="EM"/>
    <property type="resolution" value="3.30 A"/>
    <property type="chains" value="C=1-71"/>
</dbReference>
<dbReference type="PDB" id="8GCM">
    <property type="method" value="EM"/>
    <property type="resolution" value="3.50 A"/>
    <property type="chains" value="C=1-71"/>
</dbReference>
<dbReference type="PDB" id="8GCP">
    <property type="method" value="EM"/>
    <property type="resolution" value="3.10 A"/>
    <property type="chains" value="C=1-71"/>
</dbReference>
<dbReference type="PDB" id="8GD9">
    <property type="method" value="EM"/>
    <property type="resolution" value="3.20 A"/>
    <property type="chains" value="G=1-71"/>
</dbReference>
<dbReference type="PDB" id="8GDA">
    <property type="method" value="EM"/>
    <property type="resolution" value="3.30 A"/>
    <property type="chains" value="G=1-71"/>
</dbReference>
<dbReference type="PDB" id="8GDB">
    <property type="method" value="EM"/>
    <property type="resolution" value="3.10 A"/>
    <property type="chains" value="G=1-71"/>
</dbReference>
<dbReference type="PDB" id="8GDC">
    <property type="method" value="EM"/>
    <property type="resolution" value="3.50 A"/>
    <property type="chains" value="C=1-71"/>
</dbReference>
<dbReference type="PDB" id="8GDZ">
    <property type="method" value="EM"/>
    <property type="resolution" value="3.50 A"/>
    <property type="chains" value="G=1-71"/>
</dbReference>
<dbReference type="PDB" id="8GE1">
    <property type="method" value="EM"/>
    <property type="resolution" value="3.40 A"/>
    <property type="chains" value="G=1-71"/>
</dbReference>
<dbReference type="PDB" id="8GE2">
    <property type="method" value="EM"/>
    <property type="resolution" value="3.30 A"/>
    <property type="chains" value="G=1-71"/>
</dbReference>
<dbReference type="PDB" id="8GE3">
    <property type="method" value="EM"/>
    <property type="resolution" value="3.30 A"/>
    <property type="chains" value="G=1-71"/>
</dbReference>
<dbReference type="PDB" id="8GE4">
    <property type="method" value="EM"/>
    <property type="resolution" value="3.30 A"/>
    <property type="chains" value="G=1-71"/>
</dbReference>
<dbReference type="PDB" id="8GE5">
    <property type="method" value="EM"/>
    <property type="resolution" value="3.20 A"/>
    <property type="chains" value="G=1-71"/>
</dbReference>
<dbReference type="PDB" id="8GE6">
    <property type="method" value="EM"/>
    <property type="resolution" value="3.40 A"/>
    <property type="chains" value="G=1-71"/>
</dbReference>
<dbReference type="PDB" id="8GE7">
    <property type="method" value="EM"/>
    <property type="resolution" value="3.40 A"/>
    <property type="chains" value="G=1-71"/>
</dbReference>
<dbReference type="PDB" id="8GE8">
    <property type="method" value="EM"/>
    <property type="resolution" value="3.40 A"/>
    <property type="chains" value="G=1-71"/>
</dbReference>
<dbReference type="PDB" id="8GE9">
    <property type="method" value="EM"/>
    <property type="resolution" value="3.50 A"/>
    <property type="chains" value="G=1-71"/>
</dbReference>
<dbReference type="PDB" id="8GEA">
    <property type="method" value="EM"/>
    <property type="resolution" value="3.50 A"/>
    <property type="chains" value="G=1-71"/>
</dbReference>
<dbReference type="PDB" id="8GEB">
    <property type="method" value="EM"/>
    <property type="resolution" value="3.60 A"/>
    <property type="chains" value="G=1-71"/>
</dbReference>
<dbReference type="PDB" id="8GEC">
    <property type="method" value="EM"/>
    <property type="resolution" value="3.50 A"/>
    <property type="chains" value="G=1-71"/>
</dbReference>
<dbReference type="PDB" id="8GED">
    <property type="method" value="EM"/>
    <property type="resolution" value="3.50 A"/>
    <property type="chains" value="G=1-71"/>
</dbReference>
<dbReference type="PDB" id="8GEE">
    <property type="method" value="EM"/>
    <property type="resolution" value="3.70 A"/>
    <property type="chains" value="G=1-71"/>
</dbReference>
<dbReference type="PDB" id="8GEF">
    <property type="method" value="EM"/>
    <property type="resolution" value="3.80 A"/>
    <property type="chains" value="G=1-71"/>
</dbReference>
<dbReference type="PDB" id="8GEG">
    <property type="method" value="EM"/>
    <property type="resolution" value="3.80 A"/>
    <property type="chains" value="G=1-71"/>
</dbReference>
<dbReference type="PDB" id="8GEH">
    <property type="method" value="EM"/>
    <property type="resolution" value="4.00 A"/>
    <property type="chains" value="G=1-71"/>
</dbReference>
<dbReference type="PDB" id="8GEI">
    <property type="method" value="EM"/>
    <property type="resolution" value="4.10 A"/>
    <property type="chains" value="G=1-71"/>
</dbReference>
<dbReference type="PDB" id="8GEJ">
    <property type="method" value="EM"/>
    <property type="resolution" value="4.20 A"/>
    <property type="chains" value="G=1-71"/>
</dbReference>
<dbReference type="PDB" id="8GFV">
    <property type="method" value="EM"/>
    <property type="resolution" value="3.10 A"/>
    <property type="chains" value="G=1-71"/>
</dbReference>
<dbReference type="PDB" id="8GFW">
    <property type="method" value="EM"/>
    <property type="resolution" value="3.00 A"/>
    <property type="chains" value="G=1-71"/>
</dbReference>
<dbReference type="PDB" id="8GFX">
    <property type="method" value="EM"/>
    <property type="resolution" value="3.00 A"/>
    <property type="chains" value="G=1-71"/>
</dbReference>
<dbReference type="PDB" id="8GFY">
    <property type="method" value="EM"/>
    <property type="resolution" value="3.00 A"/>
    <property type="chains" value="G=1-71"/>
</dbReference>
<dbReference type="PDB" id="8GFZ">
    <property type="method" value="EM"/>
    <property type="resolution" value="3.00 A"/>
    <property type="chains" value="G=1-71"/>
</dbReference>
<dbReference type="PDB" id="8GG0">
    <property type="method" value="EM"/>
    <property type="resolution" value="2.90 A"/>
    <property type="chains" value="G=1-71"/>
</dbReference>
<dbReference type="PDB" id="8GG1">
    <property type="method" value="EM"/>
    <property type="resolution" value="3.00 A"/>
    <property type="chains" value="G=1-71"/>
</dbReference>
<dbReference type="PDB" id="8GG2">
    <property type="method" value="EM"/>
    <property type="resolution" value="3.00 A"/>
    <property type="chains" value="G=1-71"/>
</dbReference>
<dbReference type="PDB" id="8GG3">
    <property type="method" value="EM"/>
    <property type="resolution" value="3.10 A"/>
    <property type="chains" value="G=1-71"/>
</dbReference>
<dbReference type="PDB" id="8GG4">
    <property type="method" value="EM"/>
    <property type="resolution" value="3.20 A"/>
    <property type="chains" value="G=1-71"/>
</dbReference>
<dbReference type="PDB" id="8GG5">
    <property type="method" value="EM"/>
    <property type="resolution" value="3.20 A"/>
    <property type="chains" value="G=1-71"/>
</dbReference>
<dbReference type="PDB" id="8GG6">
    <property type="method" value="EM"/>
    <property type="resolution" value="3.30 A"/>
    <property type="chains" value="G=1-71"/>
</dbReference>
<dbReference type="PDB" id="8GG7">
    <property type="method" value="EM"/>
    <property type="resolution" value="3.30 A"/>
    <property type="chains" value="G=1-71"/>
</dbReference>
<dbReference type="PDB" id="8GG8">
    <property type="method" value="EM"/>
    <property type="resolution" value="3.30 A"/>
    <property type="chains" value="G=1-71"/>
</dbReference>
<dbReference type="PDB" id="8GG9">
    <property type="method" value="EM"/>
    <property type="resolution" value="3.40 A"/>
    <property type="chains" value="G=1-71"/>
</dbReference>
<dbReference type="PDB" id="8GGA">
    <property type="method" value="EM"/>
    <property type="resolution" value="3.50 A"/>
    <property type="chains" value="G=1-71"/>
</dbReference>
<dbReference type="PDB" id="8GGB">
    <property type="method" value="EM"/>
    <property type="resolution" value="3.50 A"/>
    <property type="chains" value="G=1-71"/>
</dbReference>
<dbReference type="PDB" id="8GGC">
    <property type="method" value="EM"/>
    <property type="resolution" value="3.40 A"/>
    <property type="chains" value="G=1-71"/>
</dbReference>
<dbReference type="PDB" id="8GGE">
    <property type="method" value="EM"/>
    <property type="resolution" value="3.50 A"/>
    <property type="chains" value="G=1-71"/>
</dbReference>
<dbReference type="PDB" id="8GGF">
    <property type="method" value="EM"/>
    <property type="resolution" value="3.60 A"/>
    <property type="chains" value="G=1-71"/>
</dbReference>
<dbReference type="PDB" id="8GHV">
    <property type="method" value="EM"/>
    <property type="resolution" value="2.80 A"/>
    <property type="chains" value="C=1-71"/>
</dbReference>
<dbReference type="PDB" id="8GUQ">
    <property type="method" value="EM"/>
    <property type="resolution" value="3.08 A"/>
    <property type="chains" value="C=1-71"/>
</dbReference>
<dbReference type="PDB" id="8GUR">
    <property type="method" value="EM"/>
    <property type="resolution" value="2.84 A"/>
    <property type="chains" value="C=1-71"/>
</dbReference>
<dbReference type="PDB" id="8GUS">
    <property type="method" value="EM"/>
    <property type="resolution" value="2.97 A"/>
    <property type="chains" value="C=1-71"/>
</dbReference>
<dbReference type="PDB" id="8GUT">
    <property type="method" value="EM"/>
    <property type="resolution" value="2.98 A"/>
    <property type="chains" value="C=1-71"/>
</dbReference>
<dbReference type="PDB" id="8GY7">
    <property type="method" value="EM"/>
    <property type="resolution" value="3.30 A"/>
    <property type="chains" value="G=1-71"/>
</dbReference>
<dbReference type="PDB" id="8H0P">
    <property type="method" value="EM"/>
    <property type="resolution" value="3.15 A"/>
    <property type="chains" value="G=1-71"/>
</dbReference>
<dbReference type="PDB" id="8H0Q">
    <property type="method" value="EM"/>
    <property type="resolution" value="3.30 A"/>
    <property type="chains" value="G=1-71"/>
</dbReference>
<dbReference type="PDB" id="8H2G">
    <property type="method" value="EM"/>
    <property type="resolution" value="3.01 A"/>
    <property type="chains" value="D=1-71"/>
</dbReference>
<dbReference type="PDB" id="8H4I">
    <property type="method" value="EM"/>
    <property type="resolution" value="3.06 A"/>
    <property type="chains" value="C=1-71"/>
</dbReference>
<dbReference type="PDB" id="8H4K">
    <property type="method" value="EM"/>
    <property type="resolution" value="3.10 A"/>
    <property type="chains" value="G=1-71"/>
</dbReference>
<dbReference type="PDB" id="8H4L">
    <property type="method" value="EM"/>
    <property type="resolution" value="3.07 A"/>
    <property type="chains" value="G=1-71"/>
</dbReference>
<dbReference type="PDB" id="8H8J">
    <property type="method" value="EM"/>
    <property type="resolution" value="3.20 A"/>
    <property type="chains" value="G=1-71"/>
</dbReference>
<dbReference type="PDB" id="8HBD">
    <property type="method" value="EM"/>
    <property type="resolution" value="2.99 A"/>
    <property type="chains" value="G=1-71"/>
</dbReference>
<dbReference type="PDB" id="8HCQ">
    <property type="method" value="EM"/>
    <property type="resolution" value="3.01 A"/>
    <property type="chains" value="G=1-71"/>
</dbReference>
<dbReference type="PDB" id="8HCX">
    <property type="method" value="EM"/>
    <property type="resolution" value="3.50 A"/>
    <property type="chains" value="G=1-71"/>
</dbReference>
<dbReference type="PDB" id="8HDO">
    <property type="method" value="EM"/>
    <property type="resolution" value="2.87 A"/>
    <property type="chains" value="G=1-71"/>
</dbReference>
<dbReference type="PDB" id="8HDP">
    <property type="method" value="EM"/>
    <property type="resolution" value="3.20 A"/>
    <property type="chains" value="G=1-71"/>
</dbReference>
<dbReference type="PDB" id="8HIX">
    <property type="method" value="EM"/>
    <property type="resolution" value="3.12 A"/>
    <property type="chains" value="G=1-71"/>
</dbReference>
<dbReference type="PDB" id="8HJ0">
    <property type="method" value="EM"/>
    <property type="resolution" value="3.12 A"/>
    <property type="chains" value="G=1-71"/>
</dbReference>
<dbReference type="PDB" id="8HJ1">
    <property type="method" value="EM"/>
    <property type="resolution" value="3.27 A"/>
    <property type="chains" value="G=1-71"/>
</dbReference>
<dbReference type="PDB" id="8HJ2">
    <property type="method" value="EM"/>
    <property type="resolution" value="3.80 A"/>
    <property type="chains" value="G=1-71"/>
</dbReference>
<dbReference type="PDB" id="8HJ5">
    <property type="method" value="EM"/>
    <property type="resolution" value="3.00 A"/>
    <property type="chains" value="D=1-71"/>
</dbReference>
<dbReference type="PDB" id="8HMP">
    <property type="method" value="EM"/>
    <property type="resolution" value="2.77 A"/>
    <property type="chains" value="G=1-71"/>
</dbReference>
<dbReference type="PDB" id="8HMV">
    <property type="method" value="EM"/>
    <property type="resolution" value="2.91 A"/>
    <property type="chains" value="G=6-62"/>
</dbReference>
<dbReference type="PDB" id="8HN8">
    <property type="method" value="EM"/>
    <property type="resolution" value="3.00 A"/>
    <property type="chains" value="G=1-71"/>
</dbReference>
<dbReference type="PDB" id="8HNK">
    <property type="method" value="EM"/>
    <property type="resolution" value="3.01 A"/>
    <property type="chains" value="G=1-71"/>
</dbReference>
<dbReference type="PDB" id="8HNL">
    <property type="method" value="EM"/>
    <property type="resolution" value="2.98 A"/>
    <property type="chains" value="G=1-71"/>
</dbReference>
<dbReference type="PDB" id="8HNM">
    <property type="method" value="EM"/>
    <property type="resolution" value="2.94 A"/>
    <property type="chains" value="G=1-71"/>
</dbReference>
<dbReference type="PDB" id="8HOC">
    <property type="method" value="EM"/>
    <property type="resolution" value="3.00 A"/>
    <property type="chains" value="G=1-71"/>
</dbReference>
<dbReference type="PDB" id="8HPT">
    <property type="method" value="EM"/>
    <property type="resolution" value="3.39 A"/>
    <property type="chains" value="G=7-62"/>
</dbReference>
<dbReference type="PDB" id="8HQC">
    <property type="method" value="EM"/>
    <property type="resolution" value="3.89 A"/>
    <property type="chains" value="G=1-71"/>
</dbReference>
<dbReference type="PDB" id="8HQE">
    <property type="method" value="EM"/>
    <property type="resolution" value="2.97 A"/>
    <property type="chains" value="C=5-62"/>
</dbReference>
<dbReference type="PDB" id="8HQM">
    <property type="method" value="EM"/>
    <property type="resolution" value="2.95 A"/>
    <property type="chains" value="C=5-62"/>
</dbReference>
<dbReference type="PDB" id="8HQN">
    <property type="method" value="EM"/>
    <property type="resolution" value="3.00 A"/>
    <property type="chains" value="C=5-62"/>
</dbReference>
<dbReference type="PDB" id="8HS3">
    <property type="method" value="EM"/>
    <property type="resolution" value="3.14 A"/>
    <property type="chains" value="C=1-71"/>
</dbReference>
<dbReference type="PDB" id="8HSC">
    <property type="method" value="EM"/>
    <property type="resolution" value="3.22 A"/>
    <property type="chains" value="C=1-71"/>
</dbReference>
<dbReference type="PDB" id="8HTI">
    <property type="method" value="EM"/>
    <property type="resolution" value="2.97 A"/>
    <property type="chains" value="G=1-71"/>
</dbReference>
<dbReference type="PDB" id="8HVI">
    <property type="method" value="EM"/>
    <property type="resolution" value="3.04 A"/>
    <property type="chains" value="D=5-62"/>
</dbReference>
<dbReference type="PDB" id="8I2G">
    <property type="method" value="EM"/>
    <property type="resolution" value="2.80 A"/>
    <property type="chains" value="G=1-71"/>
</dbReference>
<dbReference type="PDB" id="8I7V">
    <property type="method" value="EM"/>
    <property type="resolution" value="2.77 A"/>
    <property type="chains" value="D=1-71"/>
</dbReference>
<dbReference type="PDB" id="8I7W">
    <property type="method" value="EM"/>
    <property type="resolution" value="3.39 A"/>
    <property type="chains" value="D=1-71"/>
</dbReference>
<dbReference type="PDB" id="8I95">
    <property type="method" value="EM"/>
    <property type="resolution" value="2.88 A"/>
    <property type="chains" value="G=1-71"/>
</dbReference>
<dbReference type="PDB" id="8I97">
    <property type="method" value="EM"/>
    <property type="resolution" value="3.19 A"/>
    <property type="chains" value="G=1-71"/>
</dbReference>
<dbReference type="PDB" id="8I9A">
    <property type="method" value="EM"/>
    <property type="resolution" value="3.57 A"/>
    <property type="chains" value="G=1-71"/>
</dbReference>
<dbReference type="PDB" id="8I9L">
    <property type="method" value="EM"/>
    <property type="resolution" value="3.18 A"/>
    <property type="chains" value="G=1-71"/>
</dbReference>
<dbReference type="PDB" id="8I9S">
    <property type="method" value="EM"/>
    <property type="resolution" value="3.26 A"/>
    <property type="chains" value="G=1-71"/>
</dbReference>
<dbReference type="PDB" id="8IA2">
    <property type="method" value="EM"/>
    <property type="resolution" value="3.21 A"/>
    <property type="chains" value="G=1-71"/>
</dbReference>
<dbReference type="PDB" id="8IA7">
    <property type="method" value="EM"/>
    <property type="resolution" value="3.10 A"/>
    <property type="chains" value="C=2-71"/>
</dbReference>
<dbReference type="PDB" id="8IA8">
    <property type="method" value="EM"/>
    <property type="resolution" value="2.86 A"/>
    <property type="chains" value="G=1-71"/>
</dbReference>
<dbReference type="PDB" id="8IBU">
    <property type="method" value="EM"/>
    <property type="resolution" value="3.51 A"/>
    <property type="chains" value="G=2-71"/>
</dbReference>
<dbReference type="PDB" id="8IBV">
    <property type="method" value="EM"/>
    <property type="resolution" value="3.19 A"/>
    <property type="chains" value="G=2-71"/>
</dbReference>
<dbReference type="PDB" id="8IC0">
    <property type="method" value="EM"/>
    <property type="resolution" value="3.41 A"/>
    <property type="chains" value="D=1-71"/>
</dbReference>
<dbReference type="PDB" id="8ID3">
    <property type="method" value="EM"/>
    <property type="resolution" value="3.10 A"/>
    <property type="chains" value="Y=1-71"/>
</dbReference>
<dbReference type="PDB" id="8ID4">
    <property type="method" value="EM"/>
    <property type="resolution" value="3.10 A"/>
    <property type="chains" value="Y=1-71"/>
</dbReference>
<dbReference type="PDB" id="8ID6">
    <property type="method" value="EM"/>
    <property type="resolution" value="2.80 A"/>
    <property type="chains" value="Y=1-71"/>
</dbReference>
<dbReference type="PDB" id="8ID8">
    <property type="method" value="EM"/>
    <property type="resolution" value="3.00 A"/>
    <property type="chains" value="Y=1-71"/>
</dbReference>
<dbReference type="PDB" id="8ID9">
    <property type="method" value="EM"/>
    <property type="resolution" value="3.00 A"/>
    <property type="chains" value="Y=1-71"/>
</dbReference>
<dbReference type="PDB" id="8IEC">
    <property type="method" value="EM"/>
    <property type="resolution" value="3.18 A"/>
    <property type="chains" value="Y=1-71"/>
</dbReference>
<dbReference type="PDB" id="8IED">
    <property type="method" value="EM"/>
    <property type="resolution" value="3.33 A"/>
    <property type="chains" value="Y=1-71"/>
</dbReference>
<dbReference type="PDB" id="8IJ3">
    <property type="method" value="EM"/>
    <property type="resolution" value="3.28 A"/>
    <property type="chains" value="G=8-63"/>
</dbReference>
<dbReference type="PDB" id="8IJA">
    <property type="method" value="EM"/>
    <property type="resolution" value="2.69 A"/>
    <property type="chains" value="G=8-63"/>
</dbReference>
<dbReference type="PDB" id="8IJB">
    <property type="method" value="EM"/>
    <property type="resolution" value="3.23 A"/>
    <property type="chains" value="G=8-63"/>
</dbReference>
<dbReference type="PDB" id="8IJD">
    <property type="method" value="EM"/>
    <property type="resolution" value="3.25 A"/>
    <property type="chains" value="G=8-63"/>
</dbReference>
<dbReference type="PDB" id="8IKG">
    <property type="method" value="EM"/>
    <property type="resolution" value="3.40 A"/>
    <property type="chains" value="C=1-71"/>
</dbReference>
<dbReference type="PDB" id="8IKH">
    <property type="method" value="EM"/>
    <property type="resolution" value="3.30 A"/>
    <property type="chains" value="C=1-71"/>
</dbReference>
<dbReference type="PDB" id="8IKL">
    <property type="method" value="EM"/>
    <property type="resolution" value="2.33 A"/>
    <property type="chains" value="Y=1-71"/>
</dbReference>
<dbReference type="PDB" id="8IQ4">
    <property type="method" value="EM"/>
    <property type="resolution" value="2.70 A"/>
    <property type="chains" value="G=1-71"/>
</dbReference>
<dbReference type="PDB" id="8IQ6">
    <property type="method" value="EM"/>
    <property type="resolution" value="3.40 A"/>
    <property type="chains" value="G=1-71"/>
</dbReference>
<dbReference type="PDB" id="8IRR">
    <property type="method" value="EM"/>
    <property type="resolution" value="3.20 A"/>
    <property type="chains" value="G=2-68"/>
</dbReference>
<dbReference type="PDB" id="8IRS">
    <property type="method" value="EM"/>
    <property type="resolution" value="3.00 A"/>
    <property type="chains" value="G=1-71"/>
</dbReference>
<dbReference type="PDB" id="8IRT">
    <property type="method" value="EM"/>
    <property type="resolution" value="2.70 A"/>
    <property type="chains" value="G=1-71"/>
</dbReference>
<dbReference type="PDB" id="8IRU">
    <property type="method" value="EM"/>
    <property type="resolution" value="3.20 A"/>
    <property type="chains" value="G=1-71"/>
</dbReference>
<dbReference type="PDB" id="8IRV">
    <property type="method" value="EM"/>
    <property type="resolution" value="3.10 A"/>
    <property type="chains" value="G=1-71"/>
</dbReference>
<dbReference type="PDB" id="8ITF">
    <property type="method" value="EM"/>
    <property type="resolution" value="3.46 A"/>
    <property type="chains" value="C=5-62"/>
</dbReference>
<dbReference type="PDB" id="8IUK">
    <property type="method" value="EM"/>
    <property type="resolution" value="2.67 A"/>
    <property type="chains" value="G=1-71"/>
</dbReference>
<dbReference type="PDB" id="8IUL">
    <property type="method" value="EM"/>
    <property type="resolution" value="2.78 A"/>
    <property type="chains" value="G=1-71"/>
</dbReference>
<dbReference type="PDB" id="8IUM">
    <property type="method" value="EM"/>
    <property type="resolution" value="3.14 A"/>
    <property type="chains" value="G=1-71"/>
</dbReference>
<dbReference type="PDB" id="8IW1">
    <property type="method" value="EM"/>
    <property type="resolution" value="3.40 A"/>
    <property type="chains" value="C=5-63"/>
</dbReference>
<dbReference type="PDB" id="8IW4">
    <property type="method" value="EM"/>
    <property type="resolution" value="3.49 A"/>
    <property type="chains" value="C=5-63"/>
</dbReference>
<dbReference type="PDB" id="8IW7">
    <property type="method" value="EM"/>
    <property type="resolution" value="2.97 A"/>
    <property type="chains" value="Y=5-63"/>
</dbReference>
<dbReference type="PDB" id="8IW9">
    <property type="method" value="EM"/>
    <property type="resolution" value="3.08 A"/>
    <property type="chains" value="C=5-63"/>
</dbReference>
<dbReference type="PDB" id="8IY9">
    <property type="method" value="EM"/>
    <property type="resolution" value="3.37 A"/>
    <property type="chains" value="G=1-71"/>
</dbReference>
<dbReference type="PDB" id="8IYH">
    <property type="method" value="EM"/>
    <property type="resolution" value="3.30 A"/>
    <property type="chains" value="G=1-71"/>
</dbReference>
<dbReference type="PDB" id="8IYS">
    <property type="method" value="EM"/>
    <property type="resolution" value="2.95 A"/>
    <property type="chains" value="G=1-71"/>
</dbReference>
<dbReference type="PDB" id="8IYW">
    <property type="method" value="EM"/>
    <property type="resolution" value="3.45 A"/>
    <property type="chains" value="G=1-71"/>
</dbReference>
<dbReference type="PDB" id="8IZ4">
    <property type="method" value="EM"/>
    <property type="resolution" value="2.93 A"/>
    <property type="chains" value="C=1-71"/>
</dbReference>
<dbReference type="PDB" id="8IZB">
    <property type="method" value="EM"/>
    <property type="resolution" value="3.06 A"/>
    <property type="chains" value="C=1-71"/>
</dbReference>
<dbReference type="PDB" id="8J18">
    <property type="method" value="EM"/>
    <property type="resolution" value="2.89 A"/>
    <property type="chains" value="G=1-71"/>
</dbReference>
<dbReference type="PDB" id="8J19">
    <property type="method" value="EM"/>
    <property type="resolution" value="3.23 A"/>
    <property type="chains" value="G=1-71"/>
</dbReference>
<dbReference type="PDB" id="8J1A">
    <property type="method" value="EM"/>
    <property type="resolution" value="3.24 A"/>
    <property type="chains" value="G=1-71"/>
</dbReference>
<dbReference type="PDB" id="8J20">
    <property type="method" value="EM"/>
    <property type="resolution" value="3.20 A"/>
    <property type="chains" value="E=1-71"/>
</dbReference>
<dbReference type="PDB" id="8J21">
    <property type="method" value="EM"/>
    <property type="resolution" value="3.30 A"/>
    <property type="chains" value="E=1-71"/>
</dbReference>
<dbReference type="PDB" id="8J22">
    <property type="method" value="EM"/>
    <property type="resolution" value="3.20 A"/>
    <property type="chains" value="D=1-71"/>
</dbReference>
<dbReference type="PDB" id="8J23">
    <property type="method" value="EM"/>
    <property type="resolution" value="3.20 A"/>
    <property type="chains" value="D=1-71"/>
</dbReference>
<dbReference type="PDB" id="8J24">
    <property type="method" value="EM"/>
    <property type="resolution" value="2.60 A"/>
    <property type="chains" value="F=1-71"/>
</dbReference>
<dbReference type="PDB" id="8J6D">
    <property type="method" value="EM"/>
    <property type="resolution" value="3.10 A"/>
    <property type="chains" value="G=1-71"/>
</dbReference>
<dbReference type="PDB" id="8J6I">
    <property type="method" value="EM"/>
    <property type="resolution" value="2.92 A"/>
    <property type="chains" value="G=8-63"/>
</dbReference>
<dbReference type="PDB" id="8J6J">
    <property type="method" value="EM"/>
    <property type="resolution" value="2.80 A"/>
    <property type="chains" value="G=2-71"/>
</dbReference>
<dbReference type="PDB" id="8J6L">
    <property type="method" value="EM"/>
    <property type="resolution" value="3.05 A"/>
    <property type="chains" value="G=2-71"/>
</dbReference>
<dbReference type="PDB" id="8J6P">
    <property type="method" value="EM"/>
    <property type="resolution" value="2.55 A"/>
    <property type="chains" value="G=5-62"/>
</dbReference>
<dbReference type="PDB" id="8J6Q">
    <property type="method" value="EM"/>
    <property type="resolution" value="2.60 A"/>
    <property type="chains" value="G=5-62"/>
</dbReference>
<dbReference type="PDB" id="8J6R">
    <property type="method" value="EM"/>
    <property type="resolution" value="2.76 A"/>
    <property type="chains" value="G=5-62"/>
</dbReference>
<dbReference type="PDB" id="8J9N">
    <property type="method" value="EM"/>
    <property type="resolution" value="3.50 A"/>
    <property type="chains" value="E=1-71"/>
</dbReference>
<dbReference type="PDB" id="8JD3">
    <property type="method" value="EM"/>
    <property type="resolution" value="3.30 A"/>
    <property type="chains" value="C=1-71"/>
</dbReference>
<dbReference type="PDB" id="8JD5">
    <property type="method" value="EM"/>
    <property type="resolution" value="3.60 A"/>
    <property type="chains" value="C=1-71"/>
</dbReference>
<dbReference type="PDB" id="8JD6">
    <property type="method" value="EM"/>
    <property type="resolution" value="3.40 A"/>
    <property type="chains" value="C=1-71"/>
</dbReference>
<dbReference type="PDB" id="8JEF">
    <property type="method" value="EM"/>
    <property type="resolution" value="2.96 A"/>
    <property type="chains" value="G=8-63"/>
</dbReference>
<dbReference type="PDB" id="8JEI">
    <property type="method" value="EM"/>
    <property type="resolution" value="2.73 A"/>
    <property type="chains" value="G=8-63"/>
</dbReference>
<dbReference type="PDB" id="8JER">
    <property type="method" value="EM"/>
    <property type="resolution" value="3.45 A"/>
    <property type="chains" value="G=1-71"/>
</dbReference>
<dbReference type="PDB" id="8JGB">
    <property type="method" value="EM"/>
    <property type="resolution" value="2.84 A"/>
    <property type="chains" value="G=5-64"/>
</dbReference>
<dbReference type="PDB" id="8JGF">
    <property type="method" value="EM"/>
    <property type="resolution" value="2.70 A"/>
    <property type="chains" value="G=5-62"/>
</dbReference>
<dbReference type="PDB" id="8JGG">
    <property type="method" value="EM"/>
    <property type="resolution" value="3.00 A"/>
    <property type="chains" value="G=5-64"/>
</dbReference>
<dbReference type="PDB" id="8JHB">
    <property type="method" value="EM"/>
    <property type="resolution" value="3.30 A"/>
    <property type="chains" value="C=5-71"/>
</dbReference>
<dbReference type="PDB" id="8JHI">
    <property type="method" value="EM"/>
    <property type="resolution" value="3.20 A"/>
    <property type="chains" value="C=6-62"/>
</dbReference>
<dbReference type="PDB" id="8JHN">
    <property type="method" value="EM"/>
    <property type="resolution" value="3.75 A"/>
    <property type="chains" value="G=1-71"/>
</dbReference>
<dbReference type="PDB" id="8JHY">
    <property type="method" value="EM"/>
    <property type="resolution" value="2.87 A"/>
    <property type="chains" value="C=1-71"/>
</dbReference>
<dbReference type="PDB" id="8JII">
    <property type="method" value="EM"/>
    <property type="resolution" value="3.17 A"/>
    <property type="chains" value="C=1-71"/>
</dbReference>
<dbReference type="PDB" id="8JIL">
    <property type="method" value="EM"/>
    <property type="resolution" value="3.50 A"/>
    <property type="chains" value="C=1-71"/>
</dbReference>
<dbReference type="PDB" id="8JIM">
    <property type="method" value="EM"/>
    <property type="resolution" value="2.98 A"/>
    <property type="chains" value="C=1-71"/>
</dbReference>
<dbReference type="PDB" id="8JJP">
    <property type="method" value="EM"/>
    <property type="resolution" value="2.90 A"/>
    <property type="chains" value="G=8-63"/>
</dbReference>
<dbReference type="PDB" id="8JKB">
    <property type="method" value="EM"/>
    <property type="resolution" value="3.27 A"/>
    <property type="chains" value="G/L/M/N/O=1-71"/>
</dbReference>
<dbReference type="PDB" id="8JLJ">
    <property type="method" value="EM"/>
    <property type="resolution" value="3.10 A"/>
    <property type="chains" value="Y=1-71"/>
</dbReference>
<dbReference type="PDB" id="8JLK">
    <property type="method" value="EM"/>
    <property type="resolution" value="3.22 A"/>
    <property type="chains" value="Y=1-71"/>
</dbReference>
<dbReference type="PDB" id="8JLN">
    <property type="method" value="EM"/>
    <property type="resolution" value="3.24 A"/>
    <property type="chains" value="Y=1-71"/>
</dbReference>
<dbReference type="PDB" id="8JLO">
    <property type="method" value="EM"/>
    <property type="resolution" value="3.52 A"/>
    <property type="chains" value="Y=1-71"/>
</dbReference>
<dbReference type="PDB" id="8JLP">
    <property type="method" value="EM"/>
    <property type="resolution" value="3.23 A"/>
    <property type="chains" value="Y=1-71"/>
</dbReference>
<dbReference type="PDB" id="8JLQ">
    <property type="method" value="EM"/>
    <property type="resolution" value="2.84 A"/>
    <property type="chains" value="Y=1-71"/>
</dbReference>
<dbReference type="PDB" id="8JLR">
    <property type="method" value="EM"/>
    <property type="resolution" value="3.00 A"/>
    <property type="chains" value="Y=1-71"/>
</dbReference>
<dbReference type="PDB" id="8JLZ">
    <property type="method" value="EM"/>
    <property type="resolution" value="3.09 A"/>
    <property type="chains" value="G=5-62"/>
</dbReference>
<dbReference type="PDB" id="8JPN">
    <property type="method" value="EM"/>
    <property type="resolution" value="2.90 A"/>
    <property type="chains" value="C=1-71"/>
</dbReference>
<dbReference type="PDB" id="8JPP">
    <property type="method" value="EM"/>
    <property type="resolution" value="3.20 A"/>
    <property type="chains" value="G=1-71"/>
</dbReference>
<dbReference type="PDB" id="8JR9">
    <property type="method" value="EM"/>
    <property type="resolution" value="2.57 A"/>
    <property type="chains" value="G=1-71"/>
</dbReference>
<dbReference type="PDB" id="8JSP">
    <property type="method" value="EM"/>
    <property type="resolution" value="3.65 A"/>
    <property type="chains" value="G=18-62"/>
</dbReference>
<dbReference type="PDB" id="8JSR">
    <property type="method" value="EM"/>
    <property type="resolution" value="2.90 A"/>
    <property type="chains" value="G=1-71"/>
</dbReference>
<dbReference type="PDB" id="8JT6">
    <property type="method" value="EM"/>
    <property type="resolution" value="3.00 A"/>
    <property type="chains" value="G=2-68"/>
</dbReference>
<dbReference type="PDB" id="8JXT">
    <property type="method" value="EM"/>
    <property type="resolution" value="3.07 A"/>
    <property type="chains" value="D=1-71"/>
</dbReference>
<dbReference type="PDB" id="8JXV">
    <property type="method" value="EM"/>
    <property type="resolution" value="3.21 A"/>
    <property type="chains" value="D=1-71"/>
</dbReference>
<dbReference type="PDB" id="8JXW">
    <property type="method" value="EM"/>
    <property type="resolution" value="3.01 A"/>
    <property type="chains" value="D=1-71"/>
</dbReference>
<dbReference type="PDB" id="8JXX">
    <property type="method" value="EM"/>
    <property type="resolution" value="3.06 A"/>
    <property type="chains" value="D=1-71"/>
</dbReference>
<dbReference type="PDB" id="8JZ7">
    <property type="method" value="EM"/>
    <property type="resolution" value="2.60 A"/>
    <property type="chains" value="C=1-71"/>
</dbReference>
<dbReference type="PDB" id="8JZP">
    <property type="method" value="EM"/>
    <property type="resolution" value="3.45 A"/>
    <property type="chains" value="G=1-71"/>
</dbReference>
<dbReference type="PDB" id="8JZZ">
    <property type="method" value="EM"/>
    <property type="resolution" value="3.31 A"/>
    <property type="chains" value="G=1-71"/>
</dbReference>
<dbReference type="PDB" id="8K2X">
    <property type="method" value="EM"/>
    <property type="resolution" value="3.20 A"/>
    <property type="chains" value="G=1-71"/>
</dbReference>
<dbReference type="PDB" id="8K3Z">
    <property type="method" value="EM"/>
    <property type="resolution" value="2.81 A"/>
    <property type="chains" value="G=9-63"/>
</dbReference>
<dbReference type="PDB" id="8K4N">
    <property type="method" value="EM"/>
    <property type="resolution" value="2.83 A"/>
    <property type="chains" value="C=9-61"/>
</dbReference>
<dbReference type="PDB" id="8K4O">
    <property type="method" value="EM"/>
    <property type="resolution" value="3.01 A"/>
    <property type="chains" value="G=9-62"/>
</dbReference>
<dbReference type="PDB" id="8K4P">
    <property type="method" value="EM"/>
    <property type="resolution" value="2.81 A"/>
    <property type="chains" value="G=8-62"/>
</dbReference>
<dbReference type="PDB" id="8K4S">
    <property type="method" value="EM"/>
    <property type="resolution" value="2.90 A"/>
    <property type="chains" value="C=1-71"/>
</dbReference>
<dbReference type="PDB" id="8K6M">
    <property type="method" value="EM"/>
    <property type="resolution" value="3.30 A"/>
    <property type="chains" value="C=1-71"/>
</dbReference>
<dbReference type="PDB" id="8K6N">
    <property type="method" value="EM"/>
    <property type="resolution" value="3.20 A"/>
    <property type="chains" value="C=1-71"/>
</dbReference>
<dbReference type="PDB" id="8K6O">
    <property type="method" value="EM"/>
    <property type="resolution" value="3.30 A"/>
    <property type="chains" value="C=1-71"/>
</dbReference>
<dbReference type="PDB" id="8K8J">
    <property type="method" value="EM"/>
    <property type="resolution" value="2.88 A"/>
    <property type="chains" value="G=1-71"/>
</dbReference>
<dbReference type="PDB" id="8K9K">
    <property type="method" value="EM"/>
    <property type="resolution" value="2.98 A"/>
    <property type="chains" value="G=1-71"/>
</dbReference>
<dbReference type="PDB" id="8K9L">
    <property type="method" value="EM"/>
    <property type="resolution" value="3.05 A"/>
    <property type="chains" value="G=2-71"/>
</dbReference>
<dbReference type="PDB" id="8KFX">
    <property type="method" value="EM"/>
    <property type="resolution" value="2.96 A"/>
    <property type="chains" value="C=1-71"/>
</dbReference>
<dbReference type="PDB" id="8KFY">
    <property type="method" value="EM"/>
    <property type="resolution" value="3.06 A"/>
    <property type="chains" value="C=1-71"/>
</dbReference>
<dbReference type="PDB" id="8KFZ">
    <property type="method" value="EM"/>
    <property type="resolution" value="3.30 A"/>
    <property type="chains" value="C=1-71"/>
</dbReference>
<dbReference type="PDB" id="8KGG">
    <property type="method" value="EM"/>
    <property type="resolution" value="3.06 A"/>
    <property type="chains" value="G=1-71"/>
</dbReference>
<dbReference type="PDB" id="8KGK">
    <property type="method" value="EM"/>
    <property type="resolution" value="3.16 A"/>
    <property type="chains" value="D=1-71"/>
</dbReference>
<dbReference type="PDB" id="8KH4">
    <property type="method" value="EM"/>
    <property type="resolution" value="3.10 A"/>
    <property type="chains" value="D=1-71"/>
</dbReference>
<dbReference type="PDB" id="8KH5">
    <property type="method" value="EM"/>
    <property type="resolution" value="2.83 A"/>
    <property type="chains" value="D=1-71"/>
</dbReference>
<dbReference type="PDB" id="8PJK">
    <property type="method" value="EM"/>
    <property type="resolution" value="2.40 A"/>
    <property type="chains" value="G=1-71"/>
</dbReference>
<dbReference type="PDB" id="8PKM">
    <property type="method" value="EM"/>
    <property type="resolution" value="2.90 A"/>
    <property type="chains" value="G=1-71"/>
</dbReference>
<dbReference type="PDB" id="8PM2">
    <property type="method" value="EM"/>
    <property type="resolution" value="2.92 A"/>
    <property type="chains" value="G=1-71"/>
</dbReference>
<dbReference type="PDB" id="8POK">
    <property type="method" value="EM"/>
    <property type="resolution" value="3.40 A"/>
    <property type="chains" value="D=1-68"/>
</dbReference>
<dbReference type="PDB" id="8QJ2">
    <property type="method" value="EM"/>
    <property type="resolution" value="3.40 A"/>
    <property type="chains" value="G=1-71"/>
</dbReference>
<dbReference type="PDB" id="8RQL">
    <property type="method" value="EM"/>
    <property type="resolution" value="3.03 A"/>
    <property type="chains" value="G=1-71"/>
</dbReference>
<dbReference type="PDB" id="8SAI">
    <property type="method" value="EM"/>
    <property type="resolution" value="3.27 A"/>
    <property type="chains" value="C=1-71"/>
</dbReference>
<dbReference type="PDB" id="8SG1">
    <property type="method" value="EM"/>
    <property type="resolution" value="2.94 A"/>
    <property type="chains" value="G=9-62"/>
</dbReference>
<dbReference type="PDB" id="8SL3">
    <property type="method" value="EM"/>
    <property type="resolution" value="7.00 A"/>
    <property type="chains" value="G=1-71"/>
</dbReference>
<dbReference type="PDB" id="8SMV">
    <property type="method" value="EM"/>
    <property type="resolution" value="2.74 A"/>
    <property type="chains" value="G=1-71"/>
</dbReference>
<dbReference type="PDB" id="8SZG">
    <property type="method" value="EM"/>
    <property type="resolution" value="3.60 A"/>
    <property type="chains" value="E=1-71"/>
</dbReference>
<dbReference type="PDB" id="8SZH">
    <property type="method" value="EM"/>
    <property type="resolution" value="3.10 A"/>
    <property type="chains" value="E=1-71"/>
</dbReference>
<dbReference type="PDB" id="8SZI">
    <property type="method" value="EM"/>
    <property type="resolution" value="3.50 A"/>
    <property type="chains" value="E=1-71"/>
</dbReference>
<dbReference type="PDB" id="8T3O">
    <property type="method" value="EM"/>
    <property type="resolution" value="3.06 A"/>
    <property type="chains" value="G=6-62"/>
</dbReference>
<dbReference type="PDB" id="8T3Q">
    <property type="method" value="EM"/>
    <property type="resolution" value="3.14 A"/>
    <property type="chains" value="G=6-62"/>
</dbReference>
<dbReference type="PDB" id="8T3S">
    <property type="method" value="EM"/>
    <property type="resolution" value="3.07 A"/>
    <property type="chains" value="G=6-62"/>
</dbReference>
<dbReference type="PDB" id="8T3V">
    <property type="method" value="EM"/>
    <property type="resolution" value="3.39 A"/>
    <property type="chains" value="G=6-62"/>
</dbReference>
<dbReference type="PDB" id="8TB0">
    <property type="method" value="EM"/>
    <property type="resolution" value="3.47 A"/>
    <property type="chains" value="G=1-71"/>
</dbReference>
<dbReference type="PDB" id="8THK">
    <property type="method" value="EM"/>
    <property type="resolution" value="2.60 A"/>
    <property type="chains" value="G=1-71"/>
</dbReference>
<dbReference type="PDB" id="8THL">
    <property type="method" value="EM"/>
    <property type="resolution" value="3.10 A"/>
    <property type="chains" value="G=1-71"/>
</dbReference>
<dbReference type="PDB" id="8TYW">
    <property type="method" value="EM"/>
    <property type="resolution" value="3.43 A"/>
    <property type="chains" value="G=1-71"/>
</dbReference>
<dbReference type="PDB" id="8TZQ">
    <property type="method" value="EM"/>
    <property type="resolution" value="3.20 A"/>
    <property type="chains" value="C=1-71"/>
</dbReference>
<dbReference type="PDB" id="8U02">
    <property type="method" value="EM"/>
    <property type="resolution" value="3.28 A"/>
    <property type="chains" value="C=1-71"/>
</dbReference>
<dbReference type="PDB" id="8U1U">
    <property type="method" value="EM"/>
    <property type="resolution" value="3.10 A"/>
    <property type="chains" value="D=1-71"/>
</dbReference>
<dbReference type="PDB" id="8U26">
    <property type="method" value="EM"/>
    <property type="resolution" value="2.50 A"/>
    <property type="chains" value="G=1-68"/>
</dbReference>
<dbReference type="PDB" id="8U4N">
    <property type="method" value="EM"/>
    <property type="resolution" value="2.72 A"/>
    <property type="chains" value="C=1-71"/>
</dbReference>
<dbReference type="PDB" id="8U4O">
    <property type="method" value="EM"/>
    <property type="resolution" value="3.29 A"/>
    <property type="chains" value="C=1-71"/>
</dbReference>
<dbReference type="PDB" id="8U4P">
    <property type="method" value="EM"/>
    <property type="resolution" value="3.15 A"/>
    <property type="chains" value="C=1-71"/>
</dbReference>
<dbReference type="PDB" id="8U4Q">
    <property type="method" value="EM"/>
    <property type="resolution" value="3.36 A"/>
    <property type="chains" value="C=1-71"/>
</dbReference>
<dbReference type="PDB" id="8U7Z">
    <property type="method" value="EM"/>
    <property type="resolution" value="2.97 A"/>
    <property type="chains" value="G1/G2/G3/G4/G5=1-71"/>
</dbReference>
<dbReference type="PDB" id="8U81">
    <property type="method" value="EM"/>
    <property type="resolution" value="3.82 A"/>
    <property type="chains" value="G1/G2/G3/G4/G5=1-71"/>
</dbReference>
<dbReference type="PDB" id="8U82">
    <property type="method" value="EM"/>
    <property type="resolution" value="3.84 A"/>
    <property type="chains" value="G1/G2/G3/G4/G5=1-71"/>
</dbReference>
<dbReference type="PDB" id="8U83">
    <property type="method" value="EM"/>
    <property type="resolution" value="3.98 A"/>
    <property type="chains" value="G1/G2/G3/G4/G5=1-71"/>
</dbReference>
<dbReference type="PDB" id="8U84">
    <property type="method" value="EM"/>
    <property type="resolution" value="3.88 A"/>
    <property type="chains" value="G1/G2/G3/G4/G5=1-71"/>
</dbReference>
<dbReference type="PDB" id="8U8F">
    <property type="method" value="EM"/>
    <property type="resolution" value="3.49 A"/>
    <property type="chains" value="G=5-62"/>
</dbReference>
<dbReference type="PDB" id="8UGY">
    <property type="method" value="EM"/>
    <property type="resolution" value="3.31 A"/>
    <property type="chains" value="G=1-71"/>
</dbReference>
<dbReference type="PDB" id="8UH3">
    <property type="method" value="EM"/>
    <property type="resolution" value="3.31 A"/>
    <property type="chains" value="G=1-71"/>
</dbReference>
<dbReference type="PDB" id="8UHB">
    <property type="method" value="EM"/>
    <property type="resolution" value="3.35 A"/>
    <property type="chains" value="G=1-71"/>
</dbReference>
<dbReference type="PDB" id="8UNL">
    <property type="method" value="EM"/>
    <property type="resolution" value="3.30 A"/>
    <property type="chains" value="G=1-71"/>
</dbReference>
<dbReference type="PDB" id="8UNM">
    <property type="method" value="EM"/>
    <property type="resolution" value="3.40 A"/>
    <property type="chains" value="G=1-71"/>
</dbReference>
<dbReference type="PDB" id="8UNN">
    <property type="method" value="EM"/>
    <property type="resolution" value="3.40 A"/>
    <property type="chains" value="G=1-71"/>
</dbReference>
<dbReference type="PDB" id="8UNO">
    <property type="method" value="EM"/>
    <property type="resolution" value="3.30 A"/>
    <property type="chains" value="G=1-71"/>
</dbReference>
<dbReference type="PDB" id="8UNP">
    <property type="method" value="EM"/>
    <property type="resolution" value="3.30 A"/>
    <property type="chains" value="G=1-71"/>
</dbReference>
<dbReference type="PDB" id="8UNQ">
    <property type="method" value="EM"/>
    <property type="resolution" value="3.30 A"/>
    <property type="chains" value="G=1-71"/>
</dbReference>
<dbReference type="PDB" id="8UNR">
    <property type="method" value="EM"/>
    <property type="resolution" value="3.40 A"/>
    <property type="chains" value="G=1-71"/>
</dbReference>
<dbReference type="PDB" id="8UNS">
    <property type="method" value="EM"/>
    <property type="resolution" value="3.40 A"/>
    <property type="chains" value="G=1-71"/>
</dbReference>
<dbReference type="PDB" id="8UNT">
    <property type="method" value="EM"/>
    <property type="resolution" value="3.40 A"/>
    <property type="chains" value="G=1-71"/>
</dbReference>
<dbReference type="PDB" id="8UNU">
    <property type="method" value="EM"/>
    <property type="resolution" value="3.50 A"/>
    <property type="chains" value="G=1-71"/>
</dbReference>
<dbReference type="PDB" id="8UNV">
    <property type="method" value="EM"/>
    <property type="resolution" value="3.30 A"/>
    <property type="chains" value="G=1-71"/>
</dbReference>
<dbReference type="PDB" id="8UNW">
    <property type="method" value="EM"/>
    <property type="resolution" value="3.40 A"/>
    <property type="chains" value="G=1-71"/>
</dbReference>
<dbReference type="PDB" id="8UNX">
    <property type="method" value="EM"/>
    <property type="resolution" value="3.60 A"/>
    <property type="chains" value="G=1-71"/>
</dbReference>
<dbReference type="PDB" id="8UNY">
    <property type="method" value="EM"/>
    <property type="resolution" value="3.60 A"/>
    <property type="chains" value="G=1-71"/>
</dbReference>
<dbReference type="PDB" id="8UNZ">
    <property type="method" value="EM"/>
    <property type="resolution" value="3.80 A"/>
    <property type="chains" value="G=1-71"/>
</dbReference>
<dbReference type="PDB" id="8UO0">
    <property type="method" value="EM"/>
    <property type="resolution" value="3.50 A"/>
    <property type="chains" value="G=1-71"/>
</dbReference>
<dbReference type="PDB" id="8UO1">
    <property type="method" value="EM"/>
    <property type="resolution" value="3.60 A"/>
    <property type="chains" value="G=1-71"/>
</dbReference>
<dbReference type="PDB" id="8UO2">
    <property type="method" value="EM"/>
    <property type="resolution" value="3.60 A"/>
    <property type="chains" value="G=1-71"/>
</dbReference>
<dbReference type="PDB" id="8UO3">
    <property type="method" value="EM"/>
    <property type="resolution" value="3.50 A"/>
    <property type="chains" value="G=1-71"/>
</dbReference>
<dbReference type="PDB" id="8UO4">
    <property type="method" value="EM"/>
    <property type="resolution" value="4.00 A"/>
    <property type="chains" value="G=1-71"/>
</dbReference>
<dbReference type="PDB" id="8UQO">
    <property type="method" value="EM"/>
    <property type="resolution" value="3.37 A"/>
    <property type="chains" value="D/G=1-71"/>
</dbReference>
<dbReference type="PDB" id="8UTD">
    <property type="method" value="EM"/>
    <property type="resolution" value="3.24 A"/>
    <property type="chains" value="C=1-71"/>
</dbReference>
<dbReference type="PDB" id="8UUJ">
    <property type="method" value="EM"/>
    <property type="resolution" value="2.62 A"/>
    <property type="chains" value="C=1-71"/>
</dbReference>
<dbReference type="PDB" id="8UWL">
    <property type="method" value="EM"/>
    <property type="resolution" value="2.80 A"/>
    <property type="chains" value="D=1-71"/>
</dbReference>
<dbReference type="PDB" id="8UXV">
    <property type="method" value="EM"/>
    <property type="resolution" value="3.20 A"/>
    <property type="chains" value="Z=1-71"/>
</dbReference>
<dbReference type="PDB" id="8UXY">
    <property type="method" value="EM"/>
    <property type="resolution" value="3.30 A"/>
    <property type="chains" value="Z=1-71"/>
</dbReference>
<dbReference type="PDB" id="8UY0">
    <property type="method" value="EM"/>
    <property type="resolution" value="3.20 A"/>
    <property type="chains" value="Z=1-71"/>
</dbReference>
<dbReference type="PDB" id="8UYQ">
    <property type="method" value="EM"/>
    <property type="resolution" value="3.50 A"/>
    <property type="chains" value="Z=1-71"/>
</dbReference>
<dbReference type="PDB" id="8V6U">
    <property type="method" value="EM"/>
    <property type="resolution" value="3.00 A"/>
    <property type="chains" value="D=1-71"/>
</dbReference>
<dbReference type="PDB" id="8VHF">
    <property type="method" value="EM"/>
    <property type="resolution" value="3.51 A"/>
    <property type="chains" value="C=1-71"/>
</dbReference>
<dbReference type="PDB" id="8VVE">
    <property type="method" value="EM"/>
    <property type="resolution" value="3.30 A"/>
    <property type="chains" value="D=1-71"/>
</dbReference>
<dbReference type="PDB" id="8VVF">
    <property type="method" value="EM"/>
    <property type="resolution" value="3.00 A"/>
    <property type="chains" value="D=1-71"/>
</dbReference>
<dbReference type="PDB" id="8VVG">
    <property type="method" value="EM"/>
    <property type="resolution" value="3.30 A"/>
    <property type="chains" value="D=1-71"/>
</dbReference>
<dbReference type="PDB" id="8VY7">
    <property type="method" value="EM"/>
    <property type="resolution" value="2.68 A"/>
    <property type="chains" value="C=1-71"/>
</dbReference>
<dbReference type="PDB" id="8VY9">
    <property type="method" value="EM"/>
    <property type="resolution" value="2.88 A"/>
    <property type="chains" value="C=1-71"/>
</dbReference>
<dbReference type="PDB" id="8W87">
    <property type="method" value="EM"/>
    <property type="resolution" value="2.80 A"/>
    <property type="chains" value="G=1-71"/>
</dbReference>
<dbReference type="PDB" id="8W88">
    <property type="method" value="EM"/>
    <property type="resolution" value="2.60 A"/>
    <property type="chains" value="G=1-71"/>
</dbReference>
<dbReference type="PDB" id="8W89">
    <property type="method" value="EM"/>
    <property type="resolution" value="3.00 A"/>
    <property type="chains" value="G=1-71"/>
</dbReference>
<dbReference type="PDB" id="8W8A">
    <property type="method" value="EM"/>
    <property type="resolution" value="2.80 A"/>
    <property type="chains" value="G=1-71"/>
</dbReference>
<dbReference type="PDB" id="8W8B">
    <property type="method" value="EM"/>
    <property type="resolution" value="3.00 A"/>
    <property type="chains" value="G=1-71"/>
</dbReference>
<dbReference type="PDB" id="8W8Q">
    <property type="method" value="EM"/>
    <property type="resolution" value="2.89 A"/>
    <property type="chains" value="G=5-62"/>
</dbReference>
<dbReference type="PDB" id="8W8R">
    <property type="method" value="EM"/>
    <property type="resolution" value="3.30 A"/>
    <property type="chains" value="Y=5-62"/>
</dbReference>
<dbReference type="PDB" id="8WC3">
    <property type="method" value="EM"/>
    <property type="resolution" value="3.00 A"/>
    <property type="chains" value="Y=1-71"/>
</dbReference>
<dbReference type="PDB" id="8WC4">
    <property type="method" value="EM"/>
    <property type="resolution" value="3.10 A"/>
    <property type="chains" value="Y=1-71"/>
</dbReference>
<dbReference type="PDB" id="8WC5">
    <property type="method" value="EM"/>
    <property type="resolution" value="3.30 A"/>
    <property type="chains" value="Y=1-71"/>
</dbReference>
<dbReference type="PDB" id="8WC6">
    <property type="method" value="EM"/>
    <property type="resolution" value="3.20 A"/>
    <property type="chains" value="Y=1-71"/>
</dbReference>
<dbReference type="PDB" id="8WC7">
    <property type="method" value="EM"/>
    <property type="resolution" value="3.10 A"/>
    <property type="chains" value="Y=1-71"/>
</dbReference>
<dbReference type="PDB" id="8WC8">
    <property type="method" value="EM"/>
    <property type="resolution" value="2.90 A"/>
    <property type="chains" value="Y=1-71"/>
</dbReference>
<dbReference type="PDB" id="8WC9">
    <property type="method" value="EM"/>
    <property type="resolution" value="3.20 A"/>
    <property type="chains" value="Y=1-71"/>
</dbReference>
<dbReference type="PDB" id="8WCA">
    <property type="method" value="EM"/>
    <property type="resolution" value="3.48 A"/>
    <property type="chains" value="Y=1-71"/>
</dbReference>
<dbReference type="PDB" id="8WCB">
    <property type="method" value="EM"/>
    <property type="resolution" value="3.10 A"/>
    <property type="chains" value="Y=1-71"/>
</dbReference>
<dbReference type="PDB" id="8WGB">
    <property type="method" value="EM"/>
    <property type="resolution" value="3.70 A"/>
    <property type="chains" value="E=1-71"/>
</dbReference>
<dbReference type="PDB" id="8WJX">
    <property type="method" value="EM"/>
    <property type="resolution" value="3.20 A"/>
    <property type="chains" value="G=1-71"/>
</dbReference>
<dbReference type="PDB" id="8WOG">
    <property type="method" value="EM"/>
    <property type="resolution" value="2.97 A"/>
    <property type="chains" value="E=8-63"/>
</dbReference>
<dbReference type="PDB" id="8WP1">
    <property type="method" value="EM"/>
    <property type="resolution" value="3.15 A"/>
    <property type="chains" value="E=8-63"/>
</dbReference>
<dbReference type="PDB" id="8WPU">
    <property type="method" value="EM"/>
    <property type="resolution" value="3.10 A"/>
    <property type="chains" value="D=1-71"/>
</dbReference>
<dbReference type="PDB" id="8WRB">
    <property type="method" value="EM"/>
    <property type="resolution" value="2.91 A"/>
    <property type="chains" value="C=1-71"/>
</dbReference>
<dbReference type="PDB" id="8WSS">
    <property type="method" value="EM"/>
    <property type="resolution" value="3.01 A"/>
    <property type="chains" value="G=1-71"/>
</dbReference>
<dbReference type="PDB" id="8WST">
    <property type="method" value="EM"/>
    <property type="resolution" value="2.40 A"/>
    <property type="chains" value="G=1-71"/>
</dbReference>
<dbReference type="PDB" id="8WW2">
    <property type="method" value="EM"/>
    <property type="resolution" value="2.79 A"/>
    <property type="chains" value="G=1-71"/>
</dbReference>
<dbReference type="PDB" id="8WWH">
    <property type="method" value="EM"/>
    <property type="resolution" value="2.84 A"/>
    <property type="chains" value="C=1-71"/>
</dbReference>
<dbReference type="PDB" id="8WWI">
    <property type="method" value="EM"/>
    <property type="resolution" value="3.43 A"/>
    <property type="chains" value="C=1-71"/>
</dbReference>
<dbReference type="PDB" id="8WWJ">
    <property type="method" value="EM"/>
    <property type="resolution" value="3.03 A"/>
    <property type="chains" value="C=1-71"/>
</dbReference>
<dbReference type="PDB" id="8WWK">
    <property type="method" value="EM"/>
    <property type="resolution" value="2.61 A"/>
    <property type="chains" value="C=1-71"/>
</dbReference>
<dbReference type="PDB" id="8WWL">
    <property type="method" value="EM"/>
    <property type="resolution" value="2.78 A"/>
    <property type="chains" value="C=1-71"/>
</dbReference>
<dbReference type="PDB" id="8WWM">
    <property type="method" value="EM"/>
    <property type="resolution" value="2.81 A"/>
    <property type="chains" value="C=1-71"/>
</dbReference>
<dbReference type="PDB" id="8WWN">
    <property type="method" value="EM"/>
    <property type="resolution" value="2.65 A"/>
    <property type="chains" value="C=1-71"/>
</dbReference>
<dbReference type="PDB" id="8X2K">
    <property type="method" value="EM"/>
    <property type="resolution" value="3.03 A"/>
    <property type="chains" value="D=1-71"/>
</dbReference>
<dbReference type="PDB" id="8X3L">
    <property type="method" value="EM"/>
    <property type="resolution" value="3.13 A"/>
    <property type="chains" value="C=1-71"/>
</dbReference>
<dbReference type="PDB" id="8X79">
    <property type="method" value="EM"/>
    <property type="resolution" value="2.41 A"/>
    <property type="chains" value="G=1-71"/>
</dbReference>
<dbReference type="PDB" id="8X7A">
    <property type="method" value="EM"/>
    <property type="resolution" value="2.56 A"/>
    <property type="chains" value="G=1-71"/>
</dbReference>
<dbReference type="PDB" id="8X8L">
    <property type="method" value="EM"/>
    <property type="resolution" value="2.70 A"/>
    <property type="chains" value="G=2-71"/>
</dbReference>
<dbReference type="PDB" id="8X8N">
    <property type="method" value="EM"/>
    <property type="resolution" value="2.90 A"/>
    <property type="chains" value="G=2-71"/>
</dbReference>
<dbReference type="PDB" id="8XGM">
    <property type="method" value="EM"/>
    <property type="resolution" value="3.29 A"/>
    <property type="chains" value="G=8-62"/>
</dbReference>
<dbReference type="PDB" id="8XGO">
    <property type="method" value="EM"/>
    <property type="resolution" value="2.68 A"/>
    <property type="chains" value="C=1-71"/>
</dbReference>
<dbReference type="PDB" id="8XGS">
    <property type="method" value="EM"/>
    <property type="resolution" value="2.95 A"/>
    <property type="chains" value="C=1-71"/>
</dbReference>
<dbReference type="PDB" id="8XGU">
    <property type="method" value="EM"/>
    <property type="resolution" value="3.00 A"/>
    <property type="chains" value="G=1-71"/>
</dbReference>
<dbReference type="PDB" id="8XIO">
    <property type="method" value="EM"/>
    <property type="resolution" value="2.65 A"/>
    <property type="chains" value="G=1-71"/>
</dbReference>
<dbReference type="PDB" id="8XIP">
    <property type="method" value="EM"/>
    <property type="resolution" value="3.29 A"/>
    <property type="chains" value="G=1-71"/>
</dbReference>
<dbReference type="PDB" id="8XIQ">
    <property type="method" value="EM"/>
    <property type="resolution" value="2.71 A"/>
    <property type="chains" value="G=1-71"/>
</dbReference>
<dbReference type="PDB" id="8XIR">
    <property type="method" value="EM"/>
    <property type="resolution" value="2.52 A"/>
    <property type="chains" value="G=1-71"/>
</dbReference>
<dbReference type="PDB" id="8XJK">
    <property type="method" value="EM"/>
    <property type="resolution" value="2.63 A"/>
    <property type="chains" value="C=1-71"/>
</dbReference>
<dbReference type="PDB" id="8XJL">
    <property type="method" value="EM"/>
    <property type="resolution" value="2.77 A"/>
    <property type="chains" value="C=1-71"/>
</dbReference>
<dbReference type="PDB" id="8XJM">
    <property type="method" value="EM"/>
    <property type="resolution" value="2.85 A"/>
    <property type="chains" value="C=1-71"/>
</dbReference>
<dbReference type="PDB" id="8XJN">
    <property type="method" value="EM"/>
    <property type="resolution" value="3.06 A"/>
    <property type="chains" value="C=1-71"/>
</dbReference>
<dbReference type="PDB" id="8XJO">
    <property type="method" value="EM"/>
    <property type="resolution" value="3.11 A"/>
    <property type="chains" value="C=1-71"/>
</dbReference>
<dbReference type="PDB" id="8XML">
    <property type="method" value="EM"/>
    <property type="resolution" value="2.58 A"/>
    <property type="chains" value="G=1-71"/>
</dbReference>
<dbReference type="PDB" id="8XOF">
    <property type="method" value="EM"/>
    <property type="resolution" value="2.60 A"/>
    <property type="chains" value="G=1-71"/>
</dbReference>
<dbReference type="PDB" id="8XOG">
    <property type="method" value="EM"/>
    <property type="resolution" value="2.90 A"/>
    <property type="chains" value="G=1-71"/>
</dbReference>
<dbReference type="PDB" id="8XOH">
    <property type="method" value="EM"/>
    <property type="resolution" value="3.20 A"/>
    <property type="chains" value="G=1-71"/>
</dbReference>
<dbReference type="PDB" id="8XOI">
    <property type="method" value="EM"/>
    <property type="resolution" value="3.20 A"/>
    <property type="chains" value="G=1-71"/>
</dbReference>
<dbReference type="PDB" id="8XOJ">
    <property type="method" value="EM"/>
    <property type="resolution" value="3.10 A"/>
    <property type="chains" value="G=1-71"/>
</dbReference>
<dbReference type="PDB" id="8XQE">
    <property type="method" value="EM"/>
    <property type="resolution" value="3.48 A"/>
    <property type="chains" value="C=1-71"/>
</dbReference>
<dbReference type="PDB" id="8XQF">
    <property type="method" value="EM"/>
    <property type="resolution" value="3.13 A"/>
    <property type="chains" value="C=1-71"/>
</dbReference>
<dbReference type="PDB" id="8XQL">
    <property type="method" value="EM"/>
    <property type="resolution" value="2.99 A"/>
    <property type="chains" value="C=1-71"/>
</dbReference>
<dbReference type="PDB" id="8XQN">
    <property type="method" value="EM"/>
    <property type="resolution" value="3.05 A"/>
    <property type="chains" value="C=1-71"/>
</dbReference>
<dbReference type="PDB" id="8XQO">
    <property type="method" value="EM"/>
    <property type="resolution" value="2.77 A"/>
    <property type="chains" value="C=1-71"/>
</dbReference>
<dbReference type="PDB" id="8XQP">
    <property type="method" value="EM"/>
    <property type="resolution" value="3.29 A"/>
    <property type="chains" value="C=1-71"/>
</dbReference>
<dbReference type="PDB" id="8XQR">
    <property type="method" value="EM"/>
    <property type="resolution" value="3.20 A"/>
    <property type="chains" value="C=1-71"/>
</dbReference>
<dbReference type="PDB" id="8XQS">
    <property type="method" value="EM"/>
    <property type="resolution" value="3.30 A"/>
    <property type="chains" value="C=1-71"/>
</dbReference>
<dbReference type="PDB" id="8XQT">
    <property type="method" value="EM"/>
    <property type="resolution" value="2.94 A"/>
    <property type="chains" value="C=1-71"/>
</dbReference>
<dbReference type="PDB" id="8XVE">
    <property type="method" value="EM"/>
    <property type="resolution" value="3.00 A"/>
    <property type="chains" value="G=1-71"/>
</dbReference>
<dbReference type="PDB" id="8XVH">
    <property type="method" value="EM"/>
    <property type="resolution" value="3.26 A"/>
    <property type="chains" value="G=1-71"/>
</dbReference>
<dbReference type="PDB" id="8XVI">
    <property type="method" value="EM"/>
    <property type="resolution" value="3.32 A"/>
    <property type="chains" value="G=1-71"/>
</dbReference>
<dbReference type="PDB" id="8XWP">
    <property type="method" value="EM"/>
    <property type="resolution" value="3.21 A"/>
    <property type="chains" value="C=1-71"/>
</dbReference>
<dbReference type="PDB" id="8XWQ">
    <property type="method" value="EM"/>
    <property type="resolution" value="4.60 A"/>
    <property type="chains" value="C=1-71"/>
</dbReference>
<dbReference type="PDB" id="8XWV">
    <property type="method" value="EM"/>
    <property type="resolution" value="3.07 A"/>
    <property type="chains" value="G=7-62"/>
</dbReference>
<dbReference type="PDB" id="8XX3">
    <property type="method" value="EM"/>
    <property type="resolution" value="3.38 A"/>
    <property type="chains" value="G=1-71"/>
</dbReference>
<dbReference type="PDB" id="8XX6">
    <property type="method" value="EM"/>
    <property type="resolution" value="2.99 A"/>
    <property type="chains" value="G=1-71"/>
</dbReference>
<dbReference type="PDB" id="8XX7">
    <property type="method" value="EM"/>
    <property type="resolution" value="3.32 A"/>
    <property type="chains" value="G/I=1-71"/>
</dbReference>
<dbReference type="PDB" id="8XXH">
    <property type="method" value="EM"/>
    <property type="resolution" value="2.80 A"/>
    <property type="chains" value="G=1-71"/>
</dbReference>
<dbReference type="PDB" id="8XXR">
    <property type="method" value="EM"/>
    <property type="resolution" value="3.17 A"/>
    <property type="chains" value="G=1-71"/>
</dbReference>
<dbReference type="PDB" id="8XXU">
    <property type="method" value="EM"/>
    <property type="resolution" value="2.54 A"/>
    <property type="chains" value="D=1-71"/>
</dbReference>
<dbReference type="PDB" id="8XXV">
    <property type="method" value="EM"/>
    <property type="resolution" value="2.33 A"/>
    <property type="chains" value="D=1-71"/>
</dbReference>
<dbReference type="PDB" id="8XXX">
    <property type="method" value="EM"/>
    <property type="resolution" value="3.17 A"/>
    <property type="chains" value="G=1-71"/>
</dbReference>
<dbReference type="PDB" id="8XXZ">
    <property type="method" value="EM"/>
    <property type="resolution" value="3.30 A"/>
    <property type="chains" value="G=1-71"/>
</dbReference>
<dbReference type="PDB" id="8XYD">
    <property type="method" value="EM"/>
    <property type="resolution" value="2.90 A"/>
    <property type="chains" value="C=1-68"/>
</dbReference>
<dbReference type="PDB" id="8XYK">
    <property type="method" value="EM"/>
    <property type="resolution" value="3.03 A"/>
    <property type="chains" value="G=1-71"/>
</dbReference>
<dbReference type="PDB" id="8XZF">
    <property type="method" value="EM"/>
    <property type="resolution" value="3.00 A"/>
    <property type="chains" value="G=1-71"/>
</dbReference>
<dbReference type="PDB" id="8XZG">
    <property type="method" value="EM"/>
    <property type="resolution" value="3.20 A"/>
    <property type="chains" value="G=1-71"/>
</dbReference>
<dbReference type="PDB" id="8XZH">
    <property type="method" value="EM"/>
    <property type="resolution" value="2.60 A"/>
    <property type="chains" value="G=1-71"/>
</dbReference>
<dbReference type="PDB" id="8XZI">
    <property type="method" value="EM"/>
    <property type="resolution" value="2.70 A"/>
    <property type="chains" value="G=1-71"/>
</dbReference>
<dbReference type="PDB" id="8XZJ">
    <property type="method" value="EM"/>
    <property type="resolution" value="3.00 A"/>
    <property type="chains" value="G=1-71"/>
</dbReference>
<dbReference type="PDB" id="8Y0N">
    <property type="method" value="EM"/>
    <property type="resolution" value="3.07 A"/>
    <property type="chains" value="G=1-71"/>
</dbReference>
<dbReference type="PDB" id="8Y45">
    <property type="method" value="EM"/>
    <property type="resolution" value="3.45 A"/>
    <property type="chains" value="C=1-71"/>
</dbReference>
<dbReference type="PDB" id="8Y51">
    <property type="method" value="EM"/>
    <property type="resolution" value="3.30 A"/>
    <property type="chains" value="G=1-71"/>
</dbReference>
<dbReference type="PDB" id="8Y52">
    <property type="method" value="EM"/>
    <property type="resolution" value="2.90 A"/>
    <property type="chains" value="G=1-71"/>
</dbReference>
<dbReference type="PDB" id="8Y53">
    <property type="method" value="EM"/>
    <property type="resolution" value="2.93 A"/>
    <property type="chains" value="G=1-71"/>
</dbReference>
<dbReference type="PDB" id="8Y62">
    <property type="method" value="EM"/>
    <property type="resolution" value="3.20 A"/>
    <property type="chains" value="C=5-63"/>
</dbReference>
<dbReference type="PDB" id="8Y63">
    <property type="method" value="EM"/>
    <property type="resolution" value="3.20 A"/>
    <property type="chains" value="C=5-62"/>
</dbReference>
<dbReference type="PDB" id="8YH0">
    <property type="method" value="EM"/>
    <property type="resolution" value="2.86 A"/>
    <property type="chains" value="A/G=1-71"/>
</dbReference>
<dbReference type="PDB" id="8YH2">
    <property type="method" value="EM"/>
    <property type="resolution" value="3.27 A"/>
    <property type="chains" value="A/G=1-71"/>
</dbReference>
<dbReference type="PDB" id="8YH3">
    <property type="method" value="EM"/>
    <property type="resolution" value="3.40 A"/>
    <property type="chains" value="A/G=1-71"/>
</dbReference>
<dbReference type="PDB" id="8YH5">
    <property type="method" value="EM"/>
    <property type="resolution" value="3.66 A"/>
    <property type="chains" value="A/G=1-71"/>
</dbReference>
<dbReference type="PDB" id="8YH6">
    <property type="method" value="EM"/>
    <property type="resolution" value="3.62 A"/>
    <property type="chains" value="A/G=1-71"/>
</dbReference>
<dbReference type="PDB" id="8YIC">
    <property type="method" value="EM"/>
    <property type="resolution" value="3.47 A"/>
    <property type="chains" value="C=1-71"/>
</dbReference>
<dbReference type="PDB" id="8YKY">
    <property type="method" value="EM"/>
    <property type="resolution" value="2.99 A"/>
    <property type="chains" value="C=1-71"/>
</dbReference>
<dbReference type="PDB" id="8YN2">
    <property type="method" value="EM"/>
    <property type="resolution" value="2.66 A"/>
    <property type="chains" value="C=1-71"/>
</dbReference>
<dbReference type="PDB" id="8YN3">
    <property type="method" value="EM"/>
    <property type="resolution" value="2.56 A"/>
    <property type="chains" value="C=1-71"/>
</dbReference>
<dbReference type="PDB" id="8YN4">
    <property type="method" value="EM"/>
    <property type="resolution" value="2.97 A"/>
    <property type="chains" value="C=1-71"/>
</dbReference>
<dbReference type="PDB" id="8YN5">
    <property type="method" value="EM"/>
    <property type="resolution" value="2.70 A"/>
    <property type="chains" value="C=1-71"/>
</dbReference>
<dbReference type="PDB" id="8YN6">
    <property type="method" value="EM"/>
    <property type="resolution" value="2.77 A"/>
    <property type="chains" value="C=1-71"/>
</dbReference>
<dbReference type="PDB" id="8YN7">
    <property type="method" value="EM"/>
    <property type="resolution" value="2.77 A"/>
    <property type="chains" value="C=1-71"/>
</dbReference>
<dbReference type="PDB" id="8YN8">
    <property type="method" value="EM"/>
    <property type="resolution" value="2.77 A"/>
    <property type="chains" value="C=1-71"/>
</dbReference>
<dbReference type="PDB" id="8YN9">
    <property type="method" value="EM"/>
    <property type="resolution" value="2.30 A"/>
    <property type="chains" value="C=1-71"/>
</dbReference>
<dbReference type="PDB" id="8YNA">
    <property type="method" value="EM"/>
    <property type="resolution" value="2.63 A"/>
    <property type="chains" value="C=1-71"/>
</dbReference>
<dbReference type="PDB" id="8YRG">
    <property type="method" value="EM"/>
    <property type="resolution" value="3.14 A"/>
    <property type="chains" value="D=1-71"/>
</dbReference>
<dbReference type="PDB" id="8YUT">
    <property type="method" value="EM"/>
    <property type="resolution" value="2.70 A"/>
    <property type="chains" value="G=1-71"/>
</dbReference>
<dbReference type="PDB" id="8YUU">
    <property type="method" value="EM"/>
    <property type="resolution" value="2.70 A"/>
    <property type="chains" value="G=1-71"/>
</dbReference>
<dbReference type="PDB" id="8YUV">
    <property type="method" value="EM"/>
    <property type="resolution" value="3.00 A"/>
    <property type="chains" value="G=1-71"/>
</dbReference>
<dbReference type="PDB" id="8YW3">
    <property type="method" value="EM"/>
    <property type="resolution" value="2.68 A"/>
    <property type="chains" value="G=1-71"/>
</dbReference>
<dbReference type="PDB" id="8YW4">
    <property type="method" value="EM"/>
    <property type="resolution" value="3.26 A"/>
    <property type="chains" value="G=1-71"/>
</dbReference>
<dbReference type="PDB" id="8YW5">
    <property type="method" value="EM"/>
    <property type="resolution" value="2.84 A"/>
    <property type="chains" value="G=1-71"/>
</dbReference>
<dbReference type="PDB" id="8YY8">
    <property type="method" value="EM"/>
    <property type="resolution" value="3.22 A"/>
    <property type="chains" value="C=1-71"/>
</dbReference>
<dbReference type="PDB" id="8Z7J">
    <property type="method" value="EM"/>
    <property type="resolution" value="3.12 A"/>
    <property type="chains" value="C=1-71"/>
</dbReference>
<dbReference type="PDB" id="8ZD1">
    <property type="method" value="EM"/>
    <property type="resolution" value="2.60 A"/>
    <property type="chains" value="G=11-62"/>
</dbReference>
<dbReference type="PDB" id="8ZF6">
    <property type="method" value="EM"/>
    <property type="resolution" value="2.98 A"/>
    <property type="chains" value="G=5-63"/>
</dbReference>
<dbReference type="PDB" id="8ZF9">
    <property type="method" value="EM"/>
    <property type="resolution" value="2.56 A"/>
    <property type="chains" value="G=5-63"/>
</dbReference>
<dbReference type="PDB" id="8ZFA">
    <property type="method" value="EM"/>
    <property type="resolution" value="2.96 A"/>
    <property type="chains" value="G=5-63"/>
</dbReference>
<dbReference type="PDB" id="8ZFC">
    <property type="method" value="EM"/>
    <property type="resolution" value="2.68 A"/>
    <property type="chains" value="G=5-63"/>
</dbReference>
<dbReference type="PDB" id="8ZFZ">
    <property type="method" value="EM"/>
    <property type="resolution" value="3.30 A"/>
    <property type="chains" value="G=1-67"/>
</dbReference>
<dbReference type="PDB" id="8ZH8">
    <property type="method" value="EM"/>
    <property type="resolution" value="3.19 A"/>
    <property type="chains" value="A=1-71"/>
</dbReference>
<dbReference type="PDB" id="8ZJE">
    <property type="method" value="EM"/>
    <property type="resolution" value="3.07 A"/>
    <property type="chains" value="G=1-71"/>
</dbReference>
<dbReference type="PDB" id="8ZJG">
    <property type="method" value="EM"/>
    <property type="resolution" value="3.18 A"/>
    <property type="chains" value="G=1-71"/>
</dbReference>
<dbReference type="PDB" id="8ZPS">
    <property type="method" value="EM"/>
    <property type="resolution" value="2.97 A"/>
    <property type="chains" value="G=2-71"/>
</dbReference>
<dbReference type="PDB" id="8ZPT">
    <property type="method" value="EM"/>
    <property type="resolution" value="2.96 A"/>
    <property type="chains" value="G=2-71"/>
</dbReference>
<dbReference type="PDB" id="8ZQE">
    <property type="method" value="EM"/>
    <property type="resolution" value="2.90 A"/>
    <property type="chains" value="C=1-71"/>
</dbReference>
<dbReference type="PDB" id="8ZR5">
    <property type="method" value="EM"/>
    <property type="resolution" value="3.31 A"/>
    <property type="chains" value="G=1-71"/>
</dbReference>
<dbReference type="PDB" id="8ZRK">
    <property type="method" value="EM"/>
    <property type="resolution" value="2.82 A"/>
    <property type="chains" value="G=1-71"/>
</dbReference>
<dbReference type="PDB" id="8ZSJ">
    <property type="method" value="EM"/>
    <property type="resolution" value="2.80 A"/>
    <property type="chains" value="G=1-71"/>
</dbReference>
<dbReference type="PDB" id="8ZSP">
    <property type="method" value="EM"/>
    <property type="resolution" value="3.14 A"/>
    <property type="chains" value="G=1-71"/>
</dbReference>
<dbReference type="PDB" id="8ZSS">
    <property type="method" value="EM"/>
    <property type="resolution" value="3.07 A"/>
    <property type="chains" value="G=1-71"/>
</dbReference>
<dbReference type="PDB" id="8ZSV">
    <property type="method" value="EM"/>
    <property type="resolution" value="2.96 A"/>
    <property type="chains" value="G=1-71"/>
</dbReference>
<dbReference type="PDB" id="8ZX4">
    <property type="method" value="EM"/>
    <property type="resolution" value="2.85 A"/>
    <property type="chains" value="G=1-71"/>
</dbReference>
<dbReference type="PDB" id="8ZX5">
    <property type="method" value="EM"/>
    <property type="resolution" value="3.03 A"/>
    <property type="chains" value="G=1-71"/>
</dbReference>
<dbReference type="PDB" id="9ASB">
    <property type="method" value="EM"/>
    <property type="resolution" value="3.40 A"/>
    <property type="chains" value="G=1-71"/>
</dbReference>
<dbReference type="PDB" id="9AST">
    <property type="method" value="EM"/>
    <property type="resolution" value="3.07 A"/>
    <property type="chains" value="G=1-71"/>
</dbReference>
<dbReference type="PDB" id="9AUC">
    <property type="method" value="EM"/>
    <property type="resolution" value="2.40 A"/>
    <property type="chains" value="G=1-71"/>
</dbReference>
<dbReference type="PDB" id="9AVG">
    <property type="method" value="EM"/>
    <property type="resolution" value="3.60 A"/>
    <property type="chains" value="G=1-71"/>
</dbReference>
<dbReference type="PDB" id="9AVL">
    <property type="method" value="EM"/>
    <property type="resolution" value="3.80 A"/>
    <property type="chains" value="G=1-71"/>
</dbReference>
<dbReference type="PDB" id="9AXF">
    <property type="method" value="EM"/>
    <property type="resolution" value="3.50 A"/>
    <property type="chains" value="G=1-71"/>
</dbReference>
<dbReference type="PDB" id="9AYF">
    <property type="method" value="EM"/>
    <property type="resolution" value="3.60 A"/>
    <property type="chains" value="G=1-71"/>
</dbReference>
<dbReference type="PDB" id="9B54">
    <property type="method" value="EM"/>
    <property type="resolution" value="2.86 A"/>
    <property type="chains" value="C=1-71"/>
</dbReference>
<dbReference type="PDB" id="9B65">
    <property type="method" value="EM"/>
    <property type="resolution" value="3.03 A"/>
    <property type="chains" value="C=1-71"/>
</dbReference>
<dbReference type="PDB" id="9BI6">
    <property type="method" value="EM"/>
    <property type="resolution" value="2.90 A"/>
    <property type="chains" value="G=1-68"/>
</dbReference>
<dbReference type="PDB" id="9BIP">
    <property type="method" value="EM"/>
    <property type="resolution" value="2.80 A"/>
    <property type="chains" value="G=1-68"/>
</dbReference>
<dbReference type="PDB" id="9BKJ">
    <property type="method" value="EM"/>
    <property type="resolution" value="2.59 A"/>
    <property type="chains" value="G=5-62"/>
</dbReference>
<dbReference type="PDB" id="9BKK">
    <property type="method" value="EM"/>
    <property type="resolution" value="2.51 A"/>
    <property type="chains" value="G=1-71"/>
</dbReference>
<dbReference type="PDB" id="9BQJ">
    <property type="method" value="EM"/>
    <property type="resolution" value="3.30 A"/>
    <property type="chains" value="C=1-71"/>
</dbReference>
<dbReference type="PDB" id="9D61">
    <property type="method" value="EM"/>
    <property type="resolution" value="3.58 A"/>
    <property type="chains" value="D=1-71"/>
</dbReference>
<dbReference type="PDB" id="9DQH">
    <property type="method" value="EM"/>
    <property type="resolution" value="2.92 A"/>
    <property type="chains" value="D=1-71"/>
</dbReference>
<dbReference type="PDB" id="9DQJ">
    <property type="method" value="EM"/>
    <property type="resolution" value="2.90 A"/>
    <property type="chains" value="D=1-71"/>
</dbReference>
<dbReference type="PDB" id="9EPP">
    <property type="method" value="EM"/>
    <property type="resolution" value="4.06 A"/>
    <property type="chains" value="G=5-64"/>
</dbReference>
<dbReference type="PDB" id="9EPQ">
    <property type="method" value="EM"/>
    <property type="resolution" value="4.15 A"/>
    <property type="chains" value="G=5-64"/>
</dbReference>
<dbReference type="PDB" id="9ERX">
    <property type="method" value="EM"/>
    <property type="resolution" value="2.90 A"/>
    <property type="chains" value="C=1-71"/>
</dbReference>
<dbReference type="PDB" id="9EW2">
    <property type="method" value="EM"/>
    <property type="resolution" value="3.20 A"/>
    <property type="chains" value="C=1-71"/>
</dbReference>
<dbReference type="PDB" id="9F33">
    <property type="method" value="EM"/>
    <property type="resolution" value="3.05 A"/>
    <property type="chains" value="C=1-71"/>
</dbReference>
<dbReference type="PDB" id="9F34">
    <property type="method" value="EM"/>
    <property type="resolution" value="3.09 A"/>
    <property type="chains" value="C=1-71"/>
</dbReference>
<dbReference type="PDB" id="9GE2">
    <property type="method" value="EM"/>
    <property type="resolution" value="2.51 A"/>
    <property type="chains" value="G=1-71"/>
</dbReference>
<dbReference type="PDB" id="9GE3">
    <property type="method" value="EM"/>
    <property type="resolution" value="2.87 A"/>
    <property type="chains" value="G=1-71"/>
</dbReference>
<dbReference type="PDB" id="9GYO">
    <property type="method" value="EM"/>
    <property type="resolution" value="2.50 A"/>
    <property type="chains" value="G=1-71"/>
</dbReference>
<dbReference type="PDB" id="9IIX">
    <property type="method" value="EM"/>
    <property type="resolution" value="2.89 A"/>
    <property type="chains" value="C=2-71"/>
</dbReference>
<dbReference type="PDB" id="9IJ9">
    <property type="method" value="EM"/>
    <property type="resolution" value="2.70 A"/>
    <property type="chains" value="C=2-71"/>
</dbReference>
<dbReference type="PDB" id="9IQT">
    <property type="method" value="EM"/>
    <property type="resolution" value="2.90 A"/>
    <property type="chains" value="C=6-66"/>
</dbReference>
<dbReference type="PDB" id="9ITB">
    <property type="method" value="EM"/>
    <property type="resolution" value="2.89 A"/>
    <property type="chains" value="G=1-71"/>
</dbReference>
<dbReference type="PDB" id="9ITE">
    <property type="method" value="EM"/>
    <property type="resolution" value="3.06 A"/>
    <property type="chains" value="G=1-71"/>
</dbReference>
<dbReference type="PDB" id="9IV1">
    <property type="method" value="EM"/>
    <property type="resolution" value="2.98 A"/>
    <property type="chains" value="G=1-71"/>
</dbReference>
<dbReference type="PDB" id="9IV2">
    <property type="method" value="EM"/>
    <property type="resolution" value="3.53 A"/>
    <property type="chains" value="G=1-71"/>
</dbReference>
<dbReference type="PDB" id="9IVG">
    <property type="method" value="EM"/>
    <property type="resolution" value="3.00 A"/>
    <property type="chains" value="G=2-71"/>
</dbReference>
<dbReference type="PDB" id="9IVM">
    <property type="method" value="EM"/>
    <property type="resolution" value="3.22 A"/>
    <property type="chains" value="G=2-71"/>
</dbReference>
<dbReference type="PDB" id="9IY8">
    <property type="method" value="EM"/>
    <property type="resolution" value="3.01 A"/>
    <property type="chains" value="G=2-71"/>
</dbReference>
<dbReference type="PDB" id="9IYB">
    <property type="method" value="EM"/>
    <property type="resolution" value="2.82 A"/>
    <property type="chains" value="D=1-71"/>
</dbReference>
<dbReference type="PDB" id="9J31">
    <property type="method" value="EM"/>
    <property type="resolution" value="3.05 A"/>
    <property type="chains" value="G=1-67"/>
</dbReference>
<dbReference type="PDB" id="9J5V">
    <property type="method" value="EM"/>
    <property type="resolution" value="2.86 A"/>
    <property type="chains" value="G=1-68"/>
</dbReference>
<dbReference type="PDB" id="9JKQ">
    <property type="method" value="EM"/>
    <property type="resolution" value="2.66 A"/>
    <property type="chains" value="C=1-71"/>
</dbReference>
<dbReference type="PDB" id="9JVG">
    <property type="method" value="EM"/>
    <property type="resolution" value="2.76 A"/>
    <property type="chains" value="G=5-63"/>
</dbReference>
<dbReference type="PDB" id="9K1C">
    <property type="method" value="EM"/>
    <property type="resolution" value="3.20 A"/>
    <property type="chains" value="C=1-71"/>
</dbReference>
<dbReference type="PDB" id="9K1D">
    <property type="method" value="EM"/>
    <property type="resolution" value="3.34 A"/>
    <property type="chains" value="C=1-71"/>
</dbReference>
<dbReference type="PDB" id="9K26">
    <property type="method" value="EM"/>
    <property type="resolution" value="3.00 A"/>
    <property type="chains" value="G=1-71"/>
</dbReference>
<dbReference type="PDB" id="9K27">
    <property type="method" value="EM"/>
    <property type="resolution" value="2.68 A"/>
    <property type="chains" value="C=1-71"/>
</dbReference>
<dbReference type="PDB" id="9L3W">
    <property type="method" value="EM"/>
    <property type="resolution" value="3.50 A"/>
    <property type="chains" value="C=1-71"/>
</dbReference>
<dbReference type="PDB" id="9L3Y">
    <property type="method" value="EM"/>
    <property type="resolution" value="3.60 A"/>
    <property type="chains" value="C=1-71"/>
</dbReference>
<dbReference type="PDBsum" id="4KFM"/>
<dbReference type="PDBsum" id="5HE0"/>
<dbReference type="PDBsum" id="5HE1"/>
<dbReference type="PDBsum" id="5HE2"/>
<dbReference type="PDBsum" id="5HE3"/>
<dbReference type="PDBsum" id="5UKK"/>
<dbReference type="PDBsum" id="5UKL"/>
<dbReference type="PDBsum" id="5UKM"/>
<dbReference type="PDBsum" id="5UZ7"/>
<dbReference type="PDBsum" id="6B3J"/>
<dbReference type="PDBsum" id="6CRK"/>
<dbReference type="PDBsum" id="6D9H"/>
<dbReference type="PDBsum" id="6DDE"/>
<dbReference type="PDBsum" id="6DDF"/>
<dbReference type="PDBsum" id="6E3Y"/>
<dbReference type="PDBsum" id="6EG8"/>
<dbReference type="PDBsum" id="6G79"/>
<dbReference type="PDBsum" id="6GDG"/>
<dbReference type="PDBsum" id="6K41"/>
<dbReference type="PDBsum" id="6K42"/>
<dbReference type="PDBsum" id="6KPF"/>
<dbReference type="PDBsum" id="6KPG"/>
<dbReference type="PDBsum" id="6LFM"/>
<dbReference type="PDBsum" id="6LFO"/>
<dbReference type="PDBsum" id="6LI3"/>
<dbReference type="PDBsum" id="6LMK"/>
<dbReference type="PDBsum" id="6LML"/>
<dbReference type="PDBsum" id="6M1H"/>
<dbReference type="PDBsum" id="6M1I"/>
<dbReference type="PDBsum" id="6M8S"/>
<dbReference type="PDBsum" id="6N4B"/>
<dbReference type="PDBsum" id="6NI3"/>
<dbReference type="PDBsum" id="6NIY"/>
<dbReference type="PDBsum" id="6OIJ"/>
<dbReference type="PDBsum" id="6OIK"/>
<dbReference type="PDBsum" id="6OMM"/>
<dbReference type="PDBsum" id="6ORV"/>
<dbReference type="PDBsum" id="6OS9"/>
<dbReference type="PDBsum" id="6OSA"/>
<dbReference type="PDBsum" id="6OT0"/>
<dbReference type="PDBsum" id="6P9X"/>
<dbReference type="PDBsum" id="6P9Y"/>
<dbReference type="PDBsum" id="6PB0"/>
<dbReference type="PDBsum" id="6PB1"/>
<dbReference type="PDBsum" id="6PT0"/>
<dbReference type="PDBsum" id="6UUN"/>
<dbReference type="PDBsum" id="6UUS"/>
<dbReference type="PDBsum" id="6UVA"/>
<dbReference type="PDBsum" id="6VCB"/>
<dbReference type="PDBsum" id="6VMS"/>
<dbReference type="PDBsum" id="6VN7"/>
<dbReference type="PDBsum" id="6WHA"/>
<dbReference type="PDBsum" id="6WHC"/>
<dbReference type="PDBsum" id="6WI9"/>
<dbReference type="PDBsum" id="6WPW"/>
<dbReference type="PDBsum" id="6WWZ"/>
<dbReference type="PDBsum" id="6WZG"/>
<dbReference type="PDBsum" id="6X18"/>
<dbReference type="PDBsum" id="6X19"/>
<dbReference type="PDBsum" id="6X1A"/>
<dbReference type="PDBsum" id="6XBJ"/>
<dbReference type="PDBsum" id="6XBK"/>
<dbReference type="PDBsum" id="6XBL"/>
<dbReference type="PDBsum" id="6XBM"/>
<dbReference type="PDBsum" id="6XOX"/>
<dbReference type="PDBsum" id="7AUE"/>
<dbReference type="PDBsum" id="7BB6"/>
<dbReference type="PDBsum" id="7BB7"/>
<dbReference type="PDBsum" id="7C2E"/>
<dbReference type="PDBsum" id="7CFM"/>
<dbReference type="PDBsum" id="7CFN"/>
<dbReference type="PDBsum" id="7CKW"/>
<dbReference type="PDBsum" id="7CKX"/>
<dbReference type="PDBsum" id="7CKY"/>
<dbReference type="PDBsum" id="7CKZ"/>
<dbReference type="PDBsum" id="7CMU"/>
<dbReference type="PDBsum" id="7CMV"/>
<dbReference type="PDBsum" id="7CRH"/>
<dbReference type="PDBsum" id="7CX2"/>
<dbReference type="PDBsum" id="7CX3"/>
<dbReference type="PDBsum" id="7CX4"/>
<dbReference type="PDBsum" id="7D76"/>
<dbReference type="PDBsum" id="7D77"/>
<dbReference type="PDBsum" id="7D7M"/>
<dbReference type="PDBsum" id="7DFL"/>
<dbReference type="PDBsum" id="7E14"/>
<dbReference type="PDBsum" id="7E2X"/>
<dbReference type="PDBsum" id="7E2Y"/>
<dbReference type="PDBsum" id="7E2Z"/>
<dbReference type="PDBsum" id="7E32"/>
<dbReference type="PDBsum" id="7E33"/>
<dbReference type="PDBsum" id="7E9G"/>
<dbReference type="PDBsum" id="7E9H"/>
<dbReference type="PDBsum" id="7EB2"/>
<dbReference type="PDBsum" id="7EJ0"/>
<dbReference type="PDBsum" id="7EJ8"/>
<dbReference type="PDBsum" id="7EJA"/>
<dbReference type="PDBsum" id="7EJK"/>
<dbReference type="PDBsum" id="7EJX"/>
<dbReference type="PDBsum" id="7EO2"/>
<dbReference type="PDBsum" id="7EO4"/>
<dbReference type="PDBsum" id="7EPT"/>
<dbReference type="PDBsum" id="7EUO"/>
<dbReference type="PDBsum" id="7EVY"/>
<dbReference type="PDBsum" id="7EVZ"/>
<dbReference type="PDBsum" id="7EW0"/>
<dbReference type="PDBsum" id="7EW1"/>
<dbReference type="PDBsum" id="7EW2"/>
<dbReference type="PDBsum" id="7EW3"/>
<dbReference type="PDBsum" id="7EW4"/>
<dbReference type="PDBsum" id="7EW7"/>
<dbReference type="PDBsum" id="7EXD"/>
<dbReference type="PDBsum" id="7EZH"/>
<dbReference type="PDBsum" id="7EZK"/>
<dbReference type="PDBsum" id="7EZM"/>
<dbReference type="PDBsum" id="7F0T"/>
<dbReference type="PDBsum" id="7F1O"/>
<dbReference type="PDBsum" id="7F1Q"/>
<dbReference type="PDBsum" id="7F1R"/>
<dbReference type="PDBsum" id="7F1S"/>
<dbReference type="PDBsum" id="7F1Z"/>
<dbReference type="PDBsum" id="7F23"/>
<dbReference type="PDBsum" id="7F24"/>
<dbReference type="PDBsum" id="7F4D"/>
<dbReference type="PDBsum" id="7F4F"/>
<dbReference type="PDBsum" id="7F4H"/>
<dbReference type="PDBsum" id="7F4I"/>
<dbReference type="PDBsum" id="7F53"/>
<dbReference type="PDBsum" id="7F54"/>
<dbReference type="PDBsum" id="7F55"/>
<dbReference type="PDBsum" id="7F58"/>
<dbReference type="PDBsum" id="7F6G"/>
<dbReference type="PDBsum" id="7F6H"/>
<dbReference type="PDBsum" id="7F6I"/>
<dbReference type="PDBsum" id="7F8V"/>
<dbReference type="PDBsum" id="7F8W"/>
<dbReference type="PDBsum" id="7F9Y"/>
<dbReference type="PDBsum" id="7F9Z"/>
<dbReference type="PDBsum" id="7JHJ"/>
<dbReference type="PDBsum" id="7JOZ"/>
<dbReference type="PDBsum" id="7JV5"/>
<dbReference type="PDBsum" id="7JVP"/>
<dbReference type="PDBsum" id="7JVQ"/>
<dbReference type="PDBsum" id="7JVR"/>
<dbReference type="PDBsum" id="7K7L"/>
<dbReference type="PDBsum" id="7K7Z"/>
<dbReference type="PDBsum" id="7KH0"/>
<dbReference type="PDBsum" id="7KI0"/>
<dbReference type="PDBsum" id="7KI1"/>
<dbReference type="PDBsum" id="7L1U"/>
<dbReference type="PDBsum" id="7L1V"/>
<dbReference type="PDBsum" id="7LCI"/>
<dbReference type="PDBsum" id="7LD3"/>
<dbReference type="PDBsum" id="7LD4"/>
<dbReference type="PDBsum" id="7LLL"/>
<dbReference type="PDBsum" id="7LLY"/>
<dbReference type="PDBsum" id="7MBX"/>
<dbReference type="PDBsum" id="7MBY"/>
<dbReference type="PDBsum" id="7MTS"/>
<dbReference type="PDBsum" id="7NA7"/>
<dbReference type="PDBsum" id="7NA8"/>
<dbReference type="PDBsum" id="7P00"/>
<dbReference type="PDBsum" id="7P02"/>
<dbReference type="PDBsum" id="7QVM"/>
<dbReference type="PDBsum" id="7RA3"/>
<dbReference type="PDBsum" id="7RAN"/>
<dbReference type="PDBsum" id="7RBT"/>
<dbReference type="PDBsum" id="7RG9"/>
<dbReference type="PDBsum" id="7RGP"/>
<dbReference type="PDBsum" id="7RKF"/>
<dbReference type="PDBsum" id="7RKM"/>
<dbReference type="PDBsum" id="7RKN"/>
<dbReference type="PDBsum" id="7RKX"/>
<dbReference type="PDBsum" id="7RKY"/>
<dbReference type="PDBsum" id="7RMG"/>
<dbReference type="PDBsum" id="7RMH"/>
<dbReference type="PDBsum" id="7RMI"/>
<dbReference type="PDBsum" id="7RTB"/>
<dbReference type="PDBsum" id="7RYC"/>
<dbReference type="PDBsum" id="7S1M"/>
<dbReference type="PDBsum" id="7S3I"/>
<dbReference type="PDBsum" id="7S8L"/>
<dbReference type="PDBsum" id="7S8M"/>
<dbReference type="PDBsum" id="7S8N"/>
<dbReference type="PDBsum" id="7S8O"/>
<dbReference type="PDBsum" id="7S8P"/>
<dbReference type="PDBsum" id="7SBF"/>
<dbReference type="PDBsum" id="7SCG"/>
<dbReference type="PDBsum" id="7SF7"/>
<dbReference type="PDBsum" id="7SF8"/>
<dbReference type="PDBsum" id="7SR8"/>
<dbReference type="PDBsum" id="7SRR"/>
<dbReference type="PDBsum" id="7T10"/>
<dbReference type="PDBsum" id="7T11"/>
<dbReference type="PDBsum" id="7T2G"/>
<dbReference type="PDBsum" id="7T2H"/>
<dbReference type="PDBsum" id="7T6B"/>
<dbReference type="PDBsum" id="7T8X"/>
<dbReference type="PDBsum" id="7T90"/>
<dbReference type="PDBsum" id="7T94"/>
<dbReference type="PDBsum" id="7T96"/>
<dbReference type="PDBsum" id="7T9I"/>
<dbReference type="PDBsum" id="7T9N"/>
<dbReference type="PDBsum" id="7TMW"/>
<dbReference type="PDBsum" id="7TRK"/>
<dbReference type="PDBsum" id="7TRP"/>
<dbReference type="PDBsum" id="7TRQ"/>
<dbReference type="PDBsum" id="7TRS"/>
<dbReference type="PDBsum" id="7TUZ"/>
<dbReference type="PDBsum" id="7TYF"/>
<dbReference type="PDBsum" id="7TYH"/>
<dbReference type="PDBsum" id="7TYI"/>
<dbReference type="PDBsum" id="7TYL"/>
<dbReference type="PDBsum" id="7TYN"/>
<dbReference type="PDBsum" id="7TYO"/>
<dbReference type="PDBsum" id="7TYW"/>
<dbReference type="PDBsum" id="7TYX"/>
<dbReference type="PDBsum" id="7TYY"/>
<dbReference type="PDBsum" id="7TZF"/>
<dbReference type="PDBsum" id="7U2K"/>
<dbReference type="PDBsum" id="7U2L"/>
<dbReference type="PDBsum" id="7UM5"/>
<dbReference type="PDBsum" id="7UM6"/>
<dbReference type="PDBsum" id="7UM7"/>
<dbReference type="PDBsum" id="7UTZ"/>
<dbReference type="PDBsum" id="7V68"/>
<dbReference type="PDBsum" id="7V69"/>
<dbReference type="PDBsum" id="7V6A"/>
<dbReference type="PDBsum" id="7VDH"/>
<dbReference type="PDBsum" id="7VDL"/>
<dbReference type="PDBsum" id="7VDM"/>
<dbReference type="PDBsum" id="7VFX"/>
<dbReference type="PDBsum" id="7VGX"/>
<dbReference type="PDBsum" id="7VIE"/>
<dbReference type="PDBsum" id="7VIF"/>
<dbReference type="PDBsum" id="7VIG"/>
<dbReference type="PDBsum" id="7VIH"/>
<dbReference type="PDBsum" id="7VKT"/>
<dbReference type="PDBsum" id="7VL8"/>
<dbReference type="PDBsum" id="7VL9"/>
<dbReference type="PDBsum" id="7VLA"/>
<dbReference type="PDBsum" id="7VUG"/>
<dbReference type="PDBsum" id="7VUH"/>
<dbReference type="PDBsum" id="7VUI"/>
<dbReference type="PDBsum" id="7VUJ"/>
<dbReference type="PDBsum" id="7VUY"/>
<dbReference type="PDBsum" id="7VUZ"/>
<dbReference type="PDBsum" id="7VV3"/>
<dbReference type="PDBsum" id="7VV5"/>
<dbReference type="PDBsum" id="7W0L"/>
<dbReference type="PDBsum" id="7W0M"/>
<dbReference type="PDBsum" id="7W0N"/>
<dbReference type="PDBsum" id="7W0O"/>
<dbReference type="PDBsum" id="7W0P"/>
<dbReference type="PDBsum" id="7W2Z"/>
<dbReference type="PDBsum" id="7W3Z"/>
<dbReference type="PDBsum" id="7W40"/>
<dbReference type="PDBsum" id="7W53"/>
<dbReference type="PDBsum" id="7W55"/>
<dbReference type="PDBsum" id="7W56"/>
<dbReference type="PDBsum" id="7W57"/>
<dbReference type="PDBsum" id="7W6P"/>
<dbReference type="PDBsum" id="7W7E"/>
<dbReference type="PDBsum" id="7WCM"/>
<dbReference type="PDBsum" id="7WCN"/>
<dbReference type="PDBsum" id="7WF7"/>
<dbReference type="PDBsum" id="7WJ5"/>
<dbReference type="PDBsum" id="7WKD"/>
<dbReference type="PDBsum" id="7WU2"/>
<dbReference type="PDBsum" id="7WU3"/>
<dbReference type="PDBsum" id="7WU4"/>
<dbReference type="PDBsum" id="7WU5"/>
<dbReference type="PDBsum" id="7WU9"/>
<dbReference type="PDBsum" id="7WUI"/>
<dbReference type="PDBsum" id="7WUJ"/>
<dbReference type="PDBsum" id="7WUQ"/>
<dbReference type="PDBsum" id="7WV9"/>
<dbReference type="PDBsum" id="7WVU"/>
<dbReference type="PDBsum" id="7WVV"/>
<dbReference type="PDBsum" id="7WVW"/>
<dbReference type="PDBsum" id="7WVX"/>
<dbReference type="PDBsum" id="7WVY"/>
<dbReference type="PDBsum" id="7WXU"/>
<dbReference type="PDBsum" id="7WXW"/>
<dbReference type="PDBsum" id="7WY0"/>
<dbReference type="PDBsum" id="7WY5"/>
<dbReference type="PDBsum" id="7WY8"/>
<dbReference type="PDBsum" id="7WYB"/>
<dbReference type="PDBsum" id="7WZ4"/>
<dbReference type="PDBsum" id="7WZ7"/>
<dbReference type="PDBsum" id="7X10"/>
<dbReference type="PDBsum" id="7X2C"/>
<dbReference type="PDBsum" id="7X2D"/>
<dbReference type="PDBsum" id="7X2F"/>
<dbReference type="PDBsum" id="7X2V"/>
<dbReference type="PDBsum" id="7X5H"/>
<dbReference type="PDBsum" id="7X8R"/>
<dbReference type="PDBsum" id="7X8S"/>
<dbReference type="PDBsum" id="7X9A"/>
<dbReference type="PDBsum" id="7X9B"/>
<dbReference type="PDBsum" id="7X9C"/>
<dbReference type="PDBsum" id="7X9Y"/>
<dbReference type="PDBsum" id="7XA3"/>
<dbReference type="PDBsum" id="7XBD"/>
<dbReference type="PDBsum" id="7XBW"/>
<dbReference type="PDBsum" id="7XBX"/>
<dbReference type="PDBsum" id="7XJJ"/>
<dbReference type="PDBsum" id="7XJK"/>
<dbReference type="PDBsum" id="7XJL"/>
<dbReference type="PDBsum" id="7XK2"/>
<dbReference type="PDBsum" id="7XK8"/>
<dbReference type="PDBsum" id="7XKD"/>
<dbReference type="PDBsum" id="7XKE"/>
<dbReference type="PDBsum" id="7XKF"/>
<dbReference type="PDBsum" id="7XMR"/>
<dbReference type="PDBsum" id="7XMS"/>
<dbReference type="PDBsum" id="7XMT"/>
<dbReference type="PDBsum" id="7XOU"/>
<dbReference type="PDBsum" id="7XOV"/>
<dbReference type="PDBsum" id="7XOW"/>
<dbReference type="PDBsum" id="7XP4"/>
<dbReference type="PDBsum" id="7XP5"/>
<dbReference type="PDBsum" id="7XP6"/>
<dbReference type="PDBsum" id="7XT8"/>
<dbReference type="PDBsum" id="7XT9"/>
<dbReference type="PDBsum" id="7XTA"/>
<dbReference type="PDBsum" id="7XTB"/>
<dbReference type="PDBsum" id="7XTC"/>
<dbReference type="PDBsum" id="7XTQ"/>
<dbReference type="PDBsum" id="7XV3"/>
<dbReference type="PDBsum" id="7XW5"/>
<dbReference type="PDBsum" id="7XW6"/>
<dbReference type="PDBsum" id="7XXH"/>
<dbReference type="PDBsum" id="7XXI"/>
<dbReference type="PDBsum" id="7XY6"/>
<dbReference type="PDBsum" id="7XY7"/>
<dbReference type="PDBsum" id="7XZ5"/>
<dbReference type="PDBsum" id="7XZ6"/>
<dbReference type="PDBsum" id="7Y1F"/>
<dbReference type="PDBsum" id="7Y24"/>
<dbReference type="PDBsum" id="7Y26"/>
<dbReference type="PDBsum" id="7Y27"/>
<dbReference type="PDBsum" id="7Y3G"/>
<dbReference type="PDBsum" id="7Y64"/>
<dbReference type="PDBsum" id="7Y65"/>
<dbReference type="PDBsum" id="7Y66"/>
<dbReference type="PDBsum" id="7Y67"/>
<dbReference type="PDBsum" id="7Y89"/>
<dbReference type="PDBsum" id="7YAC"/>
<dbReference type="PDBsum" id="7YAE"/>
<dbReference type="PDBsum" id="7YDH"/>
<dbReference type="PDBsum" id="7YDJ"/>
<dbReference type="PDBsum" id="7YDM"/>
<dbReference type="PDBsum" id="7YDP"/>
<dbReference type="PDBsum" id="7YFC"/>
<dbReference type="PDBsum" id="7YFD"/>
<dbReference type="PDBsum" id="7YKD"/>
<dbReference type="PDBsum" id="7YON"/>
<dbReference type="PDBsum" id="7YOO"/>
<dbReference type="PDBsum" id="7YP7"/>
<dbReference type="PDBsum" id="7YS6"/>
<dbReference type="PDBsum" id="8DDW"/>
<dbReference type="PDBsum" id="8DDX"/>
<dbReference type="PDBsum" id="8DPF"/>
<dbReference type="PDBsum" id="8DPG"/>
<dbReference type="PDBsum" id="8DPH"/>
<dbReference type="PDBsum" id="8DPI"/>
<dbReference type="PDBsum" id="8DWC"/>
<dbReference type="PDBsum" id="8DWG"/>
<dbReference type="PDBsum" id="8DWH"/>
<dbReference type="PDBsum" id="8DZP"/>
<dbReference type="PDBsum" id="8DZQ"/>
<dbReference type="PDBsum" id="8DZR"/>
<dbReference type="PDBsum" id="8DZS"/>
<dbReference type="PDBsum" id="8E3X"/>
<dbReference type="PDBsum" id="8E3Y"/>
<dbReference type="PDBsum" id="8E3Z"/>
<dbReference type="PDBsum" id="8E9W"/>
<dbReference type="PDBsum" id="8E9X"/>
<dbReference type="PDBsum" id="8E9Y"/>
<dbReference type="PDBsum" id="8E9Z"/>
<dbReference type="PDBsum" id="8EFL"/>
<dbReference type="PDBsum" id="8EIT"/>
<dbReference type="PDBsum" id="8EJC"/>
<dbReference type="PDBsum" id="8EJK"/>
<dbReference type="PDBsum" id="8EMW"/>
<dbReference type="PDBsum" id="8EMX"/>
<dbReference type="PDBsum" id="8F0J"/>
<dbReference type="PDBsum" id="8F0K"/>
<dbReference type="PDBsum" id="8F2A"/>
<dbReference type="PDBsum" id="8F2B"/>
<dbReference type="PDBsum" id="8F76"/>
<dbReference type="PDBsum" id="8FEG"/>
<dbReference type="PDBsum" id="8FLQ"/>
<dbReference type="PDBsum" id="8FLR"/>
<dbReference type="PDBsum" id="8FLS"/>
<dbReference type="PDBsum" id="8FLT"/>
<dbReference type="PDBsum" id="8FLU"/>
<dbReference type="PDBsum" id="8FMZ"/>
<dbReference type="PDBsum" id="8FN0"/>
<dbReference type="PDBsum" id="8FN1"/>
<dbReference type="PDBsum" id="8FU6"/>
<dbReference type="PDBsum" id="8FX5"/>
<dbReference type="PDBsum" id="8FY8"/>
<dbReference type="PDBsum" id="8FYE"/>
<dbReference type="PDBsum" id="8FYL"/>
<dbReference type="PDBsum" id="8FYT"/>
<dbReference type="PDBsum" id="8FYX"/>
<dbReference type="PDBsum" id="8G05"/>
<dbReference type="PDBsum" id="8G2Y"/>
<dbReference type="PDBsum" id="8G59"/>
<dbReference type="PDBsum" id="8G94"/>
<dbReference type="PDBsum" id="8GAG"/>
<dbReference type="PDBsum" id="8GCM"/>
<dbReference type="PDBsum" id="8GCP"/>
<dbReference type="PDBsum" id="8GD9"/>
<dbReference type="PDBsum" id="8GDA"/>
<dbReference type="PDBsum" id="8GDB"/>
<dbReference type="PDBsum" id="8GDC"/>
<dbReference type="PDBsum" id="8GDZ"/>
<dbReference type="PDBsum" id="8GE1"/>
<dbReference type="PDBsum" id="8GE2"/>
<dbReference type="PDBsum" id="8GE3"/>
<dbReference type="PDBsum" id="8GE4"/>
<dbReference type="PDBsum" id="8GE5"/>
<dbReference type="PDBsum" id="8GE6"/>
<dbReference type="PDBsum" id="8GE7"/>
<dbReference type="PDBsum" id="8GE8"/>
<dbReference type="PDBsum" id="8GE9"/>
<dbReference type="PDBsum" id="8GEA"/>
<dbReference type="PDBsum" id="8GEB"/>
<dbReference type="PDBsum" id="8GEC"/>
<dbReference type="PDBsum" id="8GED"/>
<dbReference type="PDBsum" id="8GEE"/>
<dbReference type="PDBsum" id="8GEF"/>
<dbReference type="PDBsum" id="8GEG"/>
<dbReference type="PDBsum" id="8GEH"/>
<dbReference type="PDBsum" id="8GEI"/>
<dbReference type="PDBsum" id="8GEJ"/>
<dbReference type="PDBsum" id="8GFV"/>
<dbReference type="PDBsum" id="8GFW"/>
<dbReference type="PDBsum" id="8GFX"/>
<dbReference type="PDBsum" id="8GFY"/>
<dbReference type="PDBsum" id="8GFZ"/>
<dbReference type="PDBsum" id="8GG0"/>
<dbReference type="PDBsum" id="8GG1"/>
<dbReference type="PDBsum" id="8GG2"/>
<dbReference type="PDBsum" id="8GG3"/>
<dbReference type="PDBsum" id="8GG4"/>
<dbReference type="PDBsum" id="8GG5"/>
<dbReference type="PDBsum" id="8GG6"/>
<dbReference type="PDBsum" id="8GG7"/>
<dbReference type="PDBsum" id="8GG8"/>
<dbReference type="PDBsum" id="8GG9"/>
<dbReference type="PDBsum" id="8GGA"/>
<dbReference type="PDBsum" id="8GGB"/>
<dbReference type="PDBsum" id="8GGC"/>
<dbReference type="PDBsum" id="8GGE"/>
<dbReference type="PDBsum" id="8GGF"/>
<dbReference type="PDBsum" id="8GHV"/>
<dbReference type="PDBsum" id="8GUQ"/>
<dbReference type="PDBsum" id="8GUR"/>
<dbReference type="PDBsum" id="8GUS"/>
<dbReference type="PDBsum" id="8GUT"/>
<dbReference type="PDBsum" id="8GY7"/>
<dbReference type="PDBsum" id="8H0P"/>
<dbReference type="PDBsum" id="8H0Q"/>
<dbReference type="PDBsum" id="8H2G"/>
<dbReference type="PDBsum" id="8H4I"/>
<dbReference type="PDBsum" id="8H4K"/>
<dbReference type="PDBsum" id="8H4L"/>
<dbReference type="PDBsum" id="8H8J"/>
<dbReference type="PDBsum" id="8HBD"/>
<dbReference type="PDBsum" id="8HCQ"/>
<dbReference type="PDBsum" id="8HCX"/>
<dbReference type="PDBsum" id="8HDO"/>
<dbReference type="PDBsum" id="8HDP"/>
<dbReference type="PDBsum" id="8HIX"/>
<dbReference type="PDBsum" id="8HJ0"/>
<dbReference type="PDBsum" id="8HJ1"/>
<dbReference type="PDBsum" id="8HJ2"/>
<dbReference type="PDBsum" id="8HJ5"/>
<dbReference type="PDBsum" id="8HMP"/>
<dbReference type="PDBsum" id="8HMV"/>
<dbReference type="PDBsum" id="8HN8"/>
<dbReference type="PDBsum" id="8HNK"/>
<dbReference type="PDBsum" id="8HNL"/>
<dbReference type="PDBsum" id="8HNM"/>
<dbReference type="PDBsum" id="8HOC"/>
<dbReference type="PDBsum" id="8HPT"/>
<dbReference type="PDBsum" id="8HQC"/>
<dbReference type="PDBsum" id="8HQE"/>
<dbReference type="PDBsum" id="8HQM"/>
<dbReference type="PDBsum" id="8HQN"/>
<dbReference type="PDBsum" id="8HS3"/>
<dbReference type="PDBsum" id="8HSC"/>
<dbReference type="PDBsum" id="8HTI"/>
<dbReference type="PDBsum" id="8HVI"/>
<dbReference type="PDBsum" id="8I2G"/>
<dbReference type="PDBsum" id="8I7V"/>
<dbReference type="PDBsum" id="8I7W"/>
<dbReference type="PDBsum" id="8I95"/>
<dbReference type="PDBsum" id="8I97"/>
<dbReference type="PDBsum" id="8I9A"/>
<dbReference type="PDBsum" id="8I9L"/>
<dbReference type="PDBsum" id="8I9S"/>
<dbReference type="PDBsum" id="8IA2"/>
<dbReference type="PDBsum" id="8IA7"/>
<dbReference type="PDBsum" id="8IA8"/>
<dbReference type="PDBsum" id="8IBU"/>
<dbReference type="PDBsum" id="8IBV"/>
<dbReference type="PDBsum" id="8IC0"/>
<dbReference type="PDBsum" id="8ID3"/>
<dbReference type="PDBsum" id="8ID4"/>
<dbReference type="PDBsum" id="8ID6"/>
<dbReference type="PDBsum" id="8ID8"/>
<dbReference type="PDBsum" id="8ID9"/>
<dbReference type="PDBsum" id="8IEC"/>
<dbReference type="PDBsum" id="8IED"/>
<dbReference type="PDBsum" id="8IJ3"/>
<dbReference type="PDBsum" id="8IJA"/>
<dbReference type="PDBsum" id="8IJB"/>
<dbReference type="PDBsum" id="8IJD"/>
<dbReference type="PDBsum" id="8IKG"/>
<dbReference type="PDBsum" id="8IKH"/>
<dbReference type="PDBsum" id="8IKL"/>
<dbReference type="PDBsum" id="8IQ4"/>
<dbReference type="PDBsum" id="8IQ6"/>
<dbReference type="PDBsum" id="8IRR"/>
<dbReference type="PDBsum" id="8IRS"/>
<dbReference type="PDBsum" id="8IRT"/>
<dbReference type="PDBsum" id="8IRU"/>
<dbReference type="PDBsum" id="8IRV"/>
<dbReference type="PDBsum" id="8ITF"/>
<dbReference type="PDBsum" id="8IUK"/>
<dbReference type="PDBsum" id="8IUL"/>
<dbReference type="PDBsum" id="8IUM"/>
<dbReference type="PDBsum" id="8IW1"/>
<dbReference type="PDBsum" id="8IW4"/>
<dbReference type="PDBsum" id="8IW7"/>
<dbReference type="PDBsum" id="8IW9"/>
<dbReference type="PDBsum" id="8IY9"/>
<dbReference type="PDBsum" id="8IYH"/>
<dbReference type="PDBsum" id="8IYS"/>
<dbReference type="PDBsum" id="8IYW"/>
<dbReference type="PDBsum" id="8IZ4"/>
<dbReference type="PDBsum" id="8IZB"/>
<dbReference type="PDBsum" id="8J18"/>
<dbReference type="PDBsum" id="8J19"/>
<dbReference type="PDBsum" id="8J1A"/>
<dbReference type="PDBsum" id="8J20"/>
<dbReference type="PDBsum" id="8J21"/>
<dbReference type="PDBsum" id="8J22"/>
<dbReference type="PDBsum" id="8J23"/>
<dbReference type="PDBsum" id="8J24"/>
<dbReference type="PDBsum" id="8J6D"/>
<dbReference type="PDBsum" id="8J6I"/>
<dbReference type="PDBsum" id="8J6J"/>
<dbReference type="PDBsum" id="8J6L"/>
<dbReference type="PDBsum" id="8J6P"/>
<dbReference type="PDBsum" id="8J6Q"/>
<dbReference type="PDBsum" id="8J6R"/>
<dbReference type="PDBsum" id="8J9N"/>
<dbReference type="PDBsum" id="8JD3"/>
<dbReference type="PDBsum" id="8JD5"/>
<dbReference type="PDBsum" id="8JD6"/>
<dbReference type="PDBsum" id="8JEF"/>
<dbReference type="PDBsum" id="8JEI"/>
<dbReference type="PDBsum" id="8JER"/>
<dbReference type="PDBsum" id="8JGB"/>
<dbReference type="PDBsum" id="8JGF"/>
<dbReference type="PDBsum" id="8JGG"/>
<dbReference type="PDBsum" id="8JHB"/>
<dbReference type="PDBsum" id="8JHI"/>
<dbReference type="PDBsum" id="8JHN"/>
<dbReference type="PDBsum" id="8JHY"/>
<dbReference type="PDBsum" id="8JII"/>
<dbReference type="PDBsum" id="8JIL"/>
<dbReference type="PDBsum" id="8JIM"/>
<dbReference type="PDBsum" id="8JJP"/>
<dbReference type="PDBsum" id="8JKB"/>
<dbReference type="PDBsum" id="8JLJ"/>
<dbReference type="PDBsum" id="8JLK"/>
<dbReference type="PDBsum" id="8JLN"/>
<dbReference type="PDBsum" id="8JLO"/>
<dbReference type="PDBsum" id="8JLP"/>
<dbReference type="PDBsum" id="8JLQ"/>
<dbReference type="PDBsum" id="8JLR"/>
<dbReference type="PDBsum" id="8JLZ"/>
<dbReference type="PDBsum" id="8JPN"/>
<dbReference type="PDBsum" id="8JPP"/>
<dbReference type="PDBsum" id="8JR9"/>
<dbReference type="PDBsum" id="8JSP"/>
<dbReference type="PDBsum" id="8JSR"/>
<dbReference type="PDBsum" id="8JT6"/>
<dbReference type="PDBsum" id="8JXT"/>
<dbReference type="PDBsum" id="8JXV"/>
<dbReference type="PDBsum" id="8JXW"/>
<dbReference type="PDBsum" id="8JXX"/>
<dbReference type="PDBsum" id="8JZ7"/>
<dbReference type="PDBsum" id="8JZP"/>
<dbReference type="PDBsum" id="8JZZ"/>
<dbReference type="PDBsum" id="8K2X"/>
<dbReference type="PDBsum" id="8K3Z"/>
<dbReference type="PDBsum" id="8K4N"/>
<dbReference type="PDBsum" id="8K4O"/>
<dbReference type="PDBsum" id="8K4P"/>
<dbReference type="PDBsum" id="8K4S"/>
<dbReference type="PDBsum" id="8K6M"/>
<dbReference type="PDBsum" id="8K6N"/>
<dbReference type="PDBsum" id="8K6O"/>
<dbReference type="PDBsum" id="8K8J"/>
<dbReference type="PDBsum" id="8K9K"/>
<dbReference type="PDBsum" id="8K9L"/>
<dbReference type="PDBsum" id="8KFX"/>
<dbReference type="PDBsum" id="8KFY"/>
<dbReference type="PDBsum" id="8KFZ"/>
<dbReference type="PDBsum" id="8KGG"/>
<dbReference type="PDBsum" id="8KGK"/>
<dbReference type="PDBsum" id="8KH4"/>
<dbReference type="PDBsum" id="8KH5"/>
<dbReference type="PDBsum" id="8PJK"/>
<dbReference type="PDBsum" id="8PKM"/>
<dbReference type="PDBsum" id="8PM2"/>
<dbReference type="PDBsum" id="8POK"/>
<dbReference type="PDBsum" id="8QJ2"/>
<dbReference type="PDBsum" id="8RQL"/>
<dbReference type="PDBsum" id="8SAI"/>
<dbReference type="PDBsum" id="8SG1"/>
<dbReference type="PDBsum" id="8SL3"/>
<dbReference type="PDBsum" id="8SMV"/>
<dbReference type="PDBsum" id="8SZG"/>
<dbReference type="PDBsum" id="8SZH"/>
<dbReference type="PDBsum" id="8SZI"/>
<dbReference type="PDBsum" id="8T3O"/>
<dbReference type="PDBsum" id="8T3Q"/>
<dbReference type="PDBsum" id="8T3S"/>
<dbReference type="PDBsum" id="8T3V"/>
<dbReference type="PDBsum" id="8TB0"/>
<dbReference type="PDBsum" id="8THK"/>
<dbReference type="PDBsum" id="8THL"/>
<dbReference type="PDBsum" id="8TYW"/>
<dbReference type="PDBsum" id="8TZQ"/>
<dbReference type="PDBsum" id="8U02"/>
<dbReference type="PDBsum" id="8U1U"/>
<dbReference type="PDBsum" id="8U26"/>
<dbReference type="PDBsum" id="8U4N"/>
<dbReference type="PDBsum" id="8U4O"/>
<dbReference type="PDBsum" id="8U4P"/>
<dbReference type="PDBsum" id="8U4Q"/>
<dbReference type="PDBsum" id="8U7Z"/>
<dbReference type="PDBsum" id="8U81"/>
<dbReference type="PDBsum" id="8U82"/>
<dbReference type="PDBsum" id="8U83"/>
<dbReference type="PDBsum" id="8U84"/>
<dbReference type="PDBsum" id="8U8F"/>
<dbReference type="PDBsum" id="8UGY"/>
<dbReference type="PDBsum" id="8UH3"/>
<dbReference type="PDBsum" id="8UHB"/>
<dbReference type="PDBsum" id="8UNL"/>
<dbReference type="PDBsum" id="8UNM"/>
<dbReference type="PDBsum" id="8UNN"/>
<dbReference type="PDBsum" id="8UNO"/>
<dbReference type="PDBsum" id="8UNP"/>
<dbReference type="PDBsum" id="8UNQ"/>
<dbReference type="PDBsum" id="8UNR"/>
<dbReference type="PDBsum" id="8UNS"/>
<dbReference type="PDBsum" id="8UNT"/>
<dbReference type="PDBsum" id="8UNU"/>
<dbReference type="PDBsum" id="8UNV"/>
<dbReference type="PDBsum" id="8UNW"/>
<dbReference type="PDBsum" id="8UNX"/>
<dbReference type="PDBsum" id="8UNY"/>
<dbReference type="PDBsum" id="8UNZ"/>
<dbReference type="PDBsum" id="8UO0"/>
<dbReference type="PDBsum" id="8UO1"/>
<dbReference type="PDBsum" id="8UO2"/>
<dbReference type="PDBsum" id="8UO3"/>
<dbReference type="PDBsum" id="8UO4"/>
<dbReference type="PDBsum" id="8UQO"/>
<dbReference type="PDBsum" id="8UTD"/>
<dbReference type="PDBsum" id="8UUJ"/>
<dbReference type="PDBsum" id="8UWL"/>
<dbReference type="PDBsum" id="8UXV"/>
<dbReference type="PDBsum" id="8UXY"/>
<dbReference type="PDBsum" id="8UY0"/>
<dbReference type="PDBsum" id="8UYQ"/>
<dbReference type="PDBsum" id="8V6U"/>
<dbReference type="PDBsum" id="8VHF"/>
<dbReference type="PDBsum" id="8VVE"/>
<dbReference type="PDBsum" id="8VVF"/>
<dbReference type="PDBsum" id="8VVG"/>
<dbReference type="PDBsum" id="8VY7"/>
<dbReference type="PDBsum" id="8VY9"/>
<dbReference type="PDBsum" id="8W87"/>
<dbReference type="PDBsum" id="8W88"/>
<dbReference type="PDBsum" id="8W89"/>
<dbReference type="PDBsum" id="8W8A"/>
<dbReference type="PDBsum" id="8W8B"/>
<dbReference type="PDBsum" id="8W8Q"/>
<dbReference type="PDBsum" id="8W8R"/>
<dbReference type="PDBsum" id="8WC3"/>
<dbReference type="PDBsum" id="8WC4"/>
<dbReference type="PDBsum" id="8WC5"/>
<dbReference type="PDBsum" id="8WC6"/>
<dbReference type="PDBsum" id="8WC7"/>
<dbReference type="PDBsum" id="8WC8"/>
<dbReference type="PDBsum" id="8WC9"/>
<dbReference type="PDBsum" id="8WCA"/>
<dbReference type="PDBsum" id="8WCB"/>
<dbReference type="PDBsum" id="8WGB"/>
<dbReference type="PDBsum" id="8WJX"/>
<dbReference type="PDBsum" id="8WOG"/>
<dbReference type="PDBsum" id="8WP1"/>
<dbReference type="PDBsum" id="8WPU"/>
<dbReference type="PDBsum" id="8WRB"/>
<dbReference type="PDBsum" id="8WSS"/>
<dbReference type="PDBsum" id="8WST"/>
<dbReference type="PDBsum" id="8WW2"/>
<dbReference type="PDBsum" id="8WWH"/>
<dbReference type="PDBsum" id="8WWI"/>
<dbReference type="PDBsum" id="8WWJ"/>
<dbReference type="PDBsum" id="8WWK"/>
<dbReference type="PDBsum" id="8WWL"/>
<dbReference type="PDBsum" id="8WWM"/>
<dbReference type="PDBsum" id="8WWN"/>
<dbReference type="PDBsum" id="8X2K"/>
<dbReference type="PDBsum" id="8X3L"/>
<dbReference type="PDBsum" id="8X79"/>
<dbReference type="PDBsum" id="8X7A"/>
<dbReference type="PDBsum" id="8X8L"/>
<dbReference type="PDBsum" id="8X8N"/>
<dbReference type="PDBsum" id="8XGM"/>
<dbReference type="PDBsum" id="8XGO"/>
<dbReference type="PDBsum" id="8XGS"/>
<dbReference type="PDBsum" id="8XGU"/>
<dbReference type="PDBsum" id="8XIO"/>
<dbReference type="PDBsum" id="8XIP"/>
<dbReference type="PDBsum" id="8XIQ"/>
<dbReference type="PDBsum" id="8XIR"/>
<dbReference type="PDBsum" id="8XJK"/>
<dbReference type="PDBsum" id="8XJL"/>
<dbReference type="PDBsum" id="8XJM"/>
<dbReference type="PDBsum" id="8XJN"/>
<dbReference type="PDBsum" id="8XJO"/>
<dbReference type="PDBsum" id="8XML"/>
<dbReference type="PDBsum" id="8XOF"/>
<dbReference type="PDBsum" id="8XOG"/>
<dbReference type="PDBsum" id="8XOH"/>
<dbReference type="PDBsum" id="8XOI"/>
<dbReference type="PDBsum" id="8XOJ"/>
<dbReference type="PDBsum" id="8XQE"/>
<dbReference type="PDBsum" id="8XQF"/>
<dbReference type="PDBsum" id="8XQL"/>
<dbReference type="PDBsum" id="8XQN"/>
<dbReference type="PDBsum" id="8XQO"/>
<dbReference type="PDBsum" id="8XQP"/>
<dbReference type="PDBsum" id="8XQR"/>
<dbReference type="PDBsum" id="8XQS"/>
<dbReference type="PDBsum" id="8XQT"/>
<dbReference type="PDBsum" id="8XVE"/>
<dbReference type="PDBsum" id="8XVH"/>
<dbReference type="PDBsum" id="8XVI"/>
<dbReference type="PDBsum" id="8XWP"/>
<dbReference type="PDBsum" id="8XWQ"/>
<dbReference type="PDBsum" id="8XWV"/>
<dbReference type="PDBsum" id="8XX3"/>
<dbReference type="PDBsum" id="8XX6"/>
<dbReference type="PDBsum" id="8XX7"/>
<dbReference type="PDBsum" id="8XXH"/>
<dbReference type="PDBsum" id="8XXR"/>
<dbReference type="PDBsum" id="8XXU"/>
<dbReference type="PDBsum" id="8XXV"/>
<dbReference type="PDBsum" id="8XXX"/>
<dbReference type="PDBsum" id="8XXZ"/>
<dbReference type="PDBsum" id="8XYD"/>
<dbReference type="PDBsum" id="8XYK"/>
<dbReference type="PDBsum" id="8XZF"/>
<dbReference type="PDBsum" id="8XZG"/>
<dbReference type="PDBsum" id="8XZH"/>
<dbReference type="PDBsum" id="8XZI"/>
<dbReference type="PDBsum" id="8XZJ"/>
<dbReference type="PDBsum" id="8Y0N"/>
<dbReference type="PDBsum" id="8Y45"/>
<dbReference type="PDBsum" id="8Y51"/>
<dbReference type="PDBsum" id="8Y52"/>
<dbReference type="PDBsum" id="8Y53"/>
<dbReference type="PDBsum" id="8Y62"/>
<dbReference type="PDBsum" id="8Y63"/>
<dbReference type="PDBsum" id="8YH0"/>
<dbReference type="PDBsum" id="8YH2"/>
<dbReference type="PDBsum" id="8YH3"/>
<dbReference type="PDBsum" id="8YH5"/>
<dbReference type="PDBsum" id="8YH6"/>
<dbReference type="PDBsum" id="8YIC"/>
<dbReference type="PDBsum" id="8YKY"/>
<dbReference type="PDBsum" id="8YN2"/>
<dbReference type="PDBsum" id="8YN3"/>
<dbReference type="PDBsum" id="8YN4"/>
<dbReference type="PDBsum" id="8YN5"/>
<dbReference type="PDBsum" id="8YN6"/>
<dbReference type="PDBsum" id="8YN7"/>
<dbReference type="PDBsum" id="8YN8"/>
<dbReference type="PDBsum" id="8YN9"/>
<dbReference type="PDBsum" id="8YNA"/>
<dbReference type="PDBsum" id="8YRG"/>
<dbReference type="PDBsum" id="8YUT"/>
<dbReference type="PDBsum" id="8YUU"/>
<dbReference type="PDBsum" id="8YUV"/>
<dbReference type="PDBsum" id="8YW3"/>
<dbReference type="PDBsum" id="8YW4"/>
<dbReference type="PDBsum" id="8YW5"/>
<dbReference type="PDBsum" id="8YY8"/>
<dbReference type="PDBsum" id="8Z7J"/>
<dbReference type="PDBsum" id="8ZD1"/>
<dbReference type="PDBsum" id="8ZF6"/>
<dbReference type="PDBsum" id="8ZF9"/>
<dbReference type="PDBsum" id="8ZFA"/>
<dbReference type="PDBsum" id="8ZFC"/>
<dbReference type="PDBsum" id="8ZFZ"/>
<dbReference type="PDBsum" id="8ZH8"/>
<dbReference type="PDBsum" id="8ZJE"/>
<dbReference type="PDBsum" id="8ZJG"/>
<dbReference type="PDBsum" id="8ZPS"/>
<dbReference type="PDBsum" id="8ZPT"/>
<dbReference type="PDBsum" id="8ZQE"/>
<dbReference type="PDBsum" id="8ZR5"/>
<dbReference type="PDBsum" id="8ZRK"/>
<dbReference type="PDBsum" id="8ZSJ"/>
<dbReference type="PDBsum" id="8ZSP"/>
<dbReference type="PDBsum" id="8ZSS"/>
<dbReference type="PDBsum" id="8ZSV"/>
<dbReference type="PDBsum" id="8ZX4"/>
<dbReference type="PDBsum" id="8ZX5"/>
<dbReference type="PDBsum" id="9ASB"/>
<dbReference type="PDBsum" id="9AST"/>
<dbReference type="PDBsum" id="9AUC"/>
<dbReference type="PDBsum" id="9AVG"/>
<dbReference type="PDBsum" id="9AVL"/>
<dbReference type="PDBsum" id="9AXF"/>
<dbReference type="PDBsum" id="9AYF"/>
<dbReference type="PDBsum" id="9B54"/>
<dbReference type="PDBsum" id="9B65"/>
<dbReference type="PDBsum" id="9BI6"/>
<dbReference type="PDBsum" id="9BIP"/>
<dbReference type="PDBsum" id="9BKJ"/>
<dbReference type="PDBsum" id="9BKK"/>
<dbReference type="PDBsum" id="9BQJ"/>
<dbReference type="PDBsum" id="9D61"/>
<dbReference type="PDBsum" id="9DQH"/>
<dbReference type="PDBsum" id="9DQJ"/>
<dbReference type="PDBsum" id="9EPP"/>
<dbReference type="PDBsum" id="9EPQ"/>
<dbReference type="PDBsum" id="9ERX"/>
<dbReference type="PDBsum" id="9EW2"/>
<dbReference type="PDBsum" id="9F33"/>
<dbReference type="PDBsum" id="9F34"/>
<dbReference type="PDBsum" id="9GE2"/>
<dbReference type="PDBsum" id="9GE3"/>
<dbReference type="PDBsum" id="9GYO"/>
<dbReference type="PDBsum" id="9IIX"/>
<dbReference type="PDBsum" id="9IJ9"/>
<dbReference type="PDBsum" id="9IQT"/>
<dbReference type="PDBsum" id="9ITB"/>
<dbReference type="PDBsum" id="9ITE"/>
<dbReference type="PDBsum" id="9IV1"/>
<dbReference type="PDBsum" id="9IV2"/>
<dbReference type="PDBsum" id="9IVG"/>
<dbReference type="PDBsum" id="9IVM"/>
<dbReference type="PDBsum" id="9IY8"/>
<dbReference type="PDBsum" id="9IYB"/>
<dbReference type="PDBsum" id="9J31"/>
<dbReference type="PDBsum" id="9J5V"/>
<dbReference type="PDBsum" id="9JKQ"/>
<dbReference type="PDBsum" id="9JVG"/>
<dbReference type="PDBsum" id="9K1C"/>
<dbReference type="PDBsum" id="9K1D"/>
<dbReference type="PDBsum" id="9K26"/>
<dbReference type="PDBsum" id="9K27"/>
<dbReference type="PDBsum" id="9L3W"/>
<dbReference type="PDBsum" id="9L3Y"/>
<dbReference type="EMDB" id="EMD-0339"/>
<dbReference type="EMDB" id="EMD-0744"/>
<dbReference type="EMDB" id="EMD-0745"/>
<dbReference type="EMDB" id="EMD-0877"/>
<dbReference type="EMDB" id="EMD-0879"/>
<dbReference type="EMDB" id="EMD-0902"/>
<dbReference type="EMDB" id="EMD-0917"/>
<dbReference type="EMDB" id="EMD-0918"/>
<dbReference type="EMDB" id="EMD-11927"/>
<dbReference type="EMDB" id="EMD-12128"/>
<dbReference type="EMDB" id="EMD-12129"/>
<dbReference type="EMDB" id="EMD-13140"/>
<dbReference type="EMDB" id="EMD-13141"/>
<dbReference type="EMDB" id="EMD-14180"/>
<dbReference type="EMDB" id="EMD-17712"/>
<dbReference type="EMDB" id="EMD-17747"/>
<dbReference type="EMDB" id="EMD-17756"/>
<dbReference type="EMDB" id="EMD-17793"/>
<dbReference type="EMDB" id="EMD-18442"/>
<dbReference type="EMDB" id="EMD-19445"/>
<dbReference type="EMDB" id="EMD-19882"/>
<dbReference type="EMDB" id="EMD-19883"/>
<dbReference type="EMDB" id="EMD-19929"/>
<dbReference type="EMDB" id="EMD-20078"/>
<dbReference type="EMDB" id="EMD-20079"/>
<dbReference type="EMDB" id="EMD-20126"/>
<dbReference type="EMDB" id="EMD-20179"/>
<dbReference type="EMDB" id="EMD-20180"/>
<dbReference type="EMDB" id="EMD-20181"/>
<dbReference type="EMDB" id="EMD-20190"/>
<dbReference type="EMDB" id="EMD-20277"/>
<dbReference type="EMDB" id="EMD-20278"/>
<dbReference type="EMDB" id="EMD-20284"/>
<dbReference type="EMDB" id="EMD-20285"/>
<dbReference type="EMDB" id="EMD-20470"/>
<dbReference type="EMDB" id="EMD-20883"/>
<dbReference type="EMDB" id="EMD-20901"/>
<dbReference type="EMDB" id="EMD-20906"/>
<dbReference type="EMDB" id="EMD-21147"/>
<dbReference type="EMDB" id="EMD-21243"/>
<dbReference type="EMDB" id="EMD-21249"/>
<dbReference type="EMDB" id="EMD-21669"/>
<dbReference type="EMDB" id="EMD-21671"/>
<dbReference type="EMDB" id="EMD-21683"/>
<dbReference type="EMDB" id="EMD-21866"/>
<dbReference type="EMDB" id="EMD-21950"/>
<dbReference type="EMDB" id="EMD-21972"/>
<dbReference type="EMDB" id="EMD-21992"/>
<dbReference type="EMDB" id="EMD-21993"/>
<dbReference type="EMDB" id="EMD-21994"/>
<dbReference type="EMDB" id="EMD-22117"/>
<dbReference type="EMDB" id="EMD-22118"/>
<dbReference type="EMDB" id="EMD-22119"/>
<dbReference type="EMDB" id="EMD-22120"/>
<dbReference type="EMDB" id="EMD-22283"/>
<dbReference type="EMDB" id="EMD-22338"/>
<dbReference type="EMDB" id="EMD-22493"/>
<dbReference type="EMDB" id="EMD-22509"/>
<dbReference type="EMDB" id="EMD-22510"/>
<dbReference type="EMDB" id="EMD-22511"/>
<dbReference type="EMDB" id="EMD-22872"/>
<dbReference type="EMDB" id="EMD-22882"/>
<dbReference type="EMDB" id="EMD-22883"/>
<dbReference type="EMDB" id="EMD-23118"/>
<dbReference type="EMDB" id="EMD-23119"/>
<dbReference type="EMDB" id="EMD-23274"/>
<dbReference type="EMDB" id="EMD-23280"/>
<dbReference type="EMDB" id="EMD-23281"/>
<dbReference type="EMDB" id="EMD-23425"/>
<dbReference type="EMDB" id="EMD-23436"/>
<dbReference type="EMDB" id="EMD-23749"/>
<dbReference type="EMDB" id="EMD-23750"/>
<dbReference type="EMDB" id="EMD-23996"/>
<dbReference type="EMDB" id="EMD-24267"/>
<dbReference type="EMDB" id="EMD-24268"/>
<dbReference type="EMDB" id="EMD-24334"/>
<dbReference type="EMDB" id="EMD-24378"/>
<dbReference type="EMDB" id="EMD-24401"/>
<dbReference type="EMDB" id="EMD-24445"/>
<dbReference type="EMDB" id="EMD-24453"/>
<dbReference type="EMDB" id="EMD-24496"/>
<dbReference type="EMDB" id="EMD-24500"/>
<dbReference type="EMDB" id="EMD-24501"/>
<dbReference type="EMDB" id="EMD-24506"/>
<dbReference type="EMDB" id="EMD-24507"/>
<dbReference type="EMDB" id="EMD-24569"/>
<dbReference type="EMDB" id="EMD-24570"/>
<dbReference type="EMDB" id="EMD-24572"/>
<dbReference type="EMDB" id="EMD-24680"/>
<dbReference type="EMDB" id="EMD-24733"/>
<dbReference type="EMDB" id="EMD-24805"/>
<dbReference type="EMDB" id="EMD-24825"/>
<dbReference type="EMDB" id="EMD-24896"/>
<dbReference type="EMDB" id="EMD-24897"/>
<dbReference type="EMDB" id="EMD-24898"/>
<dbReference type="EMDB" id="EMD-24899"/>
<dbReference type="EMDB" id="EMD-24900"/>
<dbReference type="EMDB" id="EMD-24978"/>
<dbReference type="EMDB" id="EMD-25034"/>
<dbReference type="EMDB" id="EMD-25076"/>
<dbReference type="EMDB" id="EMD-25077"/>
<dbReference type="EMDB" id="EMD-25399"/>
<dbReference type="EMDB" id="EMD-25402"/>
<dbReference type="EMDB" id="EMD-25586"/>
<dbReference type="EMDB" id="EMD-25587"/>
<dbReference type="EMDB" id="EMD-25612"/>
<dbReference type="EMDB" id="EMD-25613"/>
<dbReference type="EMDB" id="EMD-25712"/>
<dbReference type="EMDB" id="EMD-25748"/>
<dbReference type="EMDB" id="EMD-25749"/>
<dbReference type="EMDB" id="EMD-25751"/>
<dbReference type="EMDB" id="EMD-25752"/>
<dbReference type="EMDB" id="EMD-25758"/>
<dbReference type="EMDB" id="EMD-25763"/>
<dbReference type="EMDB" id="EMD-26003"/>
<dbReference type="EMDB" id="EMD-26004"/>
<dbReference type="EMDB" id="EMD-26099"/>
<dbReference type="EMDB" id="EMD-26100"/>
<dbReference type="EMDB" id="EMD-26101"/>
<dbReference type="EMDB" id="EMD-26102"/>
<dbReference type="EMDB" id="EMD-26136"/>
<dbReference type="EMDB" id="EMD-26178"/>
<dbReference type="EMDB" id="EMD-26179"/>
<dbReference type="EMDB" id="EMD-26180"/>
<dbReference type="EMDB" id="EMD-26184"/>
<dbReference type="EMDB" id="EMD-26188"/>
<dbReference type="EMDB" id="EMD-26190"/>
<dbReference type="EMDB" id="EMD-26196"/>
<dbReference type="EMDB" id="EMD-26197"/>
<dbReference type="EMDB" id="EMD-26199"/>
<dbReference type="EMDB" id="EMD-26208"/>
<dbReference type="EMDB" id="EMD-26313"/>
<dbReference type="EMDB" id="EMD-26314"/>
<dbReference type="EMDB" id="EMD-26597"/>
<dbReference type="EMDB" id="EMD-26598"/>
<dbReference type="EMDB" id="EMD-26599"/>
<dbReference type="EMDB" id="EMD-26795"/>
<dbReference type="EMDB" id="EMD-27344"/>
<dbReference type="EMDB" id="EMD-27345"/>
<dbReference type="EMDB" id="EMD-27633"/>
<dbReference type="EMDB" id="EMD-27634"/>
<dbReference type="EMDB" id="EMD-27635"/>
<dbReference type="EMDB" id="EMD-27636"/>
<dbReference type="EMDB" id="EMD-27752"/>
<dbReference type="EMDB" id="EMD-27753"/>
<dbReference type="EMDB" id="EMD-27754"/>
<dbReference type="EMDB" id="EMD-27804"/>
<dbReference type="EMDB" id="EMD-27805"/>
<dbReference type="EMDB" id="EMD-27806"/>
<dbReference type="EMDB" id="EMD-27807"/>
<dbReference type="EMDB" id="EMD-27872"/>
<dbReference type="EMDB" id="EMD-27873"/>
<dbReference type="EMDB" id="EMD-27874"/>
<dbReference type="EMDB" id="EMD-27966"/>
<dbReference type="EMDB" id="EMD-27967"/>
<dbReference type="EMDB" id="EMD-27968"/>
<dbReference type="EMDB" id="EMD-27969"/>
<dbReference type="EMDB" id="EMD-28085"/>
<dbReference type="EMDB" id="EMD-28164"/>
<dbReference type="EMDB" id="EMD-28177"/>
<dbReference type="EMDB" id="EMD-28185"/>
<dbReference type="EMDB" id="EMD-28267"/>
<dbReference type="EMDB" id="EMD-28268"/>
<dbReference type="EMDB" id="EMD-28758"/>
<dbReference type="EMDB" id="EMD-28759"/>
<dbReference type="EMDB" id="EMD-28810"/>
<dbReference type="EMDB" id="EMD-28812"/>
<dbReference type="EMDB" id="EMD-28896"/>
<dbReference type="EMDB" id="EMD-29026"/>
<dbReference type="EMDB" id="EMD-29283"/>
<dbReference type="EMDB" id="EMD-29284"/>
<dbReference type="EMDB" id="EMD-29285"/>
<dbReference type="EMDB" id="EMD-29286"/>
<dbReference type="EMDB" id="EMD-29287"/>
<dbReference type="EMDB" id="EMD-29301"/>
<dbReference type="EMDB" id="EMD-29302"/>
<dbReference type="EMDB" id="EMD-29303"/>
<dbReference type="EMDB" id="EMD-29453"/>
<dbReference type="EMDB" id="EMD-29524"/>
<dbReference type="EMDB" id="EMD-29560"/>
<dbReference type="EMDB" id="EMD-29571"/>
<dbReference type="EMDB" id="EMD-29585"/>
<dbReference type="EMDB" id="EMD-29597"/>
<dbReference type="EMDB" id="EMD-29599"/>
<dbReference type="EMDB" id="EMD-29645"/>
<dbReference type="EMDB" id="EMD-29684"/>
<dbReference type="EMDB" id="EMD-29736"/>
<dbReference type="EMDB" id="EMD-29861"/>
<dbReference type="EMDB" id="EMD-29898"/>
<dbReference type="EMDB" id="EMD-29935"/>
<dbReference type="EMDB" id="EMD-29951"/>
<dbReference type="EMDB" id="EMD-29952"/>
<dbReference type="EMDB" id="EMD-29953"/>
<dbReference type="EMDB" id="EMD-29954"/>
<dbReference type="EMDB" id="EMD-29955"/>
<dbReference type="EMDB" id="EMD-29956"/>
<dbReference type="EMDB" id="EMD-29958"/>
<dbReference type="EMDB" id="EMD-29959"/>
<dbReference type="EMDB" id="EMD-29960"/>
<dbReference type="EMDB" id="EMD-29961"/>
<dbReference type="EMDB" id="EMD-29962"/>
<dbReference type="EMDB" id="EMD-29964"/>
<dbReference type="EMDB" id="EMD-29965"/>
<dbReference type="EMDB" id="EMD-29966"/>
<dbReference type="EMDB" id="EMD-29967"/>
<dbReference type="EMDB" id="EMD-29968"/>
<dbReference type="EMDB" id="EMD-29969"/>
<dbReference type="EMDB" id="EMD-29970"/>
<dbReference type="EMDB" id="EMD-29971"/>
<dbReference type="EMDB" id="EMD-29972"/>
<dbReference type="EMDB" id="EMD-29985"/>
<dbReference type="EMDB" id="EMD-29986"/>
<dbReference type="EMDB" id="EMD-29987"/>
<dbReference type="EMDB" id="EMD-29988"/>
<dbReference type="EMDB" id="EMD-29989"/>
<dbReference type="EMDB" id="EMD-29990"/>
<dbReference type="EMDB" id="EMD-29991"/>
<dbReference type="EMDB" id="EMD-29992"/>
<dbReference type="EMDB" id="EMD-29993"/>
<dbReference type="EMDB" id="EMD-29994"/>
<dbReference type="EMDB" id="EMD-29995"/>
<dbReference type="EMDB" id="EMD-29996"/>
<dbReference type="EMDB" id="EMD-29997"/>
<dbReference type="EMDB" id="EMD-29998"/>
<dbReference type="EMDB" id="EMD-29999"/>
<dbReference type="EMDB" id="EMD-30047"/>
<dbReference type="EMDB" id="EMD-30048"/>
<dbReference type="EMDB" id="EMD-30274"/>
<dbReference type="EMDB" id="EMD-30344"/>
<dbReference type="EMDB" id="EMD-30345"/>
<dbReference type="EMDB" id="EMD-30392"/>
<dbReference type="EMDB" id="EMD-30393"/>
<dbReference type="EMDB" id="EMD-30394"/>
<dbReference type="EMDB" id="EMD-30395"/>
<dbReference type="EMDB" id="EMD-30410"/>
<dbReference type="EMDB" id="EMD-30411"/>
<dbReference type="EMDB" id="EMD-30452"/>
<dbReference type="EMDB" id="EMD-30489"/>
<dbReference type="EMDB" id="EMD-30490"/>
<dbReference type="EMDB" id="EMD-30491"/>
<dbReference type="EMDB" id="EMD-30602"/>
<dbReference type="EMDB" id="EMD-30603"/>
<dbReference type="EMDB" id="EMD-30608"/>
<dbReference type="EMDB" id="EMD-30665"/>
<dbReference type="EMDB" id="EMD-30971"/>
<dbReference type="EMDB" id="EMD-30972"/>
<dbReference type="EMDB" id="EMD-30973"/>
<dbReference type="EMDB" id="EMD-30974"/>
<dbReference type="EMDB" id="EMD-30975"/>
<dbReference type="EMDB" id="EMD-31031"/>
<dbReference type="EMDB" id="EMD-31032"/>
<dbReference type="EMDB" id="EMD-31049"/>
<dbReference type="EMDB" id="EMD-31147"/>
<dbReference type="EMDB" id="EMD-31156"/>
<dbReference type="EMDB" id="EMD-31157"/>
<dbReference type="EMDB" id="EMD-31162"/>
<dbReference type="EMDB" id="EMD-31164"/>
<dbReference type="EMDB" id="EMD-31225"/>
<dbReference type="EMDB" id="EMD-31226"/>
<dbReference type="EMDB" id="EMD-31323"/>
<dbReference type="EMDB" id="EMD-31341"/>
<dbReference type="EMDB" id="EMD-31342"/>
<dbReference type="EMDB" id="EMD-31343"/>
<dbReference type="EMDB" id="EMD-31344"/>
<dbReference type="EMDB" id="EMD-31345"/>
<dbReference type="EMDB" id="EMD-31346"/>
<dbReference type="EMDB" id="EMD-31347"/>
<dbReference type="EMDB" id="EMD-31349"/>
<dbReference type="EMDB" id="EMD-31371"/>
<dbReference type="EMDB" id="EMD-31387"/>
<dbReference type="EMDB" id="EMD-31388"/>
<dbReference type="EMDB" id="EMD-31389"/>
<dbReference type="EMDB" id="EMD-31404"/>
<dbReference type="EMDB" id="EMD-31421"/>
<dbReference type="EMDB" id="EMD-31422"/>
<dbReference type="EMDB" id="EMD-31423"/>
<dbReference type="EMDB" id="EMD-31424"/>
<dbReference type="EMDB" id="EMD-31425"/>
<dbReference type="EMDB" id="EMD-31426"/>
<dbReference type="EMDB" id="EMD-31427"/>
<dbReference type="EMDB" id="EMD-31448"/>
<dbReference type="EMDB" id="EMD-31449"/>
<dbReference type="EMDB" id="EMD-31452"/>
<dbReference type="EMDB" id="EMD-31453"/>
<dbReference type="EMDB" id="EMD-31456"/>
<dbReference type="EMDB" id="EMD-31457"/>
<dbReference type="EMDB" id="EMD-31458"/>
<dbReference type="EMDB" id="EMD-31461"/>
<dbReference type="EMDB" id="EMD-31479"/>
<dbReference type="EMDB" id="EMD-31480"/>
<dbReference type="EMDB" id="EMD-31481"/>
<dbReference type="EMDB" id="EMD-31493"/>
<dbReference type="EMDB" id="EMD-31494"/>
<dbReference type="EMDB" id="EMD-31500"/>
<dbReference type="EMDB" id="EMD-31501"/>
<dbReference type="EMDB" id="EMD-31738"/>
<dbReference type="EMDB" id="EMD-31739"/>
<dbReference type="EMDB" id="EMD-31740"/>
<dbReference type="EMDB" id="EMD-31918"/>
<dbReference type="EMDB" id="EMD-31922"/>
<dbReference type="EMDB" id="EMD-31923"/>
<dbReference type="EMDB" id="EMD-31962"/>
<dbReference type="EMDB" id="EMD-31979"/>
<dbReference type="EMDB" id="EMD-32006"/>
<dbReference type="EMDB" id="EMD-32007"/>
<dbReference type="EMDB" id="EMD-32008"/>
<dbReference type="EMDB" id="EMD-32009"/>
<dbReference type="EMDB" id="EMD-32018"/>
<dbReference type="EMDB" id="EMD-32020"/>
<dbReference type="EMDB" id="EMD-32021"/>
<dbReference type="EMDB" id="EMD-32022"/>
<dbReference type="EMDB" id="EMD-32127"/>
<dbReference type="EMDB" id="EMD-32128"/>
<dbReference type="EMDB" id="EMD-32129"/>
<dbReference type="EMDB" id="EMD-32130"/>
<dbReference type="EMDB" id="EMD-32131"/>
<dbReference type="EMDB" id="EMD-32132"/>
<dbReference type="EMDB" id="EMD-32136"/>
<dbReference type="EMDB" id="EMD-32138"/>
<dbReference type="EMDB" id="EMD-32243"/>
<dbReference type="EMDB" id="EMD-32244"/>
<dbReference type="EMDB" id="EMD-32245"/>
<dbReference type="EMDB" id="EMD-32246"/>
<dbReference type="EMDB" id="EMD-32247"/>
<dbReference type="EMDB" id="EMD-32268"/>
<dbReference type="EMDB" id="EMD-32297"/>
<dbReference type="EMDB" id="EMD-32298"/>
<dbReference type="EMDB" id="EMD-32313"/>
<dbReference type="EMDB" id="EMD-32314"/>
<dbReference type="EMDB" id="EMD-32315"/>
<dbReference type="EMDB" id="EMD-32316"/>
<dbReference type="EMDB" id="EMD-32331"/>
<dbReference type="EMDB" id="EMD-32342"/>
<dbReference type="EMDB" id="EMD-32424"/>
<dbReference type="EMDB" id="EMD-32425"/>
<dbReference type="EMDB" id="EMD-32461"/>
<dbReference type="EMDB" id="EMD-32543"/>
<dbReference type="EMDB" id="EMD-32565"/>
<dbReference type="EMDB" id="EMD-32817"/>
<dbReference type="EMDB" id="EMD-32818"/>
<dbReference type="EMDB" id="EMD-32819"/>
<dbReference type="EMDB" id="EMD-32820"/>
<dbReference type="EMDB" id="EMD-32824"/>
<dbReference type="EMDB" id="EMD-32836"/>
<dbReference type="EMDB" id="EMD-32837"/>
<dbReference type="EMDB" id="EMD-32838"/>
<dbReference type="EMDB" id="EMD-32850"/>
<dbReference type="EMDB" id="EMD-32858"/>
<dbReference type="EMDB" id="EMD-32859"/>
<dbReference type="EMDB" id="EMD-32860"/>
<dbReference type="EMDB" id="EMD-32861"/>
<dbReference type="EMDB" id="EMD-32862"/>
<dbReference type="EMDB" id="EMD-32881"/>
<dbReference type="EMDB" id="EMD-32882"/>
<dbReference type="EMDB" id="EMD-32883"/>
<dbReference type="EMDB" id="EMD-32884"/>
<dbReference type="EMDB" id="EMD-32887"/>
<dbReference type="EMDB" id="EMD-32890"/>
<dbReference type="EMDB" id="EMD-32904"/>
<dbReference type="EMDB" id="EMD-32905"/>
<dbReference type="EMDB" id="EMD-32932"/>
<dbReference type="EMDB" id="EMD-32964"/>
<dbReference type="EMDB" id="EMD-32965"/>
<dbReference type="EMDB" id="EMD-32966"/>
<dbReference type="EMDB" id="EMD-32972"/>
<dbReference type="EMDB" id="EMD-33014"/>
<dbReference type="EMDB" id="EMD-33057"/>
<dbReference type="EMDB" id="EMD-33058"/>
<dbReference type="EMDB" id="EMD-33069"/>
<dbReference type="EMDB" id="EMD-33070"/>
<dbReference type="EMDB" id="EMD-33071"/>
<dbReference type="EMDB" id="EMD-33085"/>
<dbReference type="EMDB" id="EMD-33086"/>
<dbReference type="EMDB" id="EMD-33103"/>
<dbReference type="EMDB" id="EMD-33107"/>
<dbReference type="EMDB" id="EMD-33108"/>
<dbReference type="EMDB" id="EMD-33229"/>
<dbReference type="EMDB" id="EMD-33230"/>
<dbReference type="EMDB" id="EMD-33231"/>
<dbReference type="EMDB" id="EMD-33241"/>
<dbReference type="EMDB" id="EMD-33247"/>
<dbReference type="EMDB" id="EMD-33248"/>
<dbReference type="EMDB" id="EMD-33249"/>
<dbReference type="EMDB" id="EMD-33250"/>
<dbReference type="EMDB" id="EMD-33302"/>
<dbReference type="EMDB" id="EMD-33303"/>
<dbReference type="EMDB" id="EMD-33304"/>
<dbReference type="EMDB" id="EMD-33359"/>
<dbReference type="EMDB" id="EMD-33360"/>
<dbReference type="EMDB" id="EMD-33361"/>
<dbReference type="EMDB" id="EMD-33364"/>
<dbReference type="EMDB" id="EMD-33365"/>
<dbReference type="EMDB" id="EMD-33366"/>
<dbReference type="EMDB" id="EMD-33442"/>
<dbReference type="EMDB" id="EMD-33443"/>
<dbReference type="EMDB" id="EMD-33444"/>
<dbReference type="EMDB" id="EMD-33445"/>
<dbReference type="EMDB" id="EMD-33446"/>
<dbReference type="EMDB" id="EMD-33452"/>
<dbReference type="EMDB" id="EMD-33479"/>
<dbReference type="EMDB" id="EMD-33480"/>
<dbReference type="EMDB" id="EMD-33481"/>
<dbReference type="EMDB" id="EMD-33482"/>
<dbReference type="EMDB" id="EMD-33483"/>
<dbReference type="EMDB" id="EMD-33491"/>
<dbReference type="EMDB" id="EMD-33492"/>
<dbReference type="EMDB" id="EMD-33503"/>
<dbReference type="EMDB" id="EMD-33504"/>
<dbReference type="EMDB" id="EMD-33512"/>
<dbReference type="EMDB" id="EMD-33513"/>
<dbReference type="EMDB" id="EMD-33525"/>
<dbReference type="EMDB" id="EMD-33526"/>
<dbReference type="EMDB" id="EMD-33562"/>
<dbReference type="EMDB" id="EMD-33585"/>
<dbReference type="EMDB" id="EMD-33586"/>
<dbReference type="EMDB" id="EMD-33587"/>
<dbReference type="EMDB" id="EMD-33594"/>
<dbReference type="EMDB" id="EMD-33633"/>
<dbReference type="EMDB" id="EMD-33634"/>
<dbReference type="EMDB" id="EMD-33635"/>
<dbReference type="EMDB" id="EMD-33636"/>
<dbReference type="EMDB" id="EMD-33682"/>
<dbReference type="EMDB" id="EMD-33708"/>
<dbReference type="EMDB" id="EMD-33710"/>
<dbReference type="EMDB" id="EMD-33747"/>
<dbReference type="EMDB" id="EMD-33749"/>
<dbReference type="EMDB" id="EMD-33753"/>
<dbReference type="EMDB" id="EMD-33755"/>
<dbReference type="EMDB" id="EMD-33785"/>
<dbReference type="EMDB" id="EMD-33786"/>
<dbReference type="EMDB" id="EMD-33891"/>
<dbReference type="EMDB" id="EMD-33984"/>
<dbReference type="EMDB" id="EMD-33985"/>
<dbReference type="EMDB" id="EMD-33995"/>
<dbReference type="EMDB" id="EMD-34073"/>
<dbReference type="EMDB" id="EMD-34276"/>
<dbReference type="EMDB" id="EMD-34277"/>
<dbReference type="EMDB" id="EMD-34278"/>
<dbReference type="EMDB" id="EMD-34371"/>
<dbReference type="EMDB" id="EMD-34413"/>
<dbReference type="EMDB" id="EMD-34414"/>
<dbReference type="EMDB" id="EMD-34437"/>
<dbReference type="EMDB" id="EMD-34478"/>
<dbReference type="EMDB" id="EMD-34479"/>
<dbReference type="EMDB" id="EMD-34480"/>
<dbReference type="EMDB" id="EMD-34549"/>
<dbReference type="EMDB" id="EMD-34619"/>
<dbReference type="EMDB" id="EMD-34663"/>
<dbReference type="EMDB" id="EMD-34667"/>
<dbReference type="EMDB" id="EMD-34676"/>
<dbReference type="EMDB" id="EMD-34677"/>
<dbReference type="EMDB" id="EMD-34833"/>
<dbReference type="EMDB" id="EMD-34902"/>
<dbReference type="EMDB" id="EMD-34903"/>
<dbReference type="EMDB" id="EMD-34908"/>
<dbReference type="EMDB" id="EMD-34914"/>
<dbReference type="EMDB" id="EMD-34915"/>
<dbReference type="EMDB" id="EMD-34916"/>
<dbReference type="EMDB" id="EMD-34925"/>
<dbReference type="EMDB" id="EMD-34943"/>
<dbReference type="EMDB" id="EMD-34947"/>
<dbReference type="EMDB" id="EMD-34948"/>
<dbReference type="EMDB" id="EMD-34950"/>
<dbReference type="EMDB" id="EMD-34951"/>
<dbReference type="EMDB" id="EMD-34993"/>
<dbReference type="EMDB" id="EMD-35010"/>
<dbReference type="EMDB" id="EMD-35044"/>
<dbReference type="EMDB" id="EMD-35135"/>
<dbReference type="EMDB" id="EMD-35234"/>
<dbReference type="EMDB" id="EMD-35235"/>
<dbReference type="EMDB" id="EMD-35257"/>
<dbReference type="EMDB" id="EMD-35259"/>
<dbReference type="EMDB" id="EMD-35263"/>
<dbReference type="EMDB" id="EMD-35275"/>
<dbReference type="EMDB" id="EMD-35282"/>
<dbReference type="EMDB" id="EMD-35292"/>
<dbReference type="EMDB" id="EMD-35297"/>
<dbReference type="EMDB" id="EMD-35298"/>
<dbReference type="EMDB" id="EMD-35345"/>
<dbReference type="EMDB" id="EMD-35346"/>
<dbReference type="EMDB" id="EMD-35351"/>
<dbReference type="EMDB" id="EMD-35356"/>
<dbReference type="EMDB" id="EMD-35357"/>
<dbReference type="EMDB" id="EMD-35358"/>
<dbReference type="EMDB" id="EMD-35359"/>
<dbReference type="EMDB" id="EMD-35360"/>
<dbReference type="EMDB" id="EMD-35378"/>
<dbReference type="EMDB" id="EMD-35380"/>
<dbReference type="EMDB" id="EMD-35463"/>
<dbReference type="EMDB" id="EMD-35483"/>
<dbReference type="EMDB" id="EMD-35484"/>
<dbReference type="EMDB" id="EMD-35485"/>
<dbReference type="EMDB" id="EMD-35511"/>
<dbReference type="EMDB" id="EMD-35512"/>
<dbReference type="EMDB" id="EMD-35516"/>
<dbReference type="EMDB" id="EMD-35657"/>
<dbReference type="EMDB" id="EMD-35658"/>
<dbReference type="EMDB" id="EMD-35683"/>
<dbReference type="EMDB" id="EMD-35684"/>
<dbReference type="EMDB" id="EMD-35685"/>
<dbReference type="EMDB" id="EMD-35686"/>
<dbReference type="EMDB" id="EMD-35687"/>
<dbReference type="EMDB" id="EMD-35705"/>
<dbReference type="EMDB" id="EMD-35724"/>
<dbReference type="EMDB" id="EMD-35725"/>
<dbReference type="EMDB" id="EMD-35726"/>
<dbReference type="EMDB" id="EMD-35761"/>
<dbReference type="EMDB" id="EMD-35762"/>
<dbReference type="EMDB" id="EMD-35763"/>
<dbReference type="EMDB" id="EMD-35764"/>
<dbReference type="EMDB" id="EMD-35817"/>
<dbReference type="EMDB" id="EMD-35822"/>
<dbReference type="EMDB" id="EMD-35830"/>
<dbReference type="EMDB" id="EMD-35831"/>
<dbReference type="EMDB" id="EMD-35833"/>
<dbReference type="EMDB" id="EMD-35838"/>
<dbReference type="EMDB" id="EMD-35913"/>
<dbReference type="EMDB" id="EMD-35914"/>
<dbReference type="EMDB" id="EMD-35915"/>
<dbReference type="EMDB" id="EMD-35940"/>
<dbReference type="EMDB" id="EMD-35941"/>
<dbReference type="EMDB" id="EMD-35942"/>
<dbReference type="EMDB" id="EMD-35943"/>
<dbReference type="EMDB" id="EMD-35944"/>
<dbReference type="EMDB" id="EMD-36001"/>
<dbReference type="EMDB" id="EMD-36005"/>
<dbReference type="EMDB" id="EMD-36006"/>
<dbReference type="EMDB" id="EMD-36007"/>
<dbReference type="EMDB" id="EMD-36010"/>
<dbReference type="EMDB" id="EMD-36011"/>
<dbReference type="EMDB" id="EMD-36012"/>
<dbReference type="EMDB" id="EMD-36111"/>
<dbReference type="EMDB" id="EMD-36174"/>
<dbReference type="EMDB" id="EMD-36176"/>
<dbReference type="EMDB" id="EMD-36177"/>
<dbReference type="EMDB" id="EMD-36186"/>
<dbReference type="EMDB" id="EMD-36189"/>
<dbReference type="EMDB" id="EMD-36193"/>
<dbReference type="EMDB" id="EMD-36229"/>
<dbReference type="EMDB" id="EMD-36232"/>
<dbReference type="EMDB" id="EMD-36233"/>
<dbReference type="EMDB" id="EMD-36261"/>
<dbReference type="EMDB" id="EMD-36266"/>
<dbReference type="EMDB" id="EMD-36280"/>
<dbReference type="EMDB" id="EMD-36300"/>
<dbReference type="EMDB" id="EMD-36312"/>
<dbReference type="EMDB" id="EMD-36317"/>
<dbReference type="EMDB" id="EMD-36318"/>
<dbReference type="EMDB" id="EMD-36364"/>
<dbReference type="EMDB" id="EMD-36367"/>
<dbReference type="EMDB" id="EMD-36399"/>
<dbReference type="EMDB" id="EMD-36400"/>
<dbReference type="EMDB" id="EMD-36401"/>
<dbReference type="EMDB" id="EMD-36402"/>
<dbReference type="EMDB" id="EMD-36403"/>
<dbReference type="EMDB" id="EMD-36404"/>
<dbReference type="EMDB" id="EMD-36405"/>
<dbReference type="EMDB" id="EMD-36409"/>
<dbReference type="EMDB" id="EMD-36484"/>
<dbReference type="EMDB" id="EMD-36486"/>
<dbReference type="EMDB" id="EMD-36593"/>
<dbReference type="EMDB" id="EMD-36626"/>
<dbReference type="EMDB" id="EMD-36627"/>
<dbReference type="EMDB" id="EMD-36634"/>
<dbReference type="EMDB" id="EMD-36712"/>
<dbReference type="EMDB" id="EMD-36714"/>
<dbReference type="EMDB" id="EMD-36715"/>
<dbReference type="EMDB" id="EMD-36716"/>
<dbReference type="EMDB" id="EMD-36736"/>
<dbReference type="EMDB" id="EMD-36750"/>
<dbReference type="EMDB" id="EMD-36755"/>
<dbReference type="EMDB" id="EMD-36842"/>
<dbReference type="EMDB" id="EMD-36869"/>
<dbReference type="EMDB" id="EMD-36887"/>
<dbReference type="EMDB" id="EMD-36890"/>
<dbReference type="EMDB" id="EMD-36923"/>
<dbReference type="EMDB" id="EMD-36924"/>
<dbReference type="EMDB" id="EMD-36925"/>
<dbReference type="EMDB" id="EMD-36951"/>
<dbReference type="EMDB" id="EMD-36989"/>
<dbReference type="EMDB" id="EMD-36990"/>
<dbReference type="EMDB" id="EMD-37207"/>
<dbReference type="EMDB" id="EMD-37208"/>
<dbReference type="EMDB" id="EMD-37209"/>
<dbReference type="EMDB" id="EMD-37220"/>
<dbReference type="EMDB" id="EMD-37224"/>
<dbReference type="EMDB" id="EMD-37236"/>
<dbReference type="EMDB" id="EMD-37237"/>
<dbReference type="EMDB" id="EMD-37347"/>
<dbReference type="EMDB" id="EMD-37348"/>
<dbReference type="EMDB" id="EMD-37349"/>
<dbReference type="EMDB" id="EMD-37350"/>
<dbReference type="EMDB" id="EMD-37351"/>
<dbReference type="EMDB" id="EMD-37356"/>
<dbReference type="EMDB" id="EMD-37357"/>
<dbReference type="EMDB" id="EMD-37429"/>
<dbReference type="EMDB" id="EMD-37430"/>
<dbReference type="EMDB" id="EMD-37431"/>
<dbReference type="EMDB" id="EMD-37432"/>
<dbReference type="EMDB" id="EMD-37433"/>
<dbReference type="EMDB" id="EMD-37434"/>
<dbReference type="EMDB" id="EMD-37435"/>
<dbReference type="EMDB" id="EMD-37436"/>
<dbReference type="EMDB" id="EMD-37437"/>
<dbReference type="EMDB" id="EMD-37507"/>
<dbReference type="EMDB" id="EMD-37591"/>
<dbReference type="EMDB" id="EMD-37686"/>
<dbReference type="EMDB" id="EMD-37707"/>
<dbReference type="EMDB" id="EMD-37724"/>
<dbReference type="EMDB" id="EMD-37771"/>
<dbReference type="EMDB" id="EMD-37823"/>
<dbReference type="EMDB" id="EMD-37824"/>
<dbReference type="EMDB" id="EMD-37881"/>
<dbReference type="EMDB" id="EMD-37888"/>
<dbReference type="EMDB" id="EMD-37889"/>
<dbReference type="EMDB" id="EMD-37890"/>
<dbReference type="EMDB" id="EMD-37891"/>
<dbReference type="EMDB" id="EMD-37892"/>
<dbReference type="EMDB" id="EMD-37893"/>
<dbReference type="EMDB" id="EMD-37894"/>
<dbReference type="EMDB" id="EMD-38015"/>
<dbReference type="EMDB" id="EMD-38039"/>
<dbReference type="EMDB" id="EMD-38095"/>
<dbReference type="EMDB" id="EMD-38096"/>
<dbReference type="EMDB" id="EMD-38148"/>
<dbReference type="EMDB" id="EMD-38150"/>
<dbReference type="EMDB" id="EMD-38329"/>
<dbReference type="EMDB" id="EMD-38331"/>
<dbReference type="EMDB" id="EMD-38332"/>
<dbReference type="EMDB" id="EMD-38385"/>
<dbReference type="EMDB" id="EMD-38386"/>
<dbReference type="EMDB" id="EMD-38387"/>
<dbReference type="EMDB" id="EMD-38388"/>
<dbReference type="EMDB" id="EMD-38399"/>
<dbReference type="EMDB" id="EMD-38400"/>
<dbReference type="EMDB" id="EMD-38401"/>
<dbReference type="EMDB" id="EMD-38402"/>
<dbReference type="EMDB" id="EMD-38403"/>
<dbReference type="EMDB" id="EMD-38481"/>
<dbReference type="EMDB" id="EMD-38527"/>
<dbReference type="EMDB" id="EMD-38528"/>
<dbReference type="EMDB" id="EMD-38529"/>
<dbReference type="EMDB" id="EMD-38530"/>
<dbReference type="EMDB" id="EMD-38531"/>
<dbReference type="EMDB" id="EMD-38574"/>
<dbReference type="EMDB" id="EMD-38575"/>
<dbReference type="EMDB" id="EMD-38580"/>
<dbReference type="EMDB" id="EMD-38582"/>
<dbReference type="EMDB" id="EMD-38583"/>
<dbReference type="EMDB" id="EMD-38584"/>
<dbReference type="EMDB" id="EMD-38586"/>
<dbReference type="EMDB" id="EMD-38587"/>
<dbReference type="EMDB" id="EMD-38588"/>
<dbReference type="EMDB" id="EMD-38702"/>
<dbReference type="EMDB" id="EMD-38704"/>
<dbReference type="EMDB" id="EMD-38705"/>
<dbReference type="EMDB" id="EMD-38740"/>
<dbReference type="EMDB" id="EMD-38741"/>
<dbReference type="EMDB" id="EMD-38743"/>
<dbReference type="EMDB" id="EMD-38744"/>
<dbReference type="EMDB" id="EMD-38747"/>
<dbReference type="EMDB" id="EMD-38748"/>
<dbReference type="EMDB" id="EMD-38749"/>
<dbReference type="EMDB" id="EMD-38759"/>
<dbReference type="EMDB" id="EMD-38761"/>
<dbReference type="EMDB" id="EMD-38762"/>
<dbReference type="EMDB" id="EMD-38764"/>
<dbReference type="EMDB" id="EMD-38766"/>
<dbReference type="EMDB" id="EMD-38769"/>
<dbReference type="EMDB" id="EMD-38776"/>
<dbReference type="EMDB" id="EMD-38794"/>
<dbReference type="EMDB" id="EMD-38795"/>
<dbReference type="EMDB" id="EMD-38796"/>
<dbReference type="EMDB" id="EMD-38797"/>
<dbReference type="EMDB" id="EMD-38798"/>
<dbReference type="EMDB" id="EMD-38809"/>
<dbReference type="EMDB" id="EMD-38909"/>
<dbReference type="EMDB" id="EMD-38927"/>
<dbReference type="EMDB" id="EMD-38928"/>
<dbReference type="EMDB" id="EMD-38929"/>
<dbReference type="EMDB" id="EMD-38964"/>
<dbReference type="EMDB" id="EMD-38965"/>
<dbReference type="EMDB" id="EMD-39313"/>
<dbReference type="EMDB" id="EMD-39376"/>
<dbReference type="EMDB" id="EMD-39412"/>
<dbReference type="EMDB" id="EMD-39413"/>
<dbReference type="EMDB" id="EMD-39414"/>
<dbReference type="EMDB" id="EMD-39415"/>
<dbReference type="EMDB" id="EMD-39416"/>
<dbReference type="EMDB" id="EMD-39417"/>
<dbReference type="EMDB" id="EMD-39418"/>
<dbReference type="EMDB" id="EMD-39419"/>
<dbReference type="EMDB" id="EMD-39420"/>
<dbReference type="EMDB" id="EMD-39542"/>
<dbReference type="EMDB" id="EMD-39582"/>
<dbReference type="EMDB" id="EMD-39583"/>
<dbReference type="EMDB" id="EMD-39584"/>
<dbReference type="EMDB" id="EMD-39621"/>
<dbReference type="EMDB" id="EMD-39622"/>
<dbReference type="EMDB" id="EMD-39623"/>
<dbReference type="EMDB" id="EMD-39816"/>
<dbReference type="EMDB" id="EMD-39946"/>
<dbReference type="EMDB" id="EMD-40000"/>
<dbReference type="EMDB" id="EMD-40001"/>
<dbReference type="EMDB" id="EMD-40002"/>
<dbReference type="EMDB" id="EMD-40004"/>
<dbReference type="EMDB" id="EMD-40005"/>
<dbReference type="EMDB" id="EMD-40052"/>
<dbReference type="EMDB" id="EMD-40096"/>
<dbReference type="EMDB" id="EMD-40097"/>
<dbReference type="EMDB" id="EMD-40098"/>
<dbReference type="EMDB" id="EMD-40099"/>
<dbReference type="EMDB" id="EMD-40100"/>
<dbReference type="EMDB" id="EMD-40101"/>
<dbReference type="EMDB" id="EMD-40102"/>
<dbReference type="EMDB" id="EMD-40103"/>
<dbReference type="EMDB" id="EMD-40104"/>
<dbReference type="EMDB" id="EMD-40105"/>
<dbReference type="EMDB" id="EMD-40106"/>
<dbReference type="EMDB" id="EMD-40107"/>
<dbReference type="EMDB" id="EMD-40108"/>
<dbReference type="EMDB" id="EMD-40109"/>
<dbReference type="EMDB" id="EMD-40110"/>
<dbReference type="EMDB" id="EMD-40111"/>
<dbReference type="EMDB" id="EMD-40112"/>
<dbReference type="EMDB" id="EMD-40113"/>
<dbReference type="EMDB" id="EMD-40114"/>
<dbReference type="EMDB" id="EMD-40115"/>
<dbReference type="EMDB" id="EMD-40116"/>
<dbReference type="EMDB" id="EMD-40117"/>
<dbReference type="EMDB" id="EMD-40118"/>
<dbReference type="EMDB" id="EMD-40119"/>
<dbReference type="EMDB" id="EMD-40120"/>
<dbReference type="EMDB" id="EMD-40121"/>
<dbReference type="EMDB" id="EMD-40122"/>
<dbReference type="EMDB" id="EMD-40123"/>
<dbReference type="EMDB" id="EMD-40124"/>
<dbReference type="EMDB" id="EMD-40125"/>
<dbReference type="EMDB" id="EMD-40126"/>
<dbReference type="EMDB" id="EMD-40127"/>
<dbReference type="EMDB" id="EMD-40128"/>
<dbReference type="EMDB" id="EMD-40129"/>
<dbReference type="EMDB" id="EMD-40130"/>
<dbReference type="EMDB" id="EMD-40131"/>
<dbReference type="EMDB" id="EMD-40132"/>
<dbReference type="EMDB" id="EMD-40133"/>
<dbReference type="EMDB" id="EMD-40134"/>
<dbReference type="EMDB" id="EMD-40135"/>
<dbReference type="EMDB" id="EMD-40136"/>
<dbReference type="EMDB" id="EMD-40137"/>
<dbReference type="EMDB" id="EMD-40138"/>
<dbReference type="EMDB" id="EMD-40139"/>
<dbReference type="EMDB" id="EMD-40140"/>
<dbReference type="EMDB" id="EMD-40141"/>
<dbReference type="EMDB" id="EMD-40142"/>
<dbReference type="EMDB" id="EMD-40143"/>
<dbReference type="EMDB" id="EMD-40144"/>
<dbReference type="EMDB" id="EMD-40145"/>
<dbReference type="EMDB" id="EMD-40146"/>
<dbReference type="EMDB" id="EMD-40147"/>
<dbReference type="EMDB" id="EMD-40148"/>
<dbReference type="EMDB" id="EMD-40149"/>
<dbReference type="EMDB" id="EMD-40150"/>
<dbReference type="EMDB" id="EMD-40151"/>
<dbReference type="EMDB" id="EMD-40152"/>
<dbReference type="EMDB" id="EMD-40153"/>
<dbReference type="EMDB" id="EMD-40154"/>
<dbReference type="EMDB" id="EMD-40155"/>
<dbReference type="EMDB" id="EMD-40157"/>
<dbReference type="EMDB" id="EMD-40158"/>
<dbReference type="EMDB" id="EMD-40159"/>
<dbReference type="EMDB" id="EMD-40160"/>
<dbReference type="EMDB" id="EMD-40161"/>
<dbReference type="EMDB" id="EMD-40163"/>
<dbReference type="EMDB" id="EMD-40164"/>
<dbReference type="EMDB" id="EMD-40165"/>
<dbReference type="EMDB" id="EMD-40166"/>
<dbReference type="EMDB" id="EMD-40167"/>
<dbReference type="EMDB" id="EMD-40168"/>
<dbReference type="EMDB" id="EMD-40170"/>
<dbReference type="EMDB" id="EMD-40171"/>
<dbReference type="EMDB" id="EMD-40172"/>
<dbReference type="EMDB" id="EMD-40173"/>
<dbReference type="EMDB" id="EMD-40174"/>
<dbReference type="EMDB" id="EMD-40175"/>
<dbReference type="EMDB" id="EMD-40176"/>
<dbReference type="EMDB" id="EMD-40270"/>
<dbReference type="EMDB" id="EMD-40450"/>
<dbReference type="EMDB" id="EMD-40572"/>
<dbReference type="EMDB" id="EMD-40603"/>
<dbReference type="EMDB" id="EMD-40915"/>
<dbReference type="EMDB" id="EMD-40916"/>
<dbReference type="EMDB" id="EMD-40917"/>
<dbReference type="EMDB" id="EMD-41007"/>
<dbReference type="EMDB" id="EMD-41008"/>
<dbReference type="EMDB" id="EMD-41010"/>
<dbReference type="EMDB" id="EMD-41013"/>
<dbReference type="EMDB" id="EMD-41144"/>
<dbReference type="EMDB" id="EMD-41267"/>
<dbReference type="EMDB" id="EMD-41268"/>
<dbReference type="EMDB" id="EMD-41729"/>
<dbReference type="EMDB" id="EMD-41766"/>
<dbReference type="EMDB" id="EMD-41776"/>
<dbReference type="EMDB" id="EMD-41829"/>
<dbReference type="EMDB" id="EMD-41840"/>
<dbReference type="EMDB" id="EMD-41888"/>
<dbReference type="EMDB" id="EMD-41889"/>
<dbReference type="EMDB" id="EMD-41890"/>
<dbReference type="EMDB" id="EMD-41891"/>
<dbReference type="EMDB" id="EMD-41994"/>
<dbReference type="EMDB" id="EMD-41996"/>
<dbReference type="EMDB" id="EMD-41997"/>
<dbReference type="EMDB" id="EMD-42000"/>
<dbReference type="EMDB" id="EMD-42001"/>
<dbReference type="EMDB" id="EMD-42004"/>
<dbReference type="EMDB" id="EMD-42008"/>
<dbReference type="EMDB" id="EMD-42023"/>
<dbReference type="EMDB" id="EMD-42241"/>
<dbReference type="EMDB" id="EMD-42245"/>
<dbReference type="EMDB" id="EMD-42268"/>
<dbReference type="EMDB" id="EMD-42408"/>
<dbReference type="EMDB" id="EMD-42409"/>
<dbReference type="EMDB" id="EMD-42410"/>
<dbReference type="EMDB" id="EMD-42411"/>
<dbReference type="EMDB" id="EMD-42412"/>
<dbReference type="EMDB" id="EMD-42413"/>
<dbReference type="EMDB" id="EMD-42414"/>
<dbReference type="EMDB" id="EMD-42415"/>
<dbReference type="EMDB" id="EMD-42416"/>
<dbReference type="EMDB" id="EMD-42417"/>
<dbReference type="EMDB" id="EMD-42418"/>
<dbReference type="EMDB" id="EMD-42419"/>
<dbReference type="EMDB" id="EMD-42420"/>
<dbReference type="EMDB" id="EMD-42421"/>
<dbReference type="EMDB" id="EMD-42422"/>
<dbReference type="EMDB" id="EMD-42423"/>
<dbReference type="EMDB" id="EMD-42424"/>
<dbReference type="EMDB" id="EMD-42425"/>
<dbReference type="EMDB" id="EMD-42426"/>
<dbReference type="EMDB" id="EMD-42427"/>
<dbReference type="EMDB" id="EMD-42538"/>
<dbReference type="EMDB" id="EMD-42587"/>
<dbReference type="EMDB" id="EMD-42676"/>
<dbReference type="EMDB" id="EMD-42786"/>
<dbReference type="EMDB" id="EMD-42789"/>
<dbReference type="EMDB" id="EMD-42791"/>
<dbReference type="EMDB" id="EMD-42817"/>
<dbReference type="EMDB" id="EMD-42999"/>
<dbReference type="EMDB" id="EMD-43236"/>
<dbReference type="EMDB" id="EMD-43252"/>
<dbReference type="EMDB" id="EMD-43253"/>
<dbReference type="EMDB" id="EMD-43254"/>
<dbReference type="EMDB" id="EMD-43556"/>
<dbReference type="EMDB" id="EMD-43557"/>
<dbReference type="EMDB" id="EMD-43558"/>
<dbReference type="EMDB" id="EMD-4358"/>
<dbReference type="EMDB" id="EMD-43647"/>
<dbReference type="EMDB" id="EMD-43650"/>
<dbReference type="EMDB" id="EMD-43811"/>
<dbReference type="EMDB" id="EMD-43825"/>
<dbReference type="EMDB" id="EMD-43877"/>
<dbReference type="EMDB" id="EMD-4390"/>
<dbReference type="EMDB" id="EMD-43901"/>
<dbReference type="EMDB" id="EMD-43908"/>
<dbReference type="EMDB" id="EMD-43966"/>
<dbReference type="EMDB" id="EMD-43990"/>
<dbReference type="EMDB" id="EMD-44199"/>
<dbReference type="EMDB" id="EMD-44247"/>
<dbReference type="EMDB" id="EMD-44560"/>
<dbReference type="EMDB" id="EMD-44597"/>
<dbReference type="EMDB" id="EMD-44642"/>
<dbReference type="EMDB" id="EMD-44643"/>
<dbReference type="EMDB" id="EMD-44812"/>
<dbReference type="EMDB" id="EMD-46585"/>
<dbReference type="EMDB" id="EMD-47113"/>
<dbReference type="EMDB" id="EMD-47114"/>
<dbReference type="EMDB" id="EMD-47154"/>
<dbReference type="EMDB" id="EMD-50168"/>
<dbReference type="EMDB" id="EMD-50169"/>
<dbReference type="EMDB" id="EMD-51284"/>
<dbReference type="EMDB" id="EMD-51288"/>
<dbReference type="EMDB" id="EMD-51700"/>
<dbReference type="EMDB" id="EMD-60051"/>
<dbReference type="EMDB" id="EMD-60053"/>
<dbReference type="EMDB" id="EMD-60054"/>
<dbReference type="EMDB" id="EMD-60056"/>
<dbReference type="EMDB" id="EMD-60072"/>
<dbReference type="EMDB" id="EMD-60141"/>
<dbReference type="EMDB" id="EMD-60142"/>
<dbReference type="EMDB" id="EMD-60144"/>
<dbReference type="EMDB" id="EMD-60353"/>
<dbReference type="EMDB" id="EMD-60354"/>
<dbReference type="EMDB" id="EMD-60392"/>
<dbReference type="EMDB" id="EMD-60399"/>
<dbReference type="EMDB" id="EMD-60417"/>
<dbReference type="EMDB" id="EMD-60423"/>
<dbReference type="EMDB" id="EMD-60426"/>
<dbReference type="EMDB" id="EMD-60427"/>
<dbReference type="EMDB" id="EMD-60537"/>
<dbReference type="EMDB" id="EMD-60538"/>
<dbReference type="EMDB" id="EMD-60608"/>
<dbReference type="EMDB" id="EMD-60626"/>
<dbReference type="EMDB" id="EMD-60795"/>
<dbReference type="EMDB" id="EMD-60857"/>
<dbReference type="EMDB" id="EMD-60859"/>
<dbReference type="EMDB" id="EMD-60917"/>
<dbReference type="EMDB" id="EMD-60918"/>
<dbReference type="EMDB" id="EMD-60927"/>
<dbReference type="EMDB" id="EMD-60930"/>
<dbReference type="EMDB" id="EMD-60990"/>
<dbReference type="EMDB" id="EMD-60994"/>
<dbReference type="EMDB" id="EMD-61104"/>
<dbReference type="EMDB" id="EMD-61154"/>
<dbReference type="EMDB" id="EMD-61567"/>
<dbReference type="EMDB" id="EMD-61838"/>
<dbReference type="EMDB" id="EMD-61971"/>
<dbReference type="EMDB" id="EMD-61972"/>
<dbReference type="EMDB" id="EMD-61991"/>
<dbReference type="EMDB" id="EMD-61992"/>
<dbReference type="EMDB" id="EMD-62793"/>
<dbReference type="EMDB" id="EMD-62798"/>
<dbReference type="EMDB" id="EMD-7039"/>
<dbReference type="EMDB" id="EMD-7835"/>
<dbReference type="EMDB" id="EMD-7868"/>
<dbReference type="EMDB" id="EMD-7869"/>
<dbReference type="EMDB" id="EMD-8623"/>
<dbReference type="EMDB" id="EMD-8978"/>
<dbReference type="EMDB" id="EMD-9376"/>
<dbReference type="EMDB" id="EMD-9382"/>
<dbReference type="EMDB" id="EMD-9911"/>
<dbReference type="EMDB" id="EMD-9912"/>
<dbReference type="SMR" id="P59768"/>
<dbReference type="BioGRID" id="119933">
    <property type="interactions" value="63"/>
</dbReference>
<dbReference type="CORUM" id="P59768"/>
<dbReference type="DIP" id="DIP-33949N"/>
<dbReference type="FunCoup" id="P59768">
    <property type="interactions" value="1825"/>
</dbReference>
<dbReference type="IntAct" id="P59768">
    <property type="interactions" value="53"/>
</dbReference>
<dbReference type="MINT" id="P59768"/>
<dbReference type="STRING" id="9606.ENSP00000334448"/>
<dbReference type="BindingDB" id="P59768"/>
<dbReference type="ChEMBL" id="CHEMBL3883319"/>
<dbReference type="DrugBank" id="DB01159">
    <property type="generic name" value="Halothane"/>
</dbReference>
<dbReference type="iPTMnet" id="P59768"/>
<dbReference type="PhosphoSitePlus" id="P59768"/>
<dbReference type="BioMuta" id="GNG2"/>
<dbReference type="DMDM" id="32699499"/>
<dbReference type="jPOST" id="P59768"/>
<dbReference type="MassIVE" id="P59768"/>
<dbReference type="PaxDb" id="9606-ENSP00000334448"/>
<dbReference type="PeptideAtlas" id="P59768"/>
<dbReference type="ProteomicsDB" id="57156"/>
<dbReference type="Pumba" id="P59768"/>
<dbReference type="Antibodypedia" id="198">
    <property type="antibodies" value="149 antibodies from 27 providers"/>
</dbReference>
<dbReference type="DNASU" id="54331"/>
<dbReference type="Ensembl" id="ENST00000335281.8">
    <property type="protein sequence ID" value="ENSP00000334448.4"/>
    <property type="gene ID" value="ENSG00000186469.9"/>
</dbReference>
<dbReference type="Ensembl" id="ENST00000554736.5">
    <property type="protein sequence ID" value="ENSP00000452014.1"/>
    <property type="gene ID" value="ENSG00000186469.9"/>
</dbReference>
<dbReference type="Ensembl" id="ENST00000555472.5">
    <property type="protein sequence ID" value="ENSP00000451102.1"/>
    <property type="gene ID" value="ENSG00000186469.9"/>
</dbReference>
<dbReference type="Ensembl" id="ENST00000556752.2">
    <property type="protein sequence ID" value="ENSP00000451576.1"/>
    <property type="gene ID" value="ENSG00000186469.9"/>
</dbReference>
<dbReference type="Ensembl" id="ENST00000556766.6">
    <property type="protein sequence ID" value="ENSP00000451231.1"/>
    <property type="gene ID" value="ENSG00000186469.9"/>
</dbReference>
<dbReference type="Ensembl" id="ENST00000615906.4">
    <property type="protein sequence ID" value="ENSP00000484021.1"/>
    <property type="gene ID" value="ENSG00000186469.9"/>
</dbReference>
<dbReference type="GeneID" id="54331"/>
<dbReference type="KEGG" id="hsa:54331"/>
<dbReference type="MANE-Select" id="ENST00000556766.6">
    <property type="protein sequence ID" value="ENSP00000451231.1"/>
    <property type="RefSeq nucleotide sequence ID" value="NM_053064.5"/>
    <property type="RefSeq protein sequence ID" value="NP_444292.1"/>
</dbReference>
<dbReference type="UCSC" id="uc001wzi.4">
    <property type="organism name" value="human"/>
</dbReference>
<dbReference type="AGR" id="HGNC:4404"/>
<dbReference type="CTD" id="54331"/>
<dbReference type="DisGeNET" id="54331"/>
<dbReference type="GeneCards" id="GNG2"/>
<dbReference type="HGNC" id="HGNC:4404">
    <property type="gene designation" value="GNG2"/>
</dbReference>
<dbReference type="HPA" id="ENSG00000186469">
    <property type="expression patterns" value="Tissue enhanced (brain, testis)"/>
</dbReference>
<dbReference type="MIM" id="606981">
    <property type="type" value="gene"/>
</dbReference>
<dbReference type="neXtProt" id="NX_P59768"/>
<dbReference type="OpenTargets" id="ENSG00000186469"/>
<dbReference type="PharmGKB" id="PA28784"/>
<dbReference type="VEuPathDB" id="HostDB:ENSG00000186469"/>
<dbReference type="eggNOG" id="KOG4119">
    <property type="taxonomic scope" value="Eukaryota"/>
</dbReference>
<dbReference type="GeneTree" id="ENSGT01100000263497"/>
<dbReference type="HOGENOM" id="CLU_168377_0_1_1"/>
<dbReference type="InParanoid" id="P59768"/>
<dbReference type="OrthoDB" id="6264244at2759"/>
<dbReference type="PAN-GO" id="P59768">
    <property type="GO annotations" value="3 GO annotations based on evolutionary models"/>
</dbReference>
<dbReference type="PhylomeDB" id="P59768"/>
<dbReference type="TreeFam" id="TF319909"/>
<dbReference type="PathwayCommons" id="P59768"/>
<dbReference type="Reactome" id="R-HSA-1296041">
    <property type="pathway name" value="Activation of G protein gated Potassium channels"/>
</dbReference>
<dbReference type="Reactome" id="R-HSA-163359">
    <property type="pathway name" value="Glucagon signaling in metabolic regulation"/>
</dbReference>
<dbReference type="Reactome" id="R-HSA-202040">
    <property type="pathway name" value="G-protein activation"/>
</dbReference>
<dbReference type="Reactome" id="R-HSA-381676">
    <property type="pathway name" value="Glucagon-like Peptide-1 (GLP1) regulates insulin secretion"/>
</dbReference>
<dbReference type="Reactome" id="R-HSA-392170">
    <property type="pathway name" value="ADP signalling through P2Y purinoceptor 12"/>
</dbReference>
<dbReference type="Reactome" id="R-HSA-392451">
    <property type="pathway name" value="G beta:gamma signalling through PI3Kgamma"/>
</dbReference>
<dbReference type="Reactome" id="R-HSA-392851">
    <property type="pathway name" value="Prostacyclin signalling through prostacyclin receptor"/>
</dbReference>
<dbReference type="Reactome" id="R-HSA-400042">
    <property type="pathway name" value="Adrenaline,noradrenaline inhibits insulin secretion"/>
</dbReference>
<dbReference type="Reactome" id="R-HSA-4086398">
    <property type="pathway name" value="Ca2+ pathway"/>
</dbReference>
<dbReference type="Reactome" id="R-HSA-416476">
    <property type="pathway name" value="G alpha (q) signalling events"/>
</dbReference>
<dbReference type="Reactome" id="R-HSA-416482">
    <property type="pathway name" value="G alpha (12/13) signalling events"/>
</dbReference>
<dbReference type="Reactome" id="R-HSA-418217">
    <property type="pathway name" value="G beta:gamma signalling through PLC beta"/>
</dbReference>
<dbReference type="Reactome" id="R-HSA-418555">
    <property type="pathway name" value="G alpha (s) signalling events"/>
</dbReference>
<dbReference type="Reactome" id="R-HSA-418592">
    <property type="pathway name" value="ADP signalling through P2Y purinoceptor 1"/>
</dbReference>
<dbReference type="Reactome" id="R-HSA-418594">
    <property type="pathway name" value="G alpha (i) signalling events"/>
</dbReference>
<dbReference type="Reactome" id="R-HSA-418597">
    <property type="pathway name" value="G alpha (z) signalling events"/>
</dbReference>
<dbReference type="Reactome" id="R-HSA-420092">
    <property type="pathway name" value="Glucagon-type ligand receptors"/>
</dbReference>
<dbReference type="Reactome" id="R-HSA-428930">
    <property type="pathway name" value="Thromboxane signalling through TP receptor"/>
</dbReference>
<dbReference type="Reactome" id="R-HSA-432040">
    <property type="pathway name" value="Vasopressin regulates renal water homeostasis via Aquaporins"/>
</dbReference>
<dbReference type="Reactome" id="R-HSA-456926">
    <property type="pathway name" value="Thrombin signalling through proteinase activated receptors (PARs)"/>
</dbReference>
<dbReference type="Reactome" id="R-HSA-500657">
    <property type="pathway name" value="Presynaptic function of Kainate receptors"/>
</dbReference>
<dbReference type="Reactome" id="R-HSA-6814122">
    <property type="pathway name" value="Cooperation of PDCL (PhLP1) and TRiC/CCT in G-protein beta folding"/>
</dbReference>
<dbReference type="Reactome" id="R-HSA-8964315">
    <property type="pathway name" value="G beta:gamma signalling through BTK"/>
</dbReference>
<dbReference type="Reactome" id="R-HSA-8964616">
    <property type="pathway name" value="G beta:gamma signalling through CDC42"/>
</dbReference>
<dbReference type="Reactome" id="R-HSA-9009391">
    <property type="pathway name" value="Extra-nuclear estrogen signaling"/>
</dbReference>
<dbReference type="Reactome" id="R-HSA-9634597">
    <property type="pathway name" value="GPER1 signaling"/>
</dbReference>
<dbReference type="Reactome" id="R-HSA-9660821">
    <property type="pathway name" value="ADORA2B mediated anti-inflammatory cytokines production"/>
</dbReference>
<dbReference type="Reactome" id="R-HSA-9856530">
    <property type="pathway name" value="High laminar flow shear stress activates signaling by PIEZO1 and PECAM1:CDH5:KDR in endothelial cells"/>
</dbReference>
<dbReference type="Reactome" id="R-HSA-997272">
    <property type="pathway name" value="Inhibition of voltage gated Ca2+ channels via Gbeta/gamma subunits"/>
</dbReference>
<dbReference type="SignaLink" id="P59768"/>
<dbReference type="SIGNOR" id="P59768"/>
<dbReference type="BioGRID-ORCS" id="54331">
    <property type="hits" value="13 hits in 1153 CRISPR screens"/>
</dbReference>
<dbReference type="CD-CODE" id="FB4E32DD">
    <property type="entry name" value="Presynaptic clusters and postsynaptic densities"/>
</dbReference>
<dbReference type="ChiTaRS" id="GNG2">
    <property type="organism name" value="human"/>
</dbReference>
<dbReference type="EvolutionaryTrace" id="P59768"/>
<dbReference type="GeneWiki" id="GNG2"/>
<dbReference type="GenomeRNAi" id="54331"/>
<dbReference type="Pharos" id="P59768">
    <property type="development level" value="Tbio"/>
</dbReference>
<dbReference type="PRO" id="PR:P59768"/>
<dbReference type="Proteomes" id="UP000005640">
    <property type="component" value="Chromosome 14"/>
</dbReference>
<dbReference type="RNAct" id="P59768">
    <property type="molecule type" value="protein"/>
</dbReference>
<dbReference type="Bgee" id="ENSG00000186469">
    <property type="expression patterns" value="Expressed in cortical plate and 175 other cell types or tissues"/>
</dbReference>
<dbReference type="ExpressionAtlas" id="P59768">
    <property type="expression patterns" value="baseline and differential"/>
</dbReference>
<dbReference type="GO" id="GO:0070062">
    <property type="term" value="C:extracellular exosome"/>
    <property type="evidence" value="ECO:0007005"/>
    <property type="project" value="UniProtKB"/>
</dbReference>
<dbReference type="GO" id="GO:0005834">
    <property type="term" value="C:heterotrimeric G-protein complex"/>
    <property type="evidence" value="ECO:0000314"/>
    <property type="project" value="UniProtKB"/>
</dbReference>
<dbReference type="GO" id="GO:0016020">
    <property type="term" value="C:membrane"/>
    <property type="evidence" value="ECO:0000250"/>
    <property type="project" value="BHF-UCL"/>
</dbReference>
<dbReference type="GO" id="GO:0005886">
    <property type="term" value="C:plasma membrane"/>
    <property type="evidence" value="ECO:0000304"/>
    <property type="project" value="Reactome"/>
</dbReference>
<dbReference type="GO" id="GO:0045202">
    <property type="term" value="C:synapse"/>
    <property type="evidence" value="ECO:0007669"/>
    <property type="project" value="Ensembl"/>
</dbReference>
<dbReference type="GO" id="GO:0031681">
    <property type="term" value="F:G-protein beta-subunit binding"/>
    <property type="evidence" value="ECO:0000353"/>
    <property type="project" value="UniProtKB"/>
</dbReference>
<dbReference type="GO" id="GO:0007191">
    <property type="term" value="P:adenylate cyclase-activating dopamine receptor signaling pathway"/>
    <property type="evidence" value="ECO:0000250"/>
    <property type="project" value="BHF-UCL"/>
</dbReference>
<dbReference type="GO" id="GO:0071870">
    <property type="term" value="P:cellular response to catecholamine stimulus"/>
    <property type="evidence" value="ECO:0000250"/>
    <property type="project" value="BHF-UCL"/>
</dbReference>
<dbReference type="GO" id="GO:0071380">
    <property type="term" value="P:cellular response to prostaglandin E stimulus"/>
    <property type="evidence" value="ECO:0000250"/>
    <property type="project" value="BHF-UCL"/>
</dbReference>
<dbReference type="GO" id="GO:0048144">
    <property type="term" value="P:fibroblast proliferation"/>
    <property type="evidence" value="ECO:0007669"/>
    <property type="project" value="Ensembl"/>
</dbReference>
<dbReference type="GO" id="GO:0007186">
    <property type="term" value="P:G protein-coupled receptor signaling pathway"/>
    <property type="evidence" value="ECO:0000318"/>
    <property type="project" value="GO_Central"/>
</dbReference>
<dbReference type="CDD" id="cd00068">
    <property type="entry name" value="GGL"/>
    <property type="match status" value="1"/>
</dbReference>
<dbReference type="FunFam" id="4.10.260.10:FF:000001">
    <property type="entry name" value="Guanine nucleotide-binding protein subunit gamma"/>
    <property type="match status" value="1"/>
</dbReference>
<dbReference type="Gene3D" id="4.10.260.10">
    <property type="entry name" value="Transducin (heterotrimeric G protein), gamma chain"/>
    <property type="match status" value="1"/>
</dbReference>
<dbReference type="InterPro" id="IPR015898">
    <property type="entry name" value="G-protein_gamma-like_dom"/>
</dbReference>
<dbReference type="InterPro" id="IPR036284">
    <property type="entry name" value="GGL_sf"/>
</dbReference>
<dbReference type="InterPro" id="IPR001770">
    <property type="entry name" value="Gprotein-gamma"/>
</dbReference>
<dbReference type="PANTHER" id="PTHR13809">
    <property type="entry name" value="GUANINE NUCLEOTIDE-BINDING PROTEIN GAMMA SUBUNIT"/>
    <property type="match status" value="1"/>
</dbReference>
<dbReference type="Pfam" id="PF00631">
    <property type="entry name" value="G-gamma"/>
    <property type="match status" value="1"/>
</dbReference>
<dbReference type="PRINTS" id="PR00321">
    <property type="entry name" value="GPROTEING"/>
</dbReference>
<dbReference type="SMART" id="SM01224">
    <property type="entry name" value="G_gamma"/>
    <property type="match status" value="1"/>
</dbReference>
<dbReference type="SMART" id="SM00224">
    <property type="entry name" value="GGL"/>
    <property type="match status" value="1"/>
</dbReference>
<dbReference type="SUPFAM" id="SSF48670">
    <property type="entry name" value="Transducin (heterotrimeric G protein), gamma chain"/>
    <property type="match status" value="1"/>
</dbReference>
<dbReference type="PROSITE" id="PS50058">
    <property type="entry name" value="G_PROTEIN_GAMMA"/>
    <property type="match status" value="1"/>
</dbReference>
<protein>
    <recommendedName>
        <fullName>Guanine nucleotide-binding protein G(I)/G(S)/G(O) subunit gamma-2</fullName>
    </recommendedName>
    <alternativeName>
        <fullName>G gamma-I</fullName>
    </alternativeName>
</protein>
<feature type="initiator methionine" description="Removed" evidence="77 78">
    <location>
        <position position="1"/>
    </location>
</feature>
<feature type="chain" id="PRO_0000012611" description="Guanine nucleotide-binding protein G(I)/G(S)/G(O) subunit gamma-2" evidence="1">
    <location>
        <begin position="2"/>
        <end position="68"/>
    </location>
</feature>
<feature type="propeptide" id="PRO_0000012612" description="Removed in mature form" evidence="1">
    <location>
        <begin position="69"/>
        <end position="71"/>
    </location>
</feature>
<feature type="modified residue" description="N-acetylalanine" evidence="77 78">
    <location>
        <position position="2"/>
    </location>
</feature>
<feature type="modified residue" description="Cysteine methyl ester" evidence="1">
    <location>
        <position position="68"/>
    </location>
</feature>
<feature type="lipid moiety-binding region" description="S-geranylgeranyl cysteine" evidence="1">
    <location>
        <position position="68"/>
    </location>
</feature>
<feature type="helix" evidence="82">
    <location>
        <begin position="9"/>
        <end position="23"/>
    </location>
</feature>
<feature type="turn" evidence="81">
    <location>
        <begin position="24"/>
        <end position="26"/>
    </location>
</feature>
<feature type="helix" evidence="82">
    <location>
        <begin position="30"/>
        <end position="44"/>
    </location>
</feature>
<feature type="helix" evidence="82">
    <location>
        <begin position="45"/>
        <end position="47"/>
    </location>
</feature>
<feature type="turn" evidence="82">
    <location>
        <begin position="49"/>
        <end position="51"/>
    </location>
</feature>
<feature type="turn" evidence="82">
    <location>
        <begin position="56"/>
        <end position="58"/>
    </location>
</feature>
<feature type="helix" evidence="80">
    <location>
        <begin position="60"/>
        <end position="62"/>
    </location>
</feature>
<feature type="turn" evidence="79">
    <location>
        <begin position="63"/>
        <end position="66"/>
    </location>
</feature>
<comment type="function">
    <text evidence="5 6 7 8 9 10 11 12 13 14 15 16 17 18">Guanine nucleotide-binding proteins (G proteins) are involved as a modulator or transducer in various transmembrane signaling systems (PubMed:29925951, PubMed:33762731, PubMed:34239069, PubMed:35610220, PubMed:35714614, PubMed:35835867, PubMed:36087581, PubMed:36989299, PubMed:37327704, PubMed:37935376, PubMed:37935377, PubMed:37963465, PubMed:38168118, PubMed:38552625). The beta and gamma chains are required for the GTPase activity, for replacement of GDP by GTP, and for G protein-effector interaction (PubMed:29925951, PubMed:33762731, PubMed:34239069, PubMed:35610220, PubMed:35714614, PubMed:35835867, PubMed:36087581, PubMed:36989299, PubMed:37327704, PubMed:37935376, PubMed:37935377, PubMed:37963465, PubMed:38168118, PubMed:38552625).</text>
</comment>
<comment type="subunit">
    <text evidence="1 3 4 5 6 7 8 9 10 11 12 13 14 15 16 17 18 19 20">G proteins are composed of 3 units, alpha, beta and gamma (PubMed:19713215, PubMed:28219978, PubMed:29925951, PubMed:33762731, PubMed:34239069, PubMed:35610220, PubMed:35714614, PubMed:35835867, PubMed:36087581, PubMed:36989299, PubMed:37327704, PubMed:37935376, PubMed:37935377, PubMed:37963465, PubMed:38168118, PubMed:38552625). In this context, interacts with GNB2 (PubMed:28219978). The heterodimer formed by GNB1 and GNG2 interacts with ARHGEF5 (PubMed:19713215). The heterodimer formed by GNB1 and GNG2 interacts with GRK2 (By similarity). Forms complexes with TAS2R14 and G-proteins; these complexes play a role in the perception of bitterness (PubMed:38600377, PubMed:38776963). Component of the TAS2R14-GNAI1 complex, consisting of TAS2R14, GNAI1, GNB1 and GNG2 (PubMed:38600377, PubMed:38776963). Component of the TAS2R14-GNAT3 complex, consisting of TAS2R14, GNAT3, GNB1 and GNG2 (PubMed:38600377, PubMed:38776963). Component of the TAS2R14-GNAS2 complex, consisting of TAS2R14, GNAS2, GNB1 and GNG2 (PubMed:38776963).</text>
</comment>
<comment type="interaction">
    <interactant intactId="EBI-602681">
        <id>P59768</id>
    </interactant>
    <interactant intactId="EBI-357130">
        <id>P62873</id>
        <label>GNB1</label>
    </interactant>
    <organismsDiffer>false</organismsDiffer>
    <experiments>10</experiments>
</comment>
<comment type="subcellular location">
    <subcellularLocation>
        <location evidence="21">Cell membrane</location>
        <topology evidence="21">Lipid-anchor</topology>
        <orientation evidence="21">Cytoplasmic side</orientation>
    </subcellularLocation>
</comment>
<comment type="tissue specificity">
    <text evidence="2">Expressed in fetal tissues, including testis, adrenal gland, brain, white blood cells and brain.</text>
</comment>
<comment type="similarity">
    <text evidence="21">Belongs to the G protein gamma family.</text>
</comment>
<keyword id="KW-0002">3D-structure</keyword>
<keyword id="KW-0007">Acetylation</keyword>
<keyword id="KW-1003">Cell membrane</keyword>
<keyword id="KW-0945">Host-virus interaction</keyword>
<keyword id="KW-0449">Lipoprotein</keyword>
<keyword id="KW-0472">Membrane</keyword>
<keyword id="KW-0488">Methylation</keyword>
<keyword id="KW-0636">Prenylation</keyword>
<keyword id="KW-1267">Proteomics identification</keyword>
<keyword id="KW-1185">Reference proteome</keyword>
<keyword id="KW-0807">Transducer</keyword>
<reference key="1">
    <citation type="journal article" date="2000" name="Biochem. Biophys. Res. Commun.">
        <title>Cloning, characterization, and mapping of the gene encoding the human G protein gamma 2 subunit.</title>
        <authorList>
            <person name="Modarressi M.H."/>
            <person name="Taylor K.E."/>
            <person name="Wolfe J."/>
        </authorList>
    </citation>
    <scope>NUCLEOTIDE SEQUENCE [MRNA]</scope>
    <scope>TISSUE SPECIFICITY</scope>
</reference>
<reference key="2">
    <citation type="submission" date="2002-03" db="EMBL/GenBank/DDBJ databases">
        <title>cDNA clones of human proteins involved in signal transduction sequenced by the Guthrie cDNA resource center (www.cdna.org).</title>
        <authorList>
            <person name="Puhl H.L. III"/>
            <person name="Ikeda S.R."/>
            <person name="Aronstam R.S."/>
        </authorList>
    </citation>
    <scope>NUCLEOTIDE SEQUENCE [LARGE SCALE MRNA]</scope>
</reference>
<reference key="3">
    <citation type="journal article" date="2007" name="BMC Genomics">
        <title>The full-ORF clone resource of the German cDNA consortium.</title>
        <authorList>
            <person name="Bechtel S."/>
            <person name="Rosenfelder H."/>
            <person name="Duda A."/>
            <person name="Schmidt C.P."/>
            <person name="Ernst U."/>
            <person name="Wellenreuther R."/>
            <person name="Mehrle A."/>
            <person name="Schuster C."/>
            <person name="Bahr A."/>
            <person name="Bloecker H."/>
            <person name="Heubner D."/>
            <person name="Hoerlein A."/>
            <person name="Michel G."/>
            <person name="Wedler H."/>
            <person name="Koehrer K."/>
            <person name="Ottenwaelder B."/>
            <person name="Poustka A."/>
            <person name="Wiemann S."/>
            <person name="Schupp I."/>
        </authorList>
    </citation>
    <scope>NUCLEOTIDE SEQUENCE [LARGE SCALE MRNA]</scope>
    <source>
        <tissue>Lymph node</tissue>
    </source>
</reference>
<reference key="4">
    <citation type="submission" date="2005-09" db="EMBL/GenBank/DDBJ databases">
        <authorList>
            <person name="Mural R.J."/>
            <person name="Istrail S."/>
            <person name="Sutton G.G."/>
            <person name="Florea L."/>
            <person name="Halpern A.L."/>
            <person name="Mobarry C.M."/>
            <person name="Lippert R."/>
            <person name="Walenz B."/>
            <person name="Shatkay H."/>
            <person name="Dew I."/>
            <person name="Miller J.R."/>
            <person name="Flanigan M.J."/>
            <person name="Edwards N.J."/>
            <person name="Bolanos R."/>
            <person name="Fasulo D."/>
            <person name="Halldorsson B.V."/>
            <person name="Hannenhalli S."/>
            <person name="Turner R."/>
            <person name="Yooseph S."/>
            <person name="Lu F."/>
            <person name="Nusskern D.R."/>
            <person name="Shue B.C."/>
            <person name="Zheng X.H."/>
            <person name="Zhong F."/>
            <person name="Delcher A.L."/>
            <person name="Huson D.H."/>
            <person name="Kravitz S.A."/>
            <person name="Mouchard L."/>
            <person name="Reinert K."/>
            <person name="Remington K.A."/>
            <person name="Clark A.G."/>
            <person name="Waterman M.S."/>
            <person name="Eichler E.E."/>
            <person name="Adams M.D."/>
            <person name="Hunkapiller M.W."/>
            <person name="Myers E.W."/>
            <person name="Venter J.C."/>
        </authorList>
    </citation>
    <scope>NUCLEOTIDE SEQUENCE [LARGE SCALE GENOMIC DNA]</scope>
</reference>
<reference key="5">
    <citation type="journal article" date="2004" name="Genome Res.">
        <title>The status, quality, and expansion of the NIH full-length cDNA project: the Mammalian Gene Collection (MGC).</title>
        <authorList>
            <consortium name="The MGC Project Team"/>
        </authorList>
    </citation>
    <scope>NUCLEOTIDE SEQUENCE [LARGE SCALE MRNA]</scope>
    <source>
        <tissue>Brain</tissue>
        <tissue>Skin</tissue>
    </source>
</reference>
<reference key="6">
    <citation type="journal article" date="2009" name="Anal. Chem.">
        <title>Lys-N and trypsin cover complementary parts of the phosphoproteome in a refined SCX-based approach.</title>
        <authorList>
            <person name="Gauci S."/>
            <person name="Helbig A.O."/>
            <person name="Slijper M."/>
            <person name="Krijgsveld J."/>
            <person name="Heck A.J."/>
            <person name="Mohammed S."/>
        </authorList>
    </citation>
    <scope>ACETYLATION [LARGE SCALE ANALYSIS] AT ALA-2</scope>
    <scope>CLEAVAGE OF INITIATOR METHIONINE [LARGE SCALE ANALYSIS]</scope>
    <scope>IDENTIFICATION BY MASS SPECTROMETRY [LARGE SCALE ANALYSIS]</scope>
</reference>
<reference key="7">
    <citation type="journal article" date="2009" name="J. Biol. Chem.">
        <title>Regulation of immature dendritic cell migration by RhoA guanine nucleotide exchange factor Arhgef5.</title>
        <authorList>
            <person name="Wang Z."/>
            <person name="Kumamoto Y."/>
            <person name="Wang P."/>
            <person name="Gan X."/>
            <person name="Lehmann D."/>
            <person name="Smrcka A.V."/>
            <person name="Cohn L."/>
            <person name="Iwasaki A."/>
            <person name="Li L."/>
            <person name="Wu D."/>
        </authorList>
    </citation>
    <scope>INTERACTION WITH ARHGEF5</scope>
</reference>
<reference key="8">
    <citation type="journal article" date="2012" name="Proc. Natl. Acad. Sci. U.S.A.">
        <title>N-terminal acetylome analyses and functional insights of the N-terminal acetyltransferase NatB.</title>
        <authorList>
            <person name="Van Damme P."/>
            <person name="Lasa M."/>
            <person name="Polevoda B."/>
            <person name="Gazquez C."/>
            <person name="Elosegui-Artola A."/>
            <person name="Kim D.S."/>
            <person name="De Juan-Pardo E."/>
            <person name="Demeyer K."/>
            <person name="Hole K."/>
            <person name="Larrea E."/>
            <person name="Timmerman E."/>
            <person name="Prieto J."/>
            <person name="Arnesen T."/>
            <person name="Sherman F."/>
            <person name="Gevaert K."/>
            <person name="Aldabe R."/>
        </authorList>
    </citation>
    <scope>ACETYLATION [LARGE SCALE ANALYSIS] AT ALA-2</scope>
    <scope>CLEAVAGE OF INITIATOR METHIONINE [LARGE SCALE ANALYSIS]</scope>
    <scope>IDENTIFICATION BY MASS SPECTROMETRY [LARGE SCALE ANALYSIS]</scope>
</reference>
<reference key="9">
    <citation type="journal article" date="2017" name="Circ. Res.">
        <title>A Mutation in the G-Protein Gene GNB2 Causes Familial Sinus Node and Atrioventricular Conduction Dysfunction.</title>
        <authorList>
            <person name="Stallmeyer B."/>
            <person name="Kuss J."/>
            <person name="Kotthoff S."/>
            <person name="Zumhagen S."/>
            <person name="Vowinkel K."/>
            <person name="Rinne S."/>
            <person name="Matschke L.A."/>
            <person name="Friedrich C."/>
            <person name="Schulze-Bahr E."/>
            <person name="Rust S."/>
            <person name="Seebohm G."/>
            <person name="Decher N."/>
            <person name="Schulze-Bahr E."/>
        </authorList>
    </citation>
    <scope>INTERACTION WITH GNB2</scope>
</reference>
<reference key="10">
    <citation type="journal article" date="2008" name="Structure">
        <title>Structure of the parathyroid hormone receptor C terminus bound to the G-protein dimer Gbeta1gamma2.</title>
        <authorList>
            <person name="Johnston C.A."/>
            <person name="Kimple A.J."/>
            <person name="Giguere P.M."/>
            <person name="Siderovski D.P."/>
        </authorList>
    </citation>
    <scope>X-RAY CRYSTALLOGRAPHY (3.0 ANGSTROMS) IN COMPLEX WITH GNB1</scope>
    <scope>RETRACTED PAPER</scope>
</reference>
<reference key="11">
    <citation type="journal article" date="2011" name="Structure">
        <authorList>
            <person name="Johnston C.A."/>
            <person name="Kimple A.J."/>
            <person name="Giguere P.M."/>
            <person name="Siderovski D.P."/>
        </authorList>
    </citation>
    <scope>ERRATUM OF PUBMED:18611381</scope>
    <scope>RETRACTION NOTICE OF PUBMED:18611381</scope>
</reference>
<reference evidence="23" key="12">
    <citation type="journal article" date="2018" name="Nature">
        <title>Cryo-EM structure of the serotonin 5-HT1B receptor coupled to heterotrimeric Go.</title>
        <authorList>
            <person name="Garcia-Nafria J."/>
            <person name="Nehme R."/>
            <person name="Edwards P.C."/>
            <person name="Tate C.G."/>
        </authorList>
    </citation>
    <scope>STRUCTURE BY ELECTRON MICROSCOPY (3.78 ANGSTROMS) IN COMPLEX WITH HTR1B; GNAO1 AND GNB1</scope>
    <scope>FUNCTION</scope>
</reference>
<reference evidence="32" key="13">
    <citation type="journal article" date="2021" name="Cell Res.">
        <title>Structural basis for recognition of anti-migraine drug lasmiditan by the serotonin receptor 5-HT1F-G protein complex.</title>
        <authorList>
            <person name="Huang S."/>
            <person name="Xu P."/>
            <person name="Tan Y."/>
            <person name="You C."/>
            <person name="Zhang Y."/>
            <person name="Jiang Y."/>
            <person name="Xu H.E."/>
        </authorList>
    </citation>
    <scope>STRUCTURE BY ELECTRON MICROSCOPY (3.4 ANGSTROMS) IN COMPLEX WITH HTR1F; GNAI1 AND GNB1</scope>
    <scope>FUNCTION</scope>
</reference>
<reference evidence="25 26 27 28 29" key="14">
    <citation type="journal article" date="2021" name="Nature">
        <title>Structural insights into the lipid and ligand regulation of serotonin receptors.</title>
        <authorList>
            <person name="Xu P."/>
            <person name="Huang S."/>
            <person name="Zhang H."/>
            <person name="Mao C."/>
            <person name="Zhou X.E."/>
            <person name="Cheng X."/>
            <person name="Simon I.A."/>
            <person name="Shen D.D."/>
            <person name="Yen H.Y."/>
            <person name="Robinson C.V."/>
            <person name="Harpsoee K."/>
            <person name="Svensson B."/>
            <person name="Guo J."/>
            <person name="Jiang H."/>
            <person name="Gloriam D.E."/>
            <person name="Melcher K."/>
            <person name="Jiang Y."/>
            <person name="Zhang Y."/>
            <person name="Xu H.E."/>
        </authorList>
    </citation>
    <scope>STRUCTURE BY ELECTRON MICROSCOPY (3.0 ANGSTROMS) IN COMPLEX WITH GNB1; GNAI1; HTR1A; HTR1D AND HTR1E</scope>
    <scope>FUNCTION</scope>
</reference>
<reference evidence="24" key="15">
    <citation type="journal article" date="2021" name="Nat. Commun.">
        <title>Cryo-EM structure of the human histamine H1 receptor/Gq complex.</title>
        <authorList>
            <person name="Xia R."/>
            <person name="Wang N."/>
            <person name="Xu Z."/>
            <person name="Lu Y."/>
            <person name="Song J."/>
            <person name="Zhang A."/>
            <person name="Guo C."/>
            <person name="He Y."/>
        </authorList>
    </citation>
    <scope>STRUCTURE BY ELECTRON MICROSCOPY (3.30 ANGSTROMS) OF 5-62 IN COMPLEX WITH HRH1 AND GNB1</scope>
</reference>
<reference evidence="47" key="16">
    <citation type="journal article" date="2022" name="Cell Discov.">
        <title>Structural insights into the ligand binding and Gi coupling of serotonin receptor 5-HT5A.</title>
        <authorList>
            <person name="Tan Y."/>
            <person name="Xu P."/>
            <person name="Huang S."/>
            <person name="Yang G."/>
            <person name="Zhou F."/>
            <person name="He X."/>
            <person name="Ma H."/>
            <person name="Xu H.E."/>
            <person name="Jiang Y."/>
        </authorList>
    </citation>
    <scope>STRUCTURE BY ELECTRON MICROSCOPY (3.1 ANGSTROMS) IN COMPLEX WITH HTR5A; GNAI1 AND GNB1</scope>
    <scope>FUNCTION</scope>
</reference>
<reference evidence="50 51" key="17">
    <citation type="journal article" date="2022" name="Mol. Cell">
        <title>GPCRs steer Gi and Gs selectivity via TM5-TM6 switches as revealed by structures of serotonin receptors.</title>
        <authorList>
            <person name="Huang S."/>
            <person name="Xu P."/>
            <person name="Shen D.D."/>
            <person name="Simon I.A."/>
            <person name="Mao C."/>
            <person name="Tan Y."/>
            <person name="Zhang H."/>
            <person name="Harpsoee K."/>
            <person name="Li H."/>
            <person name="Zhang Y."/>
            <person name="You C."/>
            <person name="Yu X."/>
            <person name="Jiang Y."/>
            <person name="Zhang Y."/>
            <person name="Gloriam D.E."/>
            <person name="Xu H.E."/>
        </authorList>
    </citation>
    <scope>STRUCTURE BY ELECTRON MICROSCOPY (3.1 ANGSTROMS) IN COMPLEX WITH HTR4; HTR6; HTR7; GNB1 AND GNAS2</scope>
    <scope>FUNCTION</scope>
</reference>
<reference evidence="36 37" key="18">
    <citation type="journal article" date="2022" name="Nature">
        <title>The tethered peptide activation mechanism of adhesion GPCRs.</title>
        <authorList>
            <person name="Barros-Alvarez X."/>
            <person name="Nwokonko R.M."/>
            <person name="Vizurraga A."/>
            <person name="Matzov D."/>
            <person name="He F."/>
            <person name="Papasergi-Scott M.M."/>
            <person name="Robertson M.J."/>
            <person name="Panova O."/>
            <person name="Yardeni E.H."/>
            <person name="Seven A.B."/>
            <person name="Kwarcinski F.E."/>
            <person name="Su H."/>
            <person name="Peroto M.C."/>
            <person name="Meyerowitz J.G."/>
            <person name="Shalev-Benami M."/>
            <person name="Tall G.G."/>
            <person name="Skiniotis G."/>
        </authorList>
    </citation>
    <scope>STRUCTURE BY ELECTRON MICROSCOPY (2.70 ANGSTROMS) IN COMPLEX WITH ADGRG1; ADGRL3; GNB1 AND GNA13</scope>
</reference>
<reference evidence="44 45" key="19">
    <citation type="journal article" date="2022" name="Nature">
        <title>Tethered peptide activation mechanism of the adhesion GPCRs ADGRG2 and ADGRG4.</title>
        <authorList>
            <person name="Xiao P."/>
            <person name="Guo S."/>
            <person name="Wen X."/>
            <person name="He Q.T."/>
            <person name="Lin H."/>
            <person name="Huang S.M."/>
            <person name="Gou L."/>
            <person name="Zhang C."/>
            <person name="Yang Z."/>
            <person name="Zhong Y.N."/>
            <person name="Yang C.C."/>
            <person name="Li Y."/>
            <person name="Gong Z."/>
            <person name="Tao X.N."/>
            <person name="Yang Z.S."/>
            <person name="Lu Y."/>
            <person name="Li S.L."/>
            <person name="He J.Y."/>
            <person name="Wang C."/>
            <person name="Zhang L."/>
            <person name="Kong L."/>
            <person name="Sun J.P."/>
            <person name="Yu X."/>
        </authorList>
    </citation>
    <scope>STRUCTURE BY ELECTRON MICROSCOPY (2.90 ANGSTROMS) OF 597-1009 IN COMPLEX WITH ADGRG2; GNB1 AND GNAS</scope>
</reference>
<reference evidence="31" key="20">
    <citation type="journal article" date="2022" name="Nature">
        <title>Structural basis for the tethered peptide activation of adhesion GPCRs.</title>
        <authorList>
            <person name="Ping Y.Q."/>
            <person name="Xiao P."/>
            <person name="Yang F."/>
            <person name="Zhao R.J."/>
            <person name="Guo S.C."/>
            <person name="Yan X."/>
            <person name="Wu X."/>
            <person name="Zhang C."/>
            <person name="Lu Y."/>
            <person name="Zhao F."/>
            <person name="Zhou F."/>
            <person name="Xi Y.T."/>
            <person name="Yin W."/>
            <person name="Liu F.Z."/>
            <person name="He D.F."/>
            <person name="Zhang D.L."/>
            <person name="Zhu Z.L."/>
            <person name="Jiang Y."/>
            <person name="Du L."/>
            <person name="Feng S.Q."/>
            <person name="Schoneberg T."/>
            <person name="Liebscher I."/>
            <person name="Xu H.E."/>
            <person name="Sun J.P."/>
        </authorList>
    </citation>
    <scope>STRUCTURE BY ELECTRON MICROSCOPY (3.00 ANGSTROMS) OF 545-827 IN COMPLEX WITH ADGRD1; GNB1 AND GNAS</scope>
</reference>
<reference evidence="42 43" key="21">
    <citation type="journal article" date="2022" name="Nature">
        <title>Structural basis of tethered agonism of the adhesion GPCRs ADGRD1 and ADGRF1.</title>
        <authorList>
            <person name="Qu X."/>
            <person name="Qiu N."/>
            <person name="Wang M."/>
            <person name="Zhang B."/>
            <person name="Du J."/>
            <person name="Zhong Z."/>
            <person name="Xu W."/>
            <person name="Chu X."/>
            <person name="Ma L."/>
            <person name="Yi C."/>
            <person name="Han S."/>
            <person name="Shui W."/>
            <person name="Zhao Q."/>
            <person name="Wu B."/>
        </authorList>
    </citation>
    <scope>STRUCTURE BY ELECTRON MICROSCOPY (2.80 ANGSTROMS) OF 545-827 IN COMPLEX WITH ADGRF1; ADGRD1; GNB1 AND GNAS</scope>
</reference>
<reference evidence="48 49" key="22">
    <citation type="journal article" date="2022" name="Nat. Chem. Biol.">
        <title>Structures of the ADGRG2-Gs complex in apo and ligand-bound forms.</title>
        <authorList>
            <person name="Lin H."/>
            <person name="Xiao P."/>
            <person name="Bu R.Q."/>
            <person name="Guo S."/>
            <person name="Yang Z."/>
            <person name="Yuan D."/>
            <person name="Zhu Z.L."/>
            <person name="Zhang C.X."/>
            <person name="He Q.T."/>
            <person name="Zhang C."/>
            <person name="Ping Y.Q."/>
            <person name="Zhao R.J."/>
            <person name="Ma C.S."/>
            <person name="Liu C.H."/>
            <person name="Zhang X.N."/>
            <person name="Jiang D."/>
            <person name="Huang S."/>
            <person name="Xi Y.T."/>
            <person name="Zhang D.L."/>
            <person name="Xue C.Y."/>
            <person name="Yang B.S."/>
            <person name="Li J.Y."/>
            <person name="Lin H.C."/>
            <person name="Zeng X.H."/>
            <person name="Zhao H."/>
            <person name="Xu W.M."/>
            <person name="Yi F."/>
            <person name="Liu Z."/>
            <person name="Sun J.P."/>
            <person name="Yu X."/>
        </authorList>
    </citation>
    <scope>STRUCTURE BY ELECTRON MICROSCOPY (2.40 ANGSTROMS) OF 614-891 IN COMPLEX WITH ADGRG2; GNB1 AND GNAS</scope>
</reference>
<reference evidence="33" key="23">
    <citation type="journal article" date="2022" name="Nature">
        <title>Bespoke library docking for 5-HT2A receptor agonists with antidepressant activity.</title>
        <authorList>
            <person name="Kaplan A.L."/>
            <person name="Confair D.N."/>
            <person name="Kim K."/>
            <person name="Barros-Alvarez X."/>
            <person name="Rodriguiz R.M."/>
            <person name="Yang Y."/>
            <person name="Kweon O.S."/>
            <person name="Che T."/>
            <person name="McCorvy J.D."/>
            <person name="Kamber D.N."/>
            <person name="Phelan J.P."/>
            <person name="Martins L.C."/>
            <person name="Pogorelov V.M."/>
            <person name="DiBerto J.F."/>
            <person name="Slocum S.T."/>
            <person name="Huang X.P."/>
            <person name="Kumar J.M."/>
            <person name="Robertson M.J."/>
            <person name="Panova O."/>
            <person name="Seven A.B."/>
            <person name="Wetsel A.Q."/>
            <person name="Wetsel W.C."/>
            <person name="Irwin J.J."/>
            <person name="Skiniotis G."/>
            <person name="Shoichet B.K."/>
            <person name="Roth B.L."/>
            <person name="Ellman J.A."/>
        </authorList>
    </citation>
    <scope>STRUCTURE BY ELECTRON MICROSCOPY (3.45 ANGSTROMS) IN COMPLEX WITH HTR2A; GNAI2/GNAS CHIMERA; GNB1; STABILIZING ANTIBODY AND SYNTHETIC HTR2A TETRAHYDROPYRIDINE AGONIST</scope>
</reference>
<reference evidence="30 46" key="24">
    <citation type="journal article" date="2022" name="Nat. Commun.">
        <title>Activation and allosteric regulation of the orphan GPR88-Gi1 signaling complex.</title>
        <authorList>
            <person name="Chen G."/>
            <person name="Xu J."/>
            <person name="Inoue A."/>
            <person name="Schmidt M.F."/>
            <person name="Bai C."/>
            <person name="Lu Q."/>
            <person name="Gmeiner P."/>
            <person name="Liu Z."/>
            <person name="Du Y."/>
        </authorList>
    </citation>
    <scope>STRUCTURE BY ELECTRON MICROSCOPY (2.40 ANGSTROMS) IN COMPLEX WITH GPR88; GNAI1; GNB1; GI-STABILIZING ANTIBODY SCFV16 AND SYNTHETIC AGONIST 2-PCCA</scope>
</reference>
<reference evidence="39 40 41" key="25">
    <citation type="journal article" date="2022" name="Nat. Struct. Mol. Biol.">
        <title>Inactive and active state structures template selective tools for the human 5-HT5A receptor.</title>
        <authorList>
            <person name="Zhang S."/>
            <person name="Chen H."/>
            <person name="Zhang C."/>
            <person name="Yang Y."/>
            <person name="Popov P."/>
            <person name="Liu J."/>
            <person name="Krumm B.E."/>
            <person name="Cao C."/>
            <person name="Kim K."/>
            <person name="Xiong Y."/>
            <person name="Katritch V."/>
            <person name="Shoichet B.K."/>
            <person name="Jin J."/>
            <person name="Fay J.F."/>
            <person name="Roth B.L."/>
        </authorList>
    </citation>
    <scope>STRUCTURE BY ELECTRON MICROSCOPY (2.73 ANGSTROMS) IN COMPLEX WITH HTR5A AND GNB1</scope>
    <scope>FUNCTION</scope>
</reference>
<reference evidence="38" key="26">
    <citation type="journal article" date="2022" name="Neuron">
        <title>Signaling snapshots of a serotonin receptor activated by the prototypical psychedelic LSD.</title>
        <authorList>
            <person name="Cao C."/>
            <person name="Barros-Alvarez X."/>
            <person name="Zhang S."/>
            <person name="Kim K."/>
            <person name="Daemgen M.A."/>
            <person name="Panova O."/>
            <person name="Suomivuori C.M."/>
            <person name="Fay J.F."/>
            <person name="Zhong X."/>
            <person name="Krumm B.E."/>
            <person name="Gumpper R.H."/>
            <person name="Seven A.B."/>
            <person name="Robertson M.J."/>
            <person name="Krogan N.J."/>
            <person name="Huettenhain R."/>
            <person name="Nichols D.E."/>
            <person name="Dror R.O."/>
            <person name="Skiniotis G."/>
            <person name="Roth B.L."/>
        </authorList>
    </citation>
    <scope>STRUCTURE BY ELECTRON MICROSCOPY (2.7 ANGSTROMS) IN COMPLEX WITH GNB1 AND HTR2B</scope>
    <scope>FUNCTION</scope>
</reference>
<reference evidence="34 35" key="27">
    <citation type="journal article" date="2022" name="Sci. Adv.">
        <title>Atypical structural snapshots of human cytomegalovirus GPCR interactions with host G proteins.</title>
        <authorList>
            <person name="Tsutsumi N."/>
            <person name="Maeda S."/>
            <person name="Qu Q."/>
            <person name="Voegele M."/>
            <person name="Jude K.M."/>
            <person name="Suomivuori C.M."/>
            <person name="Panova O."/>
            <person name="Waghray D."/>
            <person name="Kato H.E."/>
            <person name="Velasco A."/>
            <person name="Dror R.O."/>
            <person name="Skiniotis G."/>
            <person name="Kobilka B.K."/>
            <person name="Garcia K.C."/>
        </authorList>
    </citation>
    <scope>STRUCTURE BY ELECTRON MICROSCOPY (3.10 ANGSTROMS) OF 2-68 IN COMPLEX WITH HOST GNAI1; GNB1 AND HHV-5 US27</scope>
    <scope>STRUCTURE BY ELECTRON MICROSCOPY (3.50 ANGSTROMS) OF 2-68 IN COMPLEX WITH GNB1; GNA11; CX3CL1 AND HHV-5 US28</scope>
</reference>
<reference evidence="58" key="28">
    <citation type="journal article" date="2023" name="Biochem. Biophys. Res. Commun.">
        <title>Structural insight into the selective agonist ST1936 binding of serotonin receptor 5-HT6.</title>
        <authorList>
            <person name="Pei Y."/>
            <person name="Wen X."/>
            <person name="Guo S.C."/>
            <person name="Yang Z.S."/>
            <person name="Zhang R."/>
            <person name="Xiao P."/>
            <person name="Sun J.P."/>
        </authorList>
    </citation>
    <scope>X-RAY CRYSTALLOGRAPHY (3.09 ANGSTROMS) IN COMPLEX WITH HTR6; GNB1 AND GNAS2</scope>
    <scope>FUNCTION</scope>
</reference>
<reference evidence="67 68" key="29">
    <citation type="journal article" date="2023" name="Cell">
        <title>Structural and signaling mechanisms of TAAR1 enabled preferential agonist design.</title>
        <authorList>
            <person name="Shang P."/>
            <person name="Rong N."/>
            <person name="Jiang J.J."/>
            <person name="Cheng J."/>
            <person name="Zhang M.H."/>
            <person name="Kang D."/>
            <person name="Qi L."/>
            <person name="Guo L."/>
            <person name="Yang G.M."/>
            <person name="Liu Q."/>
            <person name="Zhou Z."/>
            <person name="Li X.B."/>
            <person name="Zhu K.K."/>
            <person name="Meng Q.B."/>
            <person name="Han X."/>
            <person name="Yan W."/>
            <person name="Kong Y."/>
            <person name="Yang L."/>
            <person name="Wang X."/>
            <person name="Lei D."/>
            <person name="Feng X."/>
            <person name="Liu X."/>
            <person name="Yu X."/>
            <person name="Wang Y."/>
            <person name="Li Q."/>
            <person name="Shao Z.H."/>
            <person name="Yang F."/>
            <person name="Sun J.P."/>
        </authorList>
    </citation>
    <scope>STRUCTURE BY ELECTRON MICROSCOPY (2.9 ANGSTROMS) IN COMPLEX WITH GNAI1; TAAR1 AND GNB1</scope>
    <scope>FUNCTION</scope>
</reference>
<reference evidence="63 64 65 66" key="30">
    <citation type="journal article" date="2023" name="Nature">
        <title>Recognition of methamphetamine and other amines by trace amine receptor TAAR1.</title>
        <authorList>
            <person name="Liu H."/>
            <person name="Zheng Y."/>
            <person name="Wang Y."/>
            <person name="Wang Y."/>
            <person name="He X."/>
            <person name="Xu P."/>
            <person name="Huang S."/>
            <person name="Yuan Q."/>
            <person name="Zhang X."/>
            <person name="Wang L."/>
            <person name="Jiang K."/>
            <person name="Chen H."/>
            <person name="Li Z."/>
            <person name="Liu W."/>
            <person name="Wang S."/>
            <person name="Xu H.E."/>
            <person name="Xu F."/>
        </authorList>
    </citation>
    <scope>STRUCTURE BY ELECTRON MICROSCOPY (2.6 ANGSTROMS) IN COMPLEX WITH TAAR1; HTR1A; GNAI1 AND GNB1</scope>
    <scope>FUNCTION</scope>
</reference>
<reference evidence="22 53 54 55 56 57" key="31">
    <citation type="journal article" date="2023" name="Nature">
        <title>Ligand recognition and G-protein coupling of trace amine receptor TAAR1.</title>
        <authorList>
            <person name="Xu Z."/>
            <person name="Guo L."/>
            <person name="Yu J."/>
            <person name="Shen S."/>
            <person name="Wu C."/>
            <person name="Zhang W."/>
            <person name="Zhao C."/>
            <person name="Deng Y."/>
            <person name="Tian X."/>
            <person name="Feng Y."/>
            <person name="Hou H."/>
            <person name="Su L."/>
            <person name="Wang H."/>
            <person name="Guo S."/>
            <person name="Wang H."/>
            <person name="Wang K."/>
            <person name="Chen P."/>
            <person name="Zhao J."/>
            <person name="Zhang X."/>
            <person name="Yong X."/>
            <person name="Cheng L."/>
            <person name="Liu L."/>
            <person name="Yang S."/>
            <person name="Yang F."/>
            <person name="Wang X."/>
            <person name="Yu X."/>
            <person name="Xu Y."/>
            <person name="Sun J.P."/>
            <person name="Yan W."/>
            <person name="Shao Z."/>
        </authorList>
    </citation>
    <scope>STRUCTURE BY ELECTRON MICROSCOPY (2.84 ANGSTROMS) IN COMPLEX WITH TAAR1; HTR1A; GNAI1 AND GNB1</scope>
    <scope>FUNCTION</scope>
</reference>
<reference evidence="52" key="32">
    <citation type="journal article" date="2023" name="Proc. Natl. Acad. Sci. U.S.A.">
        <title>Structural insights into constitutive activity of 5-HT6 receptor.</title>
        <authorList>
            <person name="He L."/>
            <person name="Zhao Q."/>
            <person name="Qi J."/>
            <person name="Wang Y."/>
            <person name="Han W."/>
            <person name="Chen Z."/>
            <person name="Cong Y."/>
            <person name="Wang S."/>
        </authorList>
    </citation>
    <scope>STRUCTURE BY ELECTRON MICROSCOPY (3.3 ANGSTROMS) IN COMPLEX WITH HTR6 AND GNB1</scope>
    <scope>FUNCTION</scope>
</reference>
<reference evidence="59" key="33">
    <citation type="journal article" date="2024" name="Cell">
        <title>Flexible scaffold-based cheminformatics approach for polypharmacological drug design.</title>
        <authorList>
            <person name="Chen Z."/>
            <person name="Yu J."/>
            <person name="Wang H."/>
            <person name="Xu P."/>
            <person name="Fan L."/>
            <person name="Sun F."/>
            <person name="Huang S."/>
            <person name="Zhang P."/>
            <person name="Huang H."/>
            <person name="Gu S."/>
            <person name="Zhang B."/>
            <person name="Zhou Y."/>
            <person name="Wan X."/>
            <person name="Pei G."/>
            <person name="Xu H.E."/>
            <person name="Cheng J."/>
            <person name="Wang S."/>
        </authorList>
    </citation>
    <scope>STRUCTURE BY ELECTRON MICROSCOPY (3.0 ANGSTROMS) IN COMPLEX WITH HTR1A; GNB1 AND GNAI1</scope>
    <scope>FUNCTION</scope>
</reference>
<reference evidence="60" key="34">
    <citation type="journal article" date="2024" name="Nat. Commun.">
        <title>Molecular basis of human trace amine-associated receptor 1 activation.</title>
        <authorList>
            <person name="Zilberg G."/>
            <person name="Parpounas A.K."/>
            <person name="Warren A.L."/>
            <person name="Yang S."/>
            <person name="Wacker D."/>
        </authorList>
    </citation>
    <scope>STRUCTURE BY ELECTRON MICROSCOPY (3.35 ANGSTROMS) IN COMPLEX WITH TAAR1; GNB1 AND GNAS</scope>
    <scope>FUNCTION</scope>
</reference>
<reference evidence="61 62" key="35">
    <citation type="journal article" date="2024" name="Nature">
        <title>Bitter taste receptor activation by cholesterol and an intracellular tastant.</title>
        <authorList>
            <person name="Kim Y."/>
            <person name="Gumpper R.H."/>
            <person name="Liu Y."/>
            <person name="Kocak D.D."/>
            <person name="Xiong Y."/>
            <person name="Cao C."/>
            <person name="Deng Z."/>
            <person name="Krumm B.E."/>
            <person name="Jain M.K."/>
            <person name="Zhang S."/>
            <person name="Jin J."/>
            <person name="Roth B.L."/>
        </authorList>
    </citation>
    <scope>STRUCTURE BY ELECTRON MICROSCOPY (2.68 ANGSTROMS) OF MUTANT SER-68 IN COMPLEXES WITH TAS2R14; G-PROTEINS; CHOLESTEROL AND AGONIST CMPD28.1</scope>
    <scope>SUBUNIT</scope>
</reference>
<reference evidence="69 70 71 72 73 74 75 76" key="36">
    <citation type="journal article" date="2024" name="Nature">
        <title>Bitter taste TAS2R14 activation by intracellular tastants and cholesterol.</title>
        <authorList>
            <person name="Hu X."/>
            <person name="Ao W."/>
            <person name="Gao M."/>
            <person name="Wu L."/>
            <person name="Pei Y."/>
            <person name="Liu S."/>
            <person name="Wu Y."/>
            <person name="Zhao F."/>
            <person name="Sun Q."/>
            <person name="Liu J."/>
            <person name="Jiang L."/>
            <person name="Wang X."/>
            <person name="Li Y."/>
            <person name="Tan Q."/>
            <person name="Cheng J."/>
            <person name="Yang F."/>
            <person name="Yang C."/>
            <person name="Sun J."/>
            <person name="Hua T."/>
            <person name="Liu Z.J."/>
        </authorList>
    </citation>
    <scope>STRUCTURE BY ELECTRON MICROSCOPY (2.77 ANGSTROMS) IN COMPLEXES WITH TAS2R14; G-PROTEINS; ARISTOLOCHIC ACID; FLUFENAMIC ACID AND AGONIST CMPD28.1</scope>
    <scope>SUBUNIT</scope>
</reference>
<name>GBG2_HUMAN</name>